<accession>Q92993</accession>
<accession>B4E3C7</accession>
<accession>C9JL99</accession>
<accession>O95624</accession>
<accession>Q13430</accession>
<accession>Q17RW5</accession>
<accession>Q561W3</accession>
<accession>Q6GSE8</accession>
<accession>Q9BWK7</accession>
<gene>
    <name evidence="75 80" type="primary">KAT5</name>
    <name type="synonym">HTATIP</name>
    <name evidence="69" type="synonym">TIP60</name>
</gene>
<keyword id="KW-0002">3D-structure</keyword>
<keyword id="KW-0007">Acetylation</keyword>
<keyword id="KW-0010">Activator</keyword>
<keyword id="KW-0012">Acyltransferase</keyword>
<keyword id="KW-0025">Alternative splicing</keyword>
<keyword id="KW-0137">Centromere</keyword>
<keyword id="KW-0156">Chromatin regulator</keyword>
<keyword id="KW-0158">Chromosome</keyword>
<keyword id="KW-0963">Cytoplasm</keyword>
<keyword id="KW-0206">Cytoskeleton</keyword>
<keyword id="KW-0903">Direct protein sequencing</keyword>
<keyword id="KW-0225">Disease variant</keyword>
<keyword id="KW-0227">DNA damage</keyword>
<keyword id="KW-0234">DNA repair</keyword>
<keyword id="KW-0341">Growth regulation</keyword>
<keyword id="KW-0945">Host-virus interaction</keyword>
<keyword id="KW-0391">Immunity</keyword>
<keyword id="KW-0399">Innate immunity</keyword>
<keyword id="KW-0991">Intellectual disability</keyword>
<keyword id="KW-1017">Isopeptide bond</keyword>
<keyword id="KW-0995">Kinetochore</keyword>
<keyword id="KW-0479">Metal-binding</keyword>
<keyword id="KW-0539">Nucleus</keyword>
<keyword id="KW-0597">Phosphoprotein</keyword>
<keyword id="KW-1267">Proteomics identification</keyword>
<keyword id="KW-1185">Reference proteome</keyword>
<keyword id="KW-0804">Transcription</keyword>
<keyword id="KW-0805">Transcription regulation</keyword>
<keyword id="KW-0808">Transferase</keyword>
<keyword id="KW-0832">Ubl conjugation</keyword>
<keyword id="KW-0862">Zinc</keyword>
<keyword id="KW-0863">Zinc-finger</keyword>
<organism>
    <name type="scientific">Homo sapiens</name>
    <name type="common">Human</name>
    <dbReference type="NCBI Taxonomy" id="9606"/>
    <lineage>
        <taxon>Eukaryota</taxon>
        <taxon>Metazoa</taxon>
        <taxon>Chordata</taxon>
        <taxon>Craniata</taxon>
        <taxon>Vertebrata</taxon>
        <taxon>Euteleostomi</taxon>
        <taxon>Mammalia</taxon>
        <taxon>Eutheria</taxon>
        <taxon>Euarchontoglires</taxon>
        <taxon>Primates</taxon>
        <taxon>Haplorrhini</taxon>
        <taxon>Catarrhini</taxon>
        <taxon>Hominidae</taxon>
        <taxon>Homo</taxon>
    </lineage>
</organism>
<name>KAT5_HUMAN</name>
<protein>
    <recommendedName>
        <fullName evidence="77">Histone acetyltransferase KAT5</fullName>
        <ecNumber evidence="6 11 43 46 52 58 60">2.3.1.48</ecNumber>
    </recommendedName>
    <alternativeName>
        <fullName evidence="69">60 kDa Tat-interactive protein</fullName>
        <shortName evidence="68 69 70 74">Tip60</shortName>
    </alternativeName>
    <alternativeName>
        <fullName>Histone acetyltransferase HTATIP</fullName>
        <shortName evidence="76">HIV-1 Tat interactive protein</shortName>
    </alternativeName>
    <alternativeName>
        <fullName>Lysine acetyltransferase 5</fullName>
    </alternativeName>
    <alternativeName>
        <fullName evidence="77">Protein 2-hydroxyisobutyryltransferase KAT5</fullName>
        <ecNumber evidence="49">2.3.1.-</ecNumber>
    </alternativeName>
    <alternativeName>
        <fullName evidence="77">Protein acetyltransferase KAT5</fullName>
        <ecNumber evidence="41 44 47 53 54 56 57">2.3.1.-</ecNumber>
    </alternativeName>
    <alternativeName>
        <fullName evidence="77">Protein crotonyltransferase KAT5</fullName>
        <ecNumber evidence="63">2.3.1.-</ecNumber>
    </alternativeName>
    <alternativeName>
        <fullName evidence="77">Protein lactyltransferase KAT5</fullName>
        <ecNumber evidence="65">2.3.1.-</ecNumber>
    </alternativeName>
    <alternativeName>
        <fullName evidence="69">cPLA(2)-interacting protein</fullName>
    </alternativeName>
</protein>
<proteinExistence type="evidence at protein level"/>
<sequence length="513" mass="58582">MAEVGEIIEGCRLPVLRRNQDNEDEWPLAEILSVKDISGRKLFYVHYIDFNKRLDEWVTHERLDLKKIQFPKKEAKTPTKNGLPGSRPGSPEREVPASAQASGKTLPIPVQITLRFNLPKEREAIPGGEPDQPLSSSSCLQPNHRSTKRKVEVVSPATPVPSETAPASVFPQNGAARRAVAAQPGRKRKSNCLGTDEDSQDSSDGIPSAPRMTGSLVSDRSHDDIVTRMKNIECIELGRHRLKPWYFSPYPQELTTLPVLYLCEFCLKYGRSLKCLQRHLTKCDLRHPPGNEIYRKGTISFFEIDGRKNKSYSQNLCLLAKCFLDHKTLYYDTDPFLFYVMTEYDCKGFHIVGYFSKEKESTEDYNVACILTLPPYQRRGYGKLLIEFSYELSKVEGKTGTPEKPLSDLGLLSYRSYWSQTILEILMGLKSESGERPQITINEISEITSIKKEDVISTLQYLNLINYYKGQYILTLSEDIVDGHERAMLKRLLRIDSKCLHFTPKDWSKRGKW</sequence>
<feature type="chain" id="PRO_0000051580" description="Histone acetyltransferase KAT5">
    <location>
        <begin position="1"/>
        <end position="513"/>
    </location>
</feature>
<feature type="domain" description="Tudor-knot" evidence="3">
    <location>
        <begin position="8"/>
        <end position="65"/>
    </location>
</feature>
<feature type="domain" description="MYST-type HAT" evidence="4">
    <location>
        <begin position="227"/>
        <end position="504"/>
    </location>
</feature>
<feature type="zinc finger region" description="C2HC MYST-type" evidence="4 79">
    <location>
        <begin position="260"/>
        <end position="285"/>
    </location>
</feature>
<feature type="region of interest" description="Disordered" evidence="5">
    <location>
        <begin position="69"/>
        <end position="106"/>
    </location>
</feature>
<feature type="region of interest" description="Disordered" evidence="5">
    <location>
        <begin position="122"/>
        <end position="220"/>
    </location>
</feature>
<feature type="region of interest" description="Interaction with ATF2" evidence="29">
    <location>
        <begin position="368"/>
        <end position="513"/>
    </location>
</feature>
<feature type="compositionally biased region" description="Polar residues" evidence="5">
    <location>
        <begin position="133"/>
        <end position="144"/>
    </location>
</feature>
<feature type="active site" description="Proton donor/acceptor" evidence="2">
    <location>
        <position position="403"/>
    </location>
</feature>
<feature type="binding site" evidence="67">
    <location>
        <begin position="370"/>
        <end position="372"/>
    </location>
    <ligand>
        <name>acetyl-CoA</name>
        <dbReference type="ChEBI" id="CHEBI:57288"/>
    </ligand>
</feature>
<feature type="binding site" evidence="67">
    <location>
        <begin position="377"/>
        <end position="383"/>
    </location>
    <ligand>
        <name>acetyl-CoA</name>
        <dbReference type="ChEBI" id="CHEBI:57288"/>
    </ligand>
</feature>
<feature type="binding site" evidence="67">
    <location>
        <position position="407"/>
    </location>
    <ligand>
        <name>acetyl-CoA</name>
        <dbReference type="ChEBI" id="CHEBI:57288"/>
    </ligand>
</feature>
<feature type="binding site" evidence="2">
    <location>
        <position position="416"/>
    </location>
    <ligand>
        <name>acetyl-CoA</name>
        <dbReference type="ChEBI" id="CHEBI:57288"/>
    </ligand>
</feature>
<feature type="modified residue" description="N6-acetyllysine" evidence="82">
    <location>
        <position position="52"/>
    </location>
</feature>
<feature type="modified residue" description="Phosphoserine; by GSK3" evidence="11 35 50 54 83">
    <location>
        <position position="86"/>
    </location>
</feature>
<feature type="modified residue" description="Phosphoserine; by CDK1 and CDK9" evidence="11 35 44 50 83">
    <location>
        <position position="90"/>
    </location>
</feature>
<feature type="modified residue" description="N6-acetyllysine; by autocatalysis" evidence="39 48">
    <location>
        <position position="104"/>
    </location>
</feature>
<feature type="modified residue" description="N6-acetyllysine; by autocatalysis" evidence="39">
    <location>
        <position position="120"/>
    </location>
</feature>
<feature type="modified residue" description="N6-acetyllysine; by autocatalysis" evidence="39">
    <location>
        <position position="148"/>
    </location>
</feature>
<feature type="modified residue" description="N6-acetyllysine; by autocatalysis" evidence="39">
    <location>
        <position position="150"/>
    </location>
</feature>
<feature type="modified residue" description="N6-acetyllysine; by autocatalysis" evidence="39">
    <location>
        <position position="187"/>
    </location>
</feature>
<feature type="modified residue" description="N6-acetyllysine; by autocatalysis" evidence="39">
    <location>
        <position position="189"/>
    </location>
</feature>
<feature type="modified residue" description="Phosphoserine" evidence="83">
    <location>
        <position position="199"/>
    </location>
</feature>
<feature type="modified residue" description="N6-acetyllysine; by autocatalysis" evidence="37 67">
    <location>
        <position position="327"/>
    </location>
</feature>
<feature type="cross-link" description="Glycyl lysine isopeptide (Lys-Gly) (interchain with G-Cter in SUMO1); alternate" evidence="26">
    <location>
        <position position="430"/>
    </location>
</feature>
<feature type="cross-link" description="Glycyl lysine isopeptide (Lys-Gly) (interchain with G-Cter in SUMO2); alternate" evidence="59">
    <location>
        <position position="430"/>
    </location>
</feature>
<feature type="cross-link" description="Glycyl lysine isopeptide (Lys-Gly) (interchain with G-Cter in SUMO1)" evidence="26">
    <location>
        <position position="451"/>
    </location>
</feature>
<feature type="splice variant" id="VSP_009104" description="In isoform 3 and isoform 4." evidence="70 71">
    <original>V</original>
    <variation>VVSPVPGAGRREPGEVGRARGPPVADPGVALSPQ</variation>
    <location>
        <position position="4"/>
    </location>
</feature>
<feature type="splice variant" id="VSP_007438" description="In isoform 1 and isoform 4." evidence="69 71 73">
    <location>
        <begin position="96"/>
        <end position="147"/>
    </location>
</feature>
<feature type="sequence variant" id="VAR_085192" description="In NEDFASB; decreased histone acetyltransferase activity; dbSNP:rs1857071943." evidence="58">
    <original>R</original>
    <variation>H</variation>
    <location>
        <position position="53"/>
    </location>
</feature>
<feature type="sequence variant" id="VAR_059456" description="In dbSNP:rs11541271.">
    <original>P</original>
    <variation>T</variation>
    <location>
        <position position="78"/>
    </location>
</feature>
<feature type="sequence variant" id="VAR_085193" description="In NEDFASB; decreased histone acetyltransferase activity; dbSNP:rs1857215256." evidence="58">
    <original>C</original>
    <variation>S</variation>
    <location>
        <position position="369"/>
    </location>
</feature>
<feature type="sequence variant" id="VAR_085194" description="In NEDFASB; decreased histone acetyltransferase activity; dbSNP:rs1857290083." evidence="58">
    <original>S</original>
    <variation>A</variation>
    <location>
        <position position="413"/>
    </location>
</feature>
<feature type="mutagenesis site" description="Reduced phosphorylation. Abolishes phosphorylation; when associated with A-90. Reduced histone acetyltransferase activity. Abolished phosphorylation by GSK3 and decreased acetyltransferase activity." evidence="11 35 54">
    <original>S</original>
    <variation>A</variation>
    <location>
        <position position="86"/>
    </location>
</feature>
<feature type="mutagenesis site" description="Reduced phosphorylation, leading to reduced protein acetyltransferase activity. Abolishes phosphorylation; when associated with A-86. Reduced histone acetyltransferase activity. Abolished phosphorylation by GSK3 at S-86." evidence="11 35 44 50">
    <original>S</original>
    <variation>A</variation>
    <location>
        <position position="90"/>
    </location>
</feature>
<feature type="mutagenesis site" description="Mimics phosphorylation, promoting protein acetyltransferase activity." evidence="44">
    <original>S</original>
    <variation>D</variation>
    <location>
        <position position="90"/>
    </location>
</feature>
<feature type="mutagenesis site" description="Impaired acetylation, leading to reduced histone acetyltransferase activity. In K6R; abolished autoacetylation; when associated with R-120, R-148, R-150, R-187 and R-189." evidence="39 48">
    <original>K</original>
    <variation>R</variation>
    <location>
        <position position="104"/>
    </location>
</feature>
<feature type="mutagenesis site" description="In K6R; abolished autoacetylation; when associated with R-104, R-148, R-150, R-187 and R-189." evidence="39">
    <original>K</original>
    <variation>R</variation>
    <location>
        <position position="120"/>
    </location>
</feature>
<feature type="mutagenesis site" description="In K6R; abolished autoacetylation; when associated with R-104, R-120, R-150, R-187 and R-189." evidence="39">
    <original>K</original>
    <variation>R</variation>
    <location>
        <position position="148"/>
    </location>
</feature>
<feature type="mutagenesis site" description="In K6R; abolished autoacetylation; when associated with R-104, R-120, R-148, R-187 and R-189." evidence="39">
    <original>K</original>
    <variation>R</variation>
    <location>
        <position position="150"/>
    </location>
</feature>
<feature type="mutagenesis site" description="In K6R; abolished autoacetylation; when associated with R-104, R-120, R-148, R-150 and R-189." evidence="39">
    <original>K</original>
    <variation>R</variation>
    <location>
        <position position="187"/>
    </location>
</feature>
<feature type="mutagenesis site" description="In K6R; abolished autoacetylation; when associated with R-104, R-120, R-148, R-150 and R-187." evidence="39">
    <original>K</original>
    <variation>R</variation>
    <location>
        <position position="189"/>
    </location>
</feature>
<feature type="mutagenesis site" description="Does not affect phosphorylation; when associated with A-257." evidence="11">
    <original>L</original>
    <variation>A</variation>
    <location>
        <position position="254"/>
    </location>
</feature>
<feature type="mutagenesis site" description="Does not affect phosphorylation; when associated with A-254." evidence="11">
    <original>L</original>
    <variation>A</variation>
    <location>
        <position position="257"/>
    </location>
</feature>
<feature type="mutagenesis site" description="Mimics acetylation; promoting interaction with FOXP3 and subsequent acetylation." evidence="37">
    <original>K</original>
    <variation>Q</variation>
    <location>
        <position position="327"/>
    </location>
</feature>
<feature type="mutagenesis site" description="Decreased autoacetylation; leading to decreased acetyltransferase activity and ability to acetylate FOXP3." evidence="37">
    <original>K</original>
    <variation>R</variation>
    <location>
        <position position="327"/>
    </location>
</feature>
<feature type="mutagenesis site" description="In KAT5(QG/EE) mutant; abolished acetyltransferase activity. Impaired ability to activate CGAS." evidence="37 42 56 57 61">
    <original>QRRG</original>
    <variation>ERRE</variation>
    <location>
        <begin position="377"/>
        <end position="380"/>
    </location>
</feature>
<feature type="mutagenesis site" description="Loss of function. Does not affect phosphorylation." evidence="11">
    <original>G</original>
    <variation>A</variation>
    <location>
        <position position="380"/>
    </location>
</feature>
<feature type="mutagenesis site" description="Abrogates sumoylation. Abolished sumoylation by PIAS4, promoting interaction with PRKDC, leading to decreased repair of DNA double-strand breaks (DSBs) via homologous recombination (HR)." evidence="26 59">
    <original>K</original>
    <variation>R</variation>
    <location>
        <position position="430"/>
    </location>
</feature>
<feature type="mutagenesis site" description="Abrogates sumoylation." evidence="26">
    <original>K</original>
    <variation>R</variation>
    <location>
        <position position="451"/>
    </location>
</feature>
<feature type="sequence conflict" description="In Ref. 1; AAB18236/AAB02683." evidence="77" ref="1">
    <original>G</original>
    <variation>R</variation>
    <location>
        <position position="382"/>
    </location>
</feature>
<feature type="helix" evidence="86">
    <location>
        <begin position="4"/>
        <end position="6"/>
    </location>
</feature>
<feature type="strand" evidence="86">
    <location>
        <begin position="12"/>
        <end position="15"/>
    </location>
</feature>
<feature type="strand" evidence="86">
    <location>
        <begin position="28"/>
        <end position="35"/>
    </location>
</feature>
<feature type="strand" evidence="86">
    <location>
        <begin position="37"/>
        <end position="40"/>
    </location>
</feature>
<feature type="strand" evidence="86">
    <location>
        <begin position="42"/>
        <end position="47"/>
    </location>
</feature>
<feature type="helix" evidence="86">
    <location>
        <begin position="52"/>
        <end position="54"/>
    </location>
</feature>
<feature type="strand" evidence="86">
    <location>
        <begin position="56"/>
        <end position="58"/>
    </location>
</feature>
<feature type="helix" evidence="86">
    <location>
        <begin position="60"/>
        <end position="62"/>
    </location>
</feature>
<feature type="helix" evidence="84">
    <location>
        <begin position="65"/>
        <end position="67"/>
    </location>
</feature>
<feature type="strand" evidence="85">
    <location>
        <begin position="235"/>
        <end position="237"/>
    </location>
</feature>
<feature type="strand" evidence="85">
    <location>
        <begin position="240"/>
        <end position="242"/>
    </location>
</feature>
<feature type="helix" evidence="85">
    <location>
        <begin position="252"/>
        <end position="254"/>
    </location>
</feature>
<feature type="strand" evidence="85">
    <location>
        <begin position="260"/>
        <end position="262"/>
    </location>
</feature>
<feature type="turn" evidence="85">
    <location>
        <begin position="264"/>
        <end position="266"/>
    </location>
</feature>
<feature type="strand" evidence="85">
    <location>
        <begin position="269"/>
        <end position="271"/>
    </location>
</feature>
<feature type="helix" evidence="85">
    <location>
        <begin position="273"/>
        <end position="282"/>
    </location>
</feature>
<feature type="strand" evidence="85">
    <location>
        <begin position="289"/>
        <end position="296"/>
    </location>
</feature>
<feature type="strand" evidence="85">
    <location>
        <begin position="299"/>
        <end position="305"/>
    </location>
</feature>
<feature type="turn" evidence="85">
    <location>
        <begin position="306"/>
        <end position="308"/>
    </location>
</feature>
<feature type="helix" evidence="85">
    <location>
        <begin position="310"/>
        <end position="321"/>
    </location>
</feature>
<feature type="strand" evidence="85">
    <location>
        <begin position="336"/>
        <end position="345"/>
    </location>
</feature>
<feature type="strand" evidence="85">
    <location>
        <begin position="348"/>
        <end position="360"/>
    </location>
</feature>
<feature type="strand" evidence="85">
    <location>
        <begin position="365"/>
        <end position="368"/>
    </location>
</feature>
<feature type="strand" evidence="85">
    <location>
        <begin position="370"/>
        <end position="372"/>
    </location>
</feature>
<feature type="helix" evidence="85">
    <location>
        <begin position="374"/>
        <end position="376"/>
    </location>
</feature>
<feature type="helix" evidence="85">
    <location>
        <begin position="381"/>
        <end position="395"/>
    </location>
</feature>
<feature type="strand" evidence="85">
    <location>
        <begin position="400"/>
        <end position="402"/>
    </location>
</feature>
<feature type="helix" evidence="85">
    <location>
        <begin position="408"/>
        <end position="425"/>
    </location>
</feature>
<feature type="helix" evidence="85">
    <location>
        <begin position="441"/>
        <end position="448"/>
    </location>
</feature>
<feature type="helix" evidence="85">
    <location>
        <begin position="452"/>
        <end position="461"/>
    </location>
</feature>
<feature type="strand" evidence="85">
    <location>
        <begin position="469"/>
        <end position="474"/>
    </location>
</feature>
<feature type="helix" evidence="85">
    <location>
        <begin position="497"/>
        <end position="499"/>
    </location>
</feature>
<feature type="sequence conflict" description="In Ref. 3; no nucleotide entry." evidence="77" ref="3">
    <original>V</original>
    <variation>A</variation>
    <location sequence="Q92993-3">
        <position position="32"/>
    </location>
</feature>
<evidence type="ECO:0000250" key="1">
    <source>
        <dbReference type="UniProtKB" id="Q8CHK4"/>
    </source>
</evidence>
<evidence type="ECO:0000250" key="2">
    <source>
        <dbReference type="UniProtKB" id="Q9H7Z6"/>
    </source>
</evidence>
<evidence type="ECO:0000255" key="3"/>
<evidence type="ECO:0000255" key="4">
    <source>
        <dbReference type="PROSITE-ProRule" id="PRU01063"/>
    </source>
</evidence>
<evidence type="ECO:0000256" key="5">
    <source>
        <dbReference type="SAM" id="MobiDB-lite"/>
    </source>
</evidence>
<evidence type="ECO:0000269" key="6">
    <source>
    </source>
</evidence>
<evidence type="ECO:0000269" key="7">
    <source>
    </source>
</evidence>
<evidence type="ECO:0000269" key="8">
    <source>
    </source>
</evidence>
<evidence type="ECO:0000269" key="9">
    <source>
    </source>
</evidence>
<evidence type="ECO:0000269" key="10">
    <source>
    </source>
</evidence>
<evidence type="ECO:0000269" key="11">
    <source>
    </source>
</evidence>
<evidence type="ECO:0000269" key="12">
    <source>
    </source>
</evidence>
<evidence type="ECO:0000269" key="13">
    <source>
    </source>
</evidence>
<evidence type="ECO:0000269" key="14">
    <source>
    </source>
</evidence>
<evidence type="ECO:0000269" key="15">
    <source>
    </source>
</evidence>
<evidence type="ECO:0000269" key="16">
    <source>
    </source>
</evidence>
<evidence type="ECO:0000269" key="17">
    <source>
    </source>
</evidence>
<evidence type="ECO:0000269" key="18">
    <source>
    </source>
</evidence>
<evidence type="ECO:0000269" key="19">
    <source>
    </source>
</evidence>
<evidence type="ECO:0000269" key="20">
    <source>
    </source>
</evidence>
<evidence type="ECO:0000269" key="21">
    <source>
    </source>
</evidence>
<evidence type="ECO:0000269" key="22">
    <source>
    </source>
</evidence>
<evidence type="ECO:0000269" key="23">
    <source>
    </source>
</evidence>
<evidence type="ECO:0000269" key="24">
    <source>
    </source>
</evidence>
<evidence type="ECO:0000269" key="25">
    <source>
    </source>
</evidence>
<evidence type="ECO:0000269" key="26">
    <source>
    </source>
</evidence>
<evidence type="ECO:0000269" key="27">
    <source>
    </source>
</evidence>
<evidence type="ECO:0000269" key="28">
    <source>
    </source>
</evidence>
<evidence type="ECO:0000269" key="29">
    <source>
    </source>
</evidence>
<evidence type="ECO:0000269" key="30">
    <source>
    </source>
</evidence>
<evidence type="ECO:0000269" key="31">
    <source>
    </source>
</evidence>
<evidence type="ECO:0000269" key="32">
    <source>
    </source>
</evidence>
<evidence type="ECO:0000269" key="33">
    <source>
    </source>
</evidence>
<evidence type="ECO:0000269" key="34">
    <source>
    </source>
</evidence>
<evidence type="ECO:0000269" key="35">
    <source>
    </source>
</evidence>
<evidence type="ECO:0000269" key="36">
    <source>
    </source>
</evidence>
<evidence type="ECO:0000269" key="37">
    <source>
    </source>
</evidence>
<evidence type="ECO:0000269" key="38">
    <source>
    </source>
</evidence>
<evidence type="ECO:0000269" key="39">
    <source>
    </source>
</evidence>
<evidence type="ECO:0000269" key="40">
    <source>
    </source>
</evidence>
<evidence type="ECO:0000269" key="41">
    <source>
    </source>
</evidence>
<evidence type="ECO:0000269" key="42">
    <source>
    </source>
</evidence>
<evidence type="ECO:0000269" key="43">
    <source>
    </source>
</evidence>
<evidence type="ECO:0000269" key="44">
    <source>
    </source>
</evidence>
<evidence type="ECO:0000269" key="45">
    <source>
    </source>
</evidence>
<evidence type="ECO:0000269" key="46">
    <source>
    </source>
</evidence>
<evidence type="ECO:0000269" key="47">
    <source>
    </source>
</evidence>
<evidence type="ECO:0000269" key="48">
    <source>
    </source>
</evidence>
<evidence type="ECO:0000269" key="49">
    <source>
    </source>
</evidence>
<evidence type="ECO:0000269" key="50">
    <source>
    </source>
</evidence>
<evidence type="ECO:0000269" key="51">
    <source>
    </source>
</evidence>
<evidence type="ECO:0000269" key="52">
    <source>
    </source>
</evidence>
<evidence type="ECO:0000269" key="53">
    <source>
    </source>
</evidence>
<evidence type="ECO:0000269" key="54">
    <source>
    </source>
</evidence>
<evidence type="ECO:0000269" key="55">
    <source>
    </source>
</evidence>
<evidence type="ECO:0000269" key="56">
    <source>
    </source>
</evidence>
<evidence type="ECO:0000269" key="57">
    <source>
    </source>
</evidence>
<evidence type="ECO:0000269" key="58">
    <source>
    </source>
</evidence>
<evidence type="ECO:0000269" key="59">
    <source>
    </source>
</evidence>
<evidence type="ECO:0000269" key="60">
    <source>
    </source>
</evidence>
<evidence type="ECO:0000269" key="61">
    <source>
    </source>
</evidence>
<evidence type="ECO:0000269" key="62">
    <source>
    </source>
</evidence>
<evidence type="ECO:0000269" key="63">
    <source>
    </source>
</evidence>
<evidence type="ECO:0000269" key="64">
    <source>
    </source>
</evidence>
<evidence type="ECO:0000269" key="65">
    <source>
    </source>
</evidence>
<evidence type="ECO:0000269" key="66">
    <source>
    </source>
</evidence>
<evidence type="ECO:0000269" key="67">
    <source ref="72"/>
</evidence>
<evidence type="ECO:0000303" key="68">
    <source>
    </source>
</evidence>
<evidence type="ECO:0000303" key="69">
    <source>
    </source>
</evidence>
<evidence type="ECO:0000303" key="70">
    <source>
    </source>
</evidence>
<evidence type="ECO:0000303" key="71">
    <source>
    </source>
</evidence>
<evidence type="ECO:0000303" key="72">
    <source>
    </source>
</evidence>
<evidence type="ECO:0000303" key="73">
    <source>
    </source>
</evidence>
<evidence type="ECO:0000303" key="74">
    <source>
    </source>
</evidence>
<evidence type="ECO:0000303" key="75">
    <source>
    </source>
</evidence>
<evidence type="ECO:0000303" key="76">
    <source>
    </source>
</evidence>
<evidence type="ECO:0000305" key="77"/>
<evidence type="ECO:0000305" key="78">
    <source>
    </source>
</evidence>
<evidence type="ECO:0000305" key="79">
    <source ref="72"/>
</evidence>
<evidence type="ECO:0000312" key="80">
    <source>
        <dbReference type="HGNC" id="HGNC:5275"/>
    </source>
</evidence>
<evidence type="ECO:0007744" key="81">
    <source>
        <dbReference type="PDB" id="4QQG"/>
    </source>
</evidence>
<evidence type="ECO:0007744" key="82">
    <source>
    </source>
</evidence>
<evidence type="ECO:0007744" key="83">
    <source>
    </source>
</evidence>
<evidence type="ECO:0007829" key="84">
    <source>
        <dbReference type="PDB" id="2EKO"/>
    </source>
</evidence>
<evidence type="ECO:0007829" key="85">
    <source>
        <dbReference type="PDB" id="2OU2"/>
    </source>
</evidence>
<evidence type="ECO:0007829" key="86">
    <source>
        <dbReference type="PDB" id="4QQG"/>
    </source>
</evidence>
<comment type="function">
    <text evidence="1 13 15 16 17 18 21 22 24 25 27 28 31 32 36 37 41 42 43 44 46 47 48 49 50 52 53 54 55 56 57 58 59 60 61 62 63 65">Catalytic subunit of the NuA4 histone acetyltransferase complex, a multiprotein complex involved in transcriptional activation of select genes principally by acetylation of nucleosomal histones H2A and H4 (PubMed:12776177, PubMed:14966270, PubMed:15042092, PubMed:15121871, PubMed:15310756, PubMed:16387653, PubMed:19909775, PubMed:25865756, PubMed:27153538, PubMed:29174981, PubMed:29335245, PubMed:32822602, PubMed:33076429). Histone acetylation alters nucleosome-DNA interactions and promotes interaction of the modified histones with other proteins which positively regulate transcription (PubMed:12776177, PubMed:14966270, PubMed:15042092, PubMed:15121871, PubMed:15310756). The NuA4 histone acetyltransferase complex is required for the activation of transcriptional programs associated with proto-oncogene mediated growth induction, tumor suppressor mediated growth arrest and replicative senescence, apoptosis, and DNA repair (PubMed:17709392, PubMed:19783983, PubMed:32832608). The NuA4 complex plays a direct role in repair of DNA double-strand breaks (DSBs) by promoting homologous recombination (HR): the complex inhibits TP53BP1 binding to chromatin via MBTD1, which recognizes and binds histone H4 trimethylated at 'Lys-20' (H4K20me), and KAT5 that catalyzes acetylation of 'Lys-15' of histone H2A (H2AK15ac), thereby blocking the ubiquitination mark required for TP53BP1 localization at DNA breaks (PubMed:27153538, PubMed:32832608). Also involved in DSB repair by mediating acetylation of 'Lys-5' of histone H2AX (H2AXK5ac), promoting NBN/NBS1 assembly at the sites of DNA damage (PubMed:17709392, PubMed:26438602). The NuA4 complex plays a key role in hematopoietic stem cell maintenance and is required to maintain acetylated H2A.Z/H2AZ1 at MYC target genes (By similarity). The NuA4 complex is also required for spermatid development by promoting acetylation of histones: histone hyperacetylation is required for histone replacement during the transition from round to elongating spermatids (By similarity). Component of a SWR1-like complex that specifically mediates the removal of histone H2A.Z/H2AZ1 from the nucleosome (PubMed:24463511). Also acetylates non-histone proteins, such as BMAL1, ATM, AURKB, CHKA, CGAS, ERCC4/XPF, LPIN1, TP53/p53, NDC80/HEC1, NR1D2, RAN, SOX4, FOXP3, SQSTM1, ULK1 and RUBCNL/Pacer (PubMed:16141325, PubMed:17189187, PubMed:17360565, PubMed:17996965, PubMed:24835996, PubMed:26829474, PubMed:29040603, PubMed:30409912, PubMed:30704899, PubMed:31857589, PubMed:32034146, PubMed:32817552, PubMed:34077757). Directly acetylates and activates ATM (PubMed:16141325). Promotes nucleotide excision repair (NER) by mediating acetylation of ERCC4/XPF, thereby promoting formation of the ERCC4-ERCC1 complex (PubMed:32034146). Relieves NR1D2-mediated inhibition of APOC3 expression by acetylating NR1D2 (PubMed:17996965). Acts as a regulator of regulatory T-cells (Treg) by catalyzing FOXP3 acetylation, thereby promoting FOXP3 transcriptional repressor activity (PubMed:17360565, PubMed:24835996). Involved in skeletal myoblast differentiation by mediating acetylation of SOX4 (PubMed:26291311). Catalyzes acetylation of APBB1/FE65, increasing its transcription activator activity (PubMed:33938178). Promotes transcription elongation during the activation phase of the circadian cycle by catalyzing acetylation of BMAL1, promoting elongation of circadian transcripts (By similarity). Together with GSK3 (GSK3A or GSK3B), acts as a regulator of autophagy: phosphorylated at Ser-86 by GSK3 under starvation conditions, leading to activate acetyltransferase activity and promote acetylation of key autophagy regulators, such as ULK1 and RUBCNL/Pacer (PubMed:30704899). Acts as a regulator of the cGAS-STING innate antiviral response by catalyzing acetylation the N-terminus of CGAS, thereby promoting CGAS DNA-binding and activation (PubMed:32817552). Also regulates lipid metabolism by mediating acetylation of CHKA or LPIN1 (PubMed:34077757). Promotes lipolysis of lipid droplets following glucose deprivation by mediating acetylation of isoform 1 of CHKA, thereby promoting monomerization of CHKA and its conversion into a tyrosine-protein kinase (PubMed:34077757). Acts as a regulator of fatty-acid-induced triacylglycerol synthesis by catalyzing acetylation of LPIN1, thereby promoting the synthesis of diacylglycerol (PubMed:29765047). In addition to protein acetyltransferase, can use different acyl-CoA substrates, such as (2E)-butenoyl-CoA (crotonyl-CoA), S-lactoyl-CoA (lactyl-CoA) and 2-hydroxyisobutanoyl-CoA (2-hydroxyisobutyryl-CoA), and is able to mediate protein crotonylation, lactylation and 2-hydroxyisobutyrylation, respectively (PubMed:29192674, PubMed:34608293, PubMed:38961290). Acts as a key regulator of chromosome segregation and kinetochore-microtubule attachment during mitosis by mediating acetylation or crotonylation of target proteins (PubMed:26829474, PubMed:29040603, PubMed:30409912, PubMed:34608293). Catalyzes acetylation of AURKB at kinetochores, increasing AURKB activity and promoting accurate chromosome segregation in mitosis (PubMed:26829474). Acetylates RAN during mitosis, promoting microtubule assembly at mitotic chromosomes (PubMed:29040603). Acetylates NDC80/HEC1 during mitosis, promoting robust kinetochore-microtubule attachment (PubMed:30409912). Catalyzes crotonylation of MAPRE1/EB1, thereby ensuring accurate spindle positioning in mitosis (PubMed:34608293). Catalyzes lactylation of NBN/NBS1 in response to DNA damage, thereby promoting DNA double-strand breaks (DSBs) via homologous recombination (HR) (PubMed:38961290).</text>
</comment>
<comment type="function">
    <text evidence="64">(Microbial infection) Catalyzes the acetylation of flavivirus NS3 protein to modulate their RNA-binding and -unwinding activities leading to facilitate viral replication.</text>
</comment>
<comment type="catalytic activity">
    <reaction evidence="6 11 41 43 46 48 58 60">
        <text>L-lysyl-[histone] + acetyl-CoA = N(6)-acetyl-L-lysyl-[histone] + CoA + H(+)</text>
        <dbReference type="Rhea" id="RHEA:21992"/>
        <dbReference type="Rhea" id="RHEA-COMP:9845"/>
        <dbReference type="Rhea" id="RHEA-COMP:11338"/>
        <dbReference type="ChEBI" id="CHEBI:15378"/>
        <dbReference type="ChEBI" id="CHEBI:29969"/>
        <dbReference type="ChEBI" id="CHEBI:57287"/>
        <dbReference type="ChEBI" id="CHEBI:57288"/>
        <dbReference type="ChEBI" id="CHEBI:61930"/>
        <dbReference type="EC" id="2.3.1.48"/>
    </reaction>
    <physiologicalReaction direction="left-to-right" evidence="41 43 46 48 60 78">
        <dbReference type="Rhea" id="RHEA:21993"/>
    </physiologicalReaction>
</comment>
<comment type="catalytic activity">
    <reaction evidence="24 37 41 42 44 47 52 53 54 55 56 57 61 62">
        <text>L-lysyl-[protein] + acetyl-CoA = N(6)-acetyl-L-lysyl-[protein] + CoA + H(+)</text>
        <dbReference type="Rhea" id="RHEA:45948"/>
        <dbReference type="Rhea" id="RHEA-COMP:9752"/>
        <dbReference type="Rhea" id="RHEA-COMP:10731"/>
        <dbReference type="ChEBI" id="CHEBI:15378"/>
        <dbReference type="ChEBI" id="CHEBI:29969"/>
        <dbReference type="ChEBI" id="CHEBI:57287"/>
        <dbReference type="ChEBI" id="CHEBI:57288"/>
        <dbReference type="ChEBI" id="CHEBI:61930"/>
    </reaction>
    <physiologicalReaction direction="left-to-right" evidence="24 37 42 44 52 53 55 56 57 61 62">
        <dbReference type="Rhea" id="RHEA:45949"/>
    </physiologicalReaction>
</comment>
<comment type="catalytic activity">
    <reaction evidence="63">
        <text>(2E)-butenoyl-CoA + L-lysyl-[protein] = N(6)-(2E)-butenoyl-L-lysyl-[protein] + CoA + H(+)</text>
        <dbReference type="Rhea" id="RHEA:53908"/>
        <dbReference type="Rhea" id="RHEA-COMP:9752"/>
        <dbReference type="Rhea" id="RHEA-COMP:13707"/>
        <dbReference type="ChEBI" id="CHEBI:15378"/>
        <dbReference type="ChEBI" id="CHEBI:29969"/>
        <dbReference type="ChEBI" id="CHEBI:57287"/>
        <dbReference type="ChEBI" id="CHEBI:57332"/>
        <dbReference type="ChEBI" id="CHEBI:137954"/>
    </reaction>
    <physiologicalReaction direction="left-to-right" evidence="63">
        <dbReference type="Rhea" id="RHEA:53909"/>
    </physiologicalReaction>
</comment>
<comment type="catalytic activity">
    <reaction evidence="49">
        <text>2-hydroxyisobutanoyl-CoA + L-lysyl-[protein] = N(6)-(2-hydroxyisobutanoyl)-L-lysyl-[protein] + CoA + H(+)</text>
        <dbReference type="Rhea" id="RHEA:24180"/>
        <dbReference type="Rhea" id="RHEA-COMP:9752"/>
        <dbReference type="Rhea" id="RHEA-COMP:15921"/>
        <dbReference type="ChEBI" id="CHEBI:15378"/>
        <dbReference type="ChEBI" id="CHEBI:29969"/>
        <dbReference type="ChEBI" id="CHEBI:57287"/>
        <dbReference type="ChEBI" id="CHEBI:131780"/>
        <dbReference type="ChEBI" id="CHEBI:144968"/>
    </reaction>
    <physiologicalReaction direction="left-to-right" evidence="49">
        <dbReference type="Rhea" id="RHEA:24181"/>
    </physiologicalReaction>
</comment>
<comment type="catalytic activity">
    <reaction evidence="65">
        <text>(S)-lactoyl-CoA + L-lysyl-[protein] = N(6)-[(S)-lactoyl]-L-lysyl-[protein] + CoA + H(+)</text>
        <dbReference type="Rhea" id="RHEA:61996"/>
        <dbReference type="Rhea" id="RHEA-COMP:9752"/>
        <dbReference type="Rhea" id="RHEA-COMP:19466"/>
        <dbReference type="ChEBI" id="CHEBI:15378"/>
        <dbReference type="ChEBI" id="CHEBI:29969"/>
        <dbReference type="ChEBI" id="CHEBI:57287"/>
        <dbReference type="ChEBI" id="CHEBI:231527"/>
        <dbReference type="ChEBI" id="CHEBI:231528"/>
    </reaction>
    <physiologicalReaction direction="left-to-right" evidence="65">
        <dbReference type="Rhea" id="RHEA:61997"/>
    </physiologicalReaction>
</comment>
<comment type="activity regulation">
    <text evidence="33 41 54">Acyltransferase and acetyltransferase activities are activated by phosphorylation and autoacetylation (PubMed:20100829, PubMed:30704899). Autoacetylation activates the histone acetyltransferase activity (PubMed:20100829, PubMed:25865756, PubMed:30704899).</text>
</comment>
<comment type="subunit">
    <text evidence="1 7 8 9 12 13 14 15 19 20 21 23 25 28 29 30 32 34 36 37 38 45 48 59 61 67 72">Component of the NuA4 histone acetyltransferase complex which contains the catalytic subunit KAT5/TIP60 and the subunits EP400, TRRAP/PAF400, BRD8/SMAP, EPC1, DMAP1/DNMAP1, RUVBL1/TIP49, RUVBL2, ING3, actin, ACTL6A/BAF53A, MORF4L1/MRG15, MORF4L2/MRGX, MRGBP, YEATS4/GAS41, VPS72/YL1 and MEAF6 (PubMed:10966108, PubMed:12963728, PubMed:14966270, PubMed:15196461, PubMed:29174981). KAT5/TIP60, EPC1, and ING3 together constitute a minimal HAT complex termed Piccolo NuA4. The NuA4 complex interacts with MYC (PubMed:12776177). Interacts with ATM (PubMed:16141325). Interacts with JADE1 (PubMed:15502158). Interacts with PLA2G4A/CPLA2, EDNRA and HDAC7 (PubMed:11262386, PubMed:11416127, PubMed:12551922). Interacts with the cytoplasmic tail of APP and APBB1/FE65 (PubMed:33938178). Interacts with TRIM24 and TRIM68 (PubMed:18451177, PubMed:19909775). Forms a complex with SENP6 and UBE2I in response to UV irradiation. Identified in a complex with HINT1 (PubMed:16835243). Interacts with ATF2 and CUL3 (PubMed:18397884). Interacts with NR1D2 (via N-terminus) (PubMed:17996965). Component of a SWR1-like complex (PubMed:24463511). Interacts with FOXP3 (PubMed:17360565, PubMed:24835996). Interacts with ZBTB49 (PubMed:25245946). Interacts with SRF (By similarity). Interacts with ATF3; promoting autoacetylation and deubiquitination by USP7 (PubMed:25865756). Interacts with EP300/p300; interaction promotes KAT5 autoacetylation (PubMed:24835996). Interacts with PRKDC; interaction is impaired following KAT5 sumoylation (PubMed:32832608). Interacts with GPR50 (PubMed:21858214). Interacts with NME3; this interaction enables recruitment of NME3 at DNA damage sites where it plays a role in the repair of DNA (PubMed:26945015).</text>
</comment>
<comment type="subunit">
    <text evidence="20 66">(Microbial infection) Interacts with HIV-1 TAT.</text>
</comment>
<comment type="interaction">
    <interactant intactId="EBI-399080">
        <id>Q92993</id>
    </interactant>
    <interactant intactId="EBI-640741">
        <id>P01023</id>
        <label>A2M</label>
    </interactant>
    <organismsDiffer>false</organismsDiffer>
    <experiments>3</experiments>
</comment>
<comment type="interaction">
    <interactant intactId="EBI-399080">
        <id>Q92993</id>
    </interactant>
    <interactant intactId="EBI-751746">
        <id>Q15027</id>
        <label>ACAP1</label>
    </interactant>
    <organismsDiffer>false</organismsDiffer>
    <experiments>3</experiments>
</comment>
<comment type="interaction">
    <interactant intactId="EBI-399080">
        <id>Q92993</id>
    </interactant>
    <interactant intactId="EBI-1045357">
        <id>Q9NPJ3</id>
        <label>ACOT13</label>
    </interactant>
    <organismsDiffer>false</organismsDiffer>
    <experiments>3</experiments>
</comment>
<comment type="interaction">
    <interactant intactId="EBI-399080">
        <id>Q92993</id>
    </interactant>
    <interactant intactId="EBI-750671">
        <id>Q15699</id>
        <label>ALX1</label>
    </interactant>
    <organismsDiffer>false</organismsDiffer>
    <experiments>3</experiments>
</comment>
<comment type="interaction">
    <interactant intactId="EBI-399080">
        <id>Q92993</id>
    </interactant>
    <interactant intactId="EBI-25833200">
        <id>Q8IWZ3-3</id>
        <label>ANKHD1</label>
    </interactant>
    <organismsDiffer>false</organismsDiffer>
    <experiments>3</experiments>
</comment>
<comment type="interaction">
    <interactant intactId="EBI-399080">
        <id>Q92993</id>
    </interactant>
    <interactant intactId="EBI-13307975">
        <id>O00213-2</id>
        <label>APBB1</label>
    </interactant>
    <organismsDiffer>false</organismsDiffer>
    <experiments>3</experiments>
</comment>
<comment type="interaction">
    <interactant intactId="EBI-399080">
        <id>Q92993</id>
    </interactant>
    <interactant intactId="EBI-77613">
        <id>P05067</id>
        <label>APP</label>
    </interactant>
    <organismsDiffer>false</organismsDiffer>
    <experiments>3</experiments>
</comment>
<comment type="interaction">
    <interactant intactId="EBI-399080">
        <id>Q92993</id>
    </interactant>
    <interactant intactId="EBI-3447299">
        <id>O43307</id>
        <label>ARHGEF9</label>
    </interactant>
    <organismsDiffer>false</organismsDiffer>
    <experiments>3</experiments>
</comment>
<comment type="interaction">
    <interactant intactId="EBI-399080">
        <id>Q92993</id>
    </interactant>
    <interactant intactId="EBI-5280499">
        <id>Q66PJ3-4</id>
        <label>ARL6IP4</label>
    </interactant>
    <organismsDiffer>false</organismsDiffer>
    <experiments>3</experiments>
</comment>
<comment type="interaction">
    <interactant intactId="EBI-399080">
        <id>Q92993</id>
    </interactant>
    <interactant intactId="EBI-2323092">
        <id>Q9Y576</id>
        <label>ASB1</label>
    </interactant>
    <organismsDiffer>false</organismsDiffer>
    <experiments>3</experiments>
</comment>
<comment type="interaction">
    <interactant intactId="EBI-399080">
        <id>Q92993</id>
    </interactant>
    <interactant intactId="EBI-930964">
        <id>P54253</id>
        <label>ATXN1</label>
    </interactant>
    <organismsDiffer>false</organismsDiffer>
    <experiments>9</experiments>
</comment>
<comment type="interaction">
    <interactant intactId="EBI-399080">
        <id>Q92993</id>
    </interactant>
    <interactant intactId="EBI-624291">
        <id>Q96GD4</id>
        <label>AURKB</label>
    </interactant>
    <organismsDiffer>false</organismsDiffer>
    <experiments>4</experiments>
</comment>
<comment type="interaction">
    <interactant intactId="EBI-399080">
        <id>Q92993</id>
    </interactant>
    <interactant intactId="EBI-8994378">
        <id>Q14032</id>
        <label>BAAT</label>
    </interactant>
    <organismsDiffer>false</organismsDiffer>
    <experiments>3</experiments>
</comment>
<comment type="interaction">
    <interactant intactId="EBI-399080">
        <id>Q92993</id>
    </interactant>
    <interactant intactId="EBI-1642333">
        <id>Q9BYV9</id>
        <label>BACH2</label>
    </interactant>
    <organismsDiffer>false</organismsDiffer>
    <experiments>3</experiments>
</comment>
<comment type="interaction">
    <interactant intactId="EBI-399080">
        <id>Q92993</id>
    </interactant>
    <interactant intactId="EBI-25884811">
        <id>Q13072</id>
        <label>BAGE</label>
    </interactant>
    <organismsDiffer>false</organismsDiffer>
    <experiments>3</experiments>
</comment>
<comment type="interaction">
    <interactant intactId="EBI-399080">
        <id>Q92993</id>
    </interactant>
    <interactant intactId="EBI-2548012">
        <id>Q9H2G9</id>
        <label>BLZF1</label>
    </interactant>
    <organismsDiffer>false</organismsDiffer>
    <experiments>3</experiments>
</comment>
<comment type="interaction">
    <interactant intactId="EBI-399080">
        <id>Q92993</id>
    </interactant>
    <interactant intactId="EBI-6598617">
        <id>Q6PH81</id>
        <label>C16orf87</label>
    </interactant>
    <organismsDiffer>false</organismsDiffer>
    <experiments>3</experiments>
</comment>
<comment type="interaction">
    <interactant intactId="EBI-399080">
        <id>Q92993</id>
    </interactant>
    <interactant intactId="EBI-17761821">
        <id>Q8NDD1-6</id>
        <label>C1orf131</label>
    </interactant>
    <organismsDiffer>false</organismsDiffer>
    <experiments>3</experiments>
</comment>
<comment type="interaction">
    <interactant intactId="EBI-399080">
        <id>Q92993</id>
    </interactant>
    <interactant intactId="EBI-2559016">
        <id>Q6NZI2</id>
        <label>CAVIN1</label>
    </interactant>
    <organismsDiffer>false</organismsDiffer>
    <experiments>3</experiments>
</comment>
<comment type="interaction">
    <interactant intactId="EBI-399080">
        <id>Q92993</id>
    </interactant>
    <interactant intactId="EBI-712912">
        <id>Q9HC52</id>
        <label>CBX8</label>
    </interactant>
    <organismsDiffer>false</organismsDiffer>
    <experiments>2</experiments>
</comment>
<comment type="interaction">
    <interactant intactId="EBI-399080">
        <id>Q92993</id>
    </interactant>
    <interactant intactId="EBI-11977221">
        <id>Q86Z20</id>
        <label>CCDC125</label>
    </interactant>
    <organismsDiffer>false</organismsDiffer>
    <experiments>3</experiments>
</comment>
<comment type="interaction">
    <interactant intactId="EBI-399080">
        <id>Q92993</id>
    </interactant>
    <interactant intactId="EBI-10171416">
        <id>Q96JN2-2</id>
        <label>CCDC136</label>
    </interactant>
    <organismsDiffer>false</organismsDiffer>
    <experiments>3</experiments>
</comment>
<comment type="interaction">
    <interactant intactId="EBI-399080">
        <id>Q92993</id>
    </interactant>
    <interactant intactId="EBI-17641690">
        <id>Q96HJ3-2</id>
        <label>CCDC34</label>
    </interactant>
    <organismsDiffer>false</organismsDiffer>
    <experiments>3</experiments>
</comment>
<comment type="interaction">
    <interactant intactId="EBI-399080">
        <id>Q92993</id>
    </interactant>
    <interactant intactId="EBI-720151">
        <id>Q96A33</id>
        <label>CCDC47</label>
    </interactant>
    <organismsDiffer>false</organismsDiffer>
    <experiments>3</experiments>
</comment>
<comment type="interaction">
    <interactant intactId="EBI-399080">
        <id>Q92993</id>
    </interactant>
    <interactant intactId="EBI-713148">
        <id>Q9GZT6</id>
        <label>CCDC90B</label>
    </interactant>
    <organismsDiffer>false</organismsDiffer>
    <experiments>3</experiments>
</comment>
<comment type="interaction">
    <interactant intactId="EBI-399080">
        <id>Q92993</id>
    </interactant>
    <interactant intactId="EBI-1210604">
        <id>Q7Z7K6</id>
        <label>CENPV</label>
    </interactant>
    <organismsDiffer>false</organismsDiffer>
    <experiments>3</experiments>
</comment>
<comment type="interaction">
    <interactant intactId="EBI-399080">
        <id>Q92993</id>
    </interactant>
    <interactant intactId="EBI-473176">
        <id>Q9P2H0</id>
        <label>CEP126</label>
    </interactant>
    <organismsDiffer>false</organismsDiffer>
    <experiments>2</experiments>
</comment>
<comment type="interaction">
    <interactant intactId="EBI-399080">
        <id>Q92993</id>
    </interactant>
    <interactant intactId="EBI-739624">
        <id>Q8NHQ1</id>
        <label>CEP70</label>
    </interactant>
    <organismsDiffer>false</organismsDiffer>
    <experiments>3</experiments>
</comment>
<comment type="interaction">
    <interactant intactId="EBI-399080">
        <id>Q92993</id>
    </interactant>
    <interactant intactId="EBI-742887">
        <id>Q8TAP6</id>
        <label>CEP76</label>
    </interactant>
    <organismsDiffer>false</organismsDiffer>
    <experiments>3</experiments>
</comment>
<comment type="interaction">
    <interactant intactId="EBI-399080">
        <id>Q92993</id>
    </interactant>
    <interactant intactId="EBI-743375">
        <id>Q9NX63</id>
        <label>CHCHD3</label>
    </interactant>
    <organismsDiffer>false</organismsDiffer>
    <experiments>3</experiments>
</comment>
<comment type="interaction">
    <interactant intactId="EBI-399080">
        <id>Q92993</id>
    </interactant>
    <interactant intactId="EBI-372594">
        <id>Q99828</id>
        <label>CIB1</label>
    </interactant>
    <organismsDiffer>false</organismsDiffer>
    <experiments>3</experiments>
</comment>
<comment type="interaction">
    <interactant intactId="EBI-399080">
        <id>Q92993</id>
    </interactant>
    <interactant intactId="EBI-2116369">
        <id>P15169</id>
        <label>CPN1</label>
    </interactant>
    <organismsDiffer>false</organismsDiffer>
    <experiments>3</experiments>
</comment>
<comment type="interaction">
    <interactant intactId="EBI-399080">
        <id>Q92993</id>
    </interactant>
    <interactant intactId="EBI-2874283">
        <id>P43234</id>
        <label>CTSO</label>
    </interactant>
    <organismsDiffer>false</organismsDiffer>
    <experiments>3</experiments>
</comment>
<comment type="interaction">
    <interactant intactId="EBI-399080">
        <id>Q92993</id>
    </interactant>
    <interactant intactId="EBI-724515">
        <id>O95424</id>
        <label>DEXI</label>
    </interactant>
    <organismsDiffer>false</organismsDiffer>
    <experiments>3</experiments>
</comment>
<comment type="interaction">
    <interactant intactId="EBI-399080">
        <id>Q92993</id>
    </interactant>
    <interactant intactId="EBI-710057">
        <id>O43261</id>
        <label>DLEU1</label>
    </interactant>
    <organismsDiffer>false</organismsDiffer>
    <experiments>2</experiments>
</comment>
<comment type="interaction">
    <interactant intactId="EBI-399080">
        <id>Q92993</id>
    </interactant>
    <interactant intactId="EBI-10239299">
        <id>Q9NQM4</id>
        <label>DNAAF6</label>
    </interactant>
    <organismsDiffer>false</organismsDiffer>
    <experiments>6</experiments>
</comment>
<comment type="interaction">
    <interactant intactId="EBI-399080">
        <id>Q92993</id>
    </interactant>
    <interactant intactId="EBI-10968534">
        <id>P50570-2</id>
        <label>DNM2</label>
    </interactant>
    <organismsDiffer>false</organismsDiffer>
    <experiments>3</experiments>
</comment>
<comment type="interaction">
    <interactant intactId="EBI-399080">
        <id>Q92993</id>
    </interactant>
    <interactant intactId="EBI-748674">
        <id>O43598</id>
        <label>DNPH1</label>
    </interactant>
    <organismsDiffer>false</organismsDiffer>
    <experiments>3</experiments>
</comment>
<comment type="interaction">
    <interactant intactId="EBI-399080">
        <id>Q92993</id>
    </interactant>
    <interactant intactId="EBI-6624459">
        <id>P21728</id>
        <label>DRD1</label>
    </interactant>
    <organismsDiffer>false</organismsDiffer>
    <experiments>3</experiments>
</comment>
<comment type="interaction">
    <interactant intactId="EBI-399080">
        <id>Q92993</id>
    </interactant>
    <interactant intactId="EBI-448943">
        <id>Q16254</id>
        <label>E2F4</label>
    </interactant>
    <organismsDiffer>false</organismsDiffer>
    <experiments>3</experiments>
</comment>
<comment type="interaction">
    <interactant intactId="EBI-399080">
        <id>Q92993</id>
    </interactant>
    <interactant intactId="EBI-711977">
        <id>P20042</id>
        <label>EIF2S2</label>
    </interactant>
    <organismsDiffer>false</organismsDiffer>
    <experiments>3</experiments>
</comment>
<comment type="interaction">
    <interactant intactId="EBI-399080">
        <id>Q92993</id>
    </interactant>
    <interactant intactId="EBI-347740">
        <id>P60228</id>
        <label>EIF3E</label>
    </interactant>
    <organismsDiffer>false</organismsDiffer>
    <experiments>3</experiments>
</comment>
<comment type="interaction">
    <interactant intactId="EBI-399080">
        <id>Q92993</id>
    </interactant>
    <interactant intactId="EBI-11023729">
        <id>Q9H2F5-2</id>
        <label>EPC1</label>
    </interactant>
    <organismsDiffer>false</organismsDiffer>
    <experiments>3</experiments>
</comment>
<comment type="interaction">
    <interactant intactId="EBI-399080">
        <id>Q92993</id>
    </interactant>
    <interactant intactId="EBI-25885343">
        <id>Q96J88-3</id>
        <label>EPSTI1</label>
    </interactant>
    <organismsDiffer>false</organismsDiffer>
    <experiments>3</experiments>
</comment>
<comment type="interaction">
    <interactant intactId="EBI-399080">
        <id>Q92993</id>
    </interactant>
    <interactant intactId="EBI-15606245">
        <id>P03372-1</id>
        <label>ESR1</label>
    </interactant>
    <organismsDiffer>false</organismsDiffer>
    <experiments>3</experiments>
</comment>
<comment type="interaction">
    <interactant intactId="EBI-399080">
        <id>Q92993</id>
    </interactant>
    <interactant intactId="EBI-739737">
        <id>Q01844</id>
        <label>EWSR1</label>
    </interactant>
    <organismsDiffer>false</organismsDiffer>
    <experiments>2</experiments>
</comment>
<comment type="interaction">
    <interactant intactId="EBI-399080">
        <id>Q92993</id>
    </interactant>
    <interactant intactId="EBI-719941">
        <id>Q3B820</id>
        <label>FAM161A</label>
    </interactant>
    <organismsDiffer>false</organismsDiffer>
    <experiments>3</experiments>
</comment>
<comment type="interaction">
    <interactant intactId="EBI-399080">
        <id>Q92993</id>
    </interactant>
    <interactant intactId="EBI-11977403">
        <id>A0A0C3SFZ9</id>
        <label>FCHO1</label>
    </interactant>
    <organismsDiffer>false</organismsDiffer>
    <experiments>3</experiments>
</comment>
<comment type="interaction">
    <interactant intactId="EBI-399080">
        <id>Q92993</id>
    </interactant>
    <interactant intactId="EBI-10172181">
        <id>Q53SE7</id>
        <label>FLJ13057</label>
    </interactant>
    <organismsDiffer>false</organismsDiffer>
    <experiments>3</experiments>
</comment>
<comment type="interaction">
    <interactant intactId="EBI-399080">
        <id>Q92993</id>
    </interactant>
    <interactant intactId="EBI-9695448">
        <id>Q9BZS1-1</id>
        <label>FOXP3</label>
    </interactant>
    <organismsDiffer>false</organismsDiffer>
    <experiments>2</experiments>
</comment>
<comment type="interaction">
    <interactant intactId="EBI-399080">
        <id>Q92993</id>
    </interactant>
    <interactant intactId="EBI-25885364">
        <id>Q8IVH2-2</id>
        <label>FOXP4</label>
    </interactant>
    <organismsDiffer>false</organismsDiffer>
    <experiments>3</experiments>
</comment>
<comment type="interaction">
    <interactant intactId="EBI-399080">
        <id>Q92993</id>
    </interactant>
    <interactant intactId="EBI-13213391">
        <id>Q96NE9-2</id>
        <label>FRMD6</label>
    </interactant>
    <organismsDiffer>false</organismsDiffer>
    <experiments>3</experiments>
</comment>
<comment type="interaction">
    <interactant intactId="EBI-399080">
        <id>Q92993</id>
    </interactant>
    <interactant intactId="EBI-21017948">
        <id>O14926</id>
        <label>FSCN2</label>
    </interactant>
    <organismsDiffer>false</organismsDiffer>
    <experiments>3</experiments>
</comment>
<comment type="interaction">
    <interactant intactId="EBI-399080">
        <id>Q92993</id>
    </interactant>
    <interactant intactId="EBI-400434">
        <id>P35637</id>
        <label>FUS</label>
    </interactant>
    <organismsDiffer>false</organismsDiffer>
    <experiments>2</experiments>
</comment>
<comment type="interaction">
    <interactant intactId="EBI-399080">
        <id>Q92993</id>
    </interactant>
    <interactant intactId="EBI-618189">
        <id>Q06547-2</id>
        <label>GABPB1</label>
    </interactant>
    <organismsDiffer>false</organismsDiffer>
    <experiments>3</experiments>
</comment>
<comment type="interaction">
    <interactant intactId="EBI-399080">
        <id>Q92993</id>
    </interactant>
    <interactant intactId="EBI-9088619">
        <id>Q06547-3</id>
        <label>GABPB1</label>
    </interactant>
    <organismsDiffer>false</organismsDiffer>
    <experiments>3</experiments>
</comment>
<comment type="interaction">
    <interactant intactId="EBI-399080">
        <id>Q92993</id>
    </interactant>
    <interactant intactId="EBI-448202">
        <id>O95257</id>
        <label>GADD45G</label>
    </interactant>
    <organismsDiffer>false</organismsDiffer>
    <experiments>2</experiments>
</comment>
<comment type="interaction">
    <interactant intactId="EBI-399080">
        <id>Q92993</id>
    </interactant>
    <interactant intactId="EBI-21558069">
        <id>P19440-3</id>
        <label>GGT1</label>
    </interactant>
    <organismsDiffer>false</organismsDiffer>
    <experiments>3</experiments>
</comment>
<comment type="interaction">
    <interactant intactId="EBI-399080">
        <id>Q92993</id>
    </interactant>
    <interactant intactId="EBI-947774">
        <id>O75420</id>
        <label>GIGYF1</label>
    </interactant>
    <organismsDiffer>false</organismsDiffer>
    <experiments>3</experiments>
</comment>
<comment type="interaction">
    <interactant intactId="EBI-399080">
        <id>Q92993</id>
    </interactant>
    <interactant intactId="EBI-743722">
        <id>Q5VSY0</id>
        <label>GKAP1</label>
    </interactant>
    <organismsDiffer>false</organismsDiffer>
    <experiments>3</experiments>
</comment>
<comment type="interaction">
    <interactant intactId="EBI-399080">
        <id>Q92993</id>
    </interactant>
    <interactant intactId="EBI-2548508">
        <id>Q96IK5</id>
        <label>GMCL1</label>
    </interactant>
    <organismsDiffer>false</organismsDiffer>
    <experiments>5</experiments>
</comment>
<comment type="interaction">
    <interactant intactId="EBI-399080">
        <id>Q92993</id>
    </interactant>
    <interactant intactId="EBI-745707">
        <id>Q8NEA9</id>
        <label>GMCL2</label>
    </interactant>
    <organismsDiffer>false</organismsDiffer>
    <experiments>3</experiments>
</comment>
<comment type="interaction">
    <interactant intactId="EBI-399080">
        <id>Q92993</id>
    </interactant>
    <interactant intactId="EBI-7951023">
        <id>O95837</id>
        <label>GNA14</label>
    </interactant>
    <organismsDiffer>false</organismsDiffer>
    <experiments>3</experiments>
</comment>
<comment type="interaction">
    <interactant intactId="EBI-399080">
        <id>Q92993</id>
    </interactant>
    <interactant intactId="EBI-25902214">
        <id>Q96F32</id>
        <label>GNB5</label>
    </interactant>
    <organismsDiffer>false</organismsDiffer>
    <experiments>3</experiments>
</comment>
<comment type="interaction">
    <interactant intactId="EBI-399080">
        <id>Q92993</id>
    </interactant>
    <interactant intactId="EBI-618309">
        <id>Q08379</id>
        <label>GOLGA2</label>
    </interactant>
    <organismsDiffer>false</organismsDiffer>
    <experiments>3</experiments>
</comment>
<comment type="interaction">
    <interactant intactId="EBI-399080">
        <id>Q92993</id>
    </interactant>
    <interactant intactId="EBI-25884370">
        <id>O43292-2</id>
        <label>GPAA1</label>
    </interactant>
    <organismsDiffer>false</organismsDiffer>
    <experiments>3</experiments>
</comment>
<comment type="interaction">
    <interactant intactId="EBI-399080">
        <id>Q92993</id>
    </interactant>
    <interactant intactId="EBI-11959863">
        <id>Q9NWQ4-1</id>
        <label>GPATCH2L</label>
    </interactant>
    <organismsDiffer>false</organismsDiffer>
    <experiments>3</experiments>
</comment>
<comment type="interaction">
    <interactant intactId="EBI-399080">
        <id>Q92993</id>
    </interactant>
    <interactant intactId="EBI-2853321">
        <id>P29084</id>
        <label>GTF2E2</label>
    </interactant>
    <organismsDiffer>false</organismsDiffer>
    <experiments>3</experiments>
</comment>
<comment type="interaction">
    <interactant intactId="EBI-399080">
        <id>Q92993</id>
    </interactant>
    <interactant intactId="EBI-302023">
        <id>P62805</id>
        <label>H4C9</label>
    </interactant>
    <organismsDiffer>false</organismsDiffer>
    <experiments>4</experiments>
</comment>
<comment type="interaction">
    <interactant intactId="EBI-399080">
        <id>Q92993</id>
    </interactant>
    <interactant intactId="EBI-357001">
        <id>O00165</id>
        <label>HAX1</label>
    </interactant>
    <organismsDiffer>false</organismsDiffer>
    <experiments>3</experiments>
</comment>
<comment type="interaction">
    <interactant intactId="EBI-399080">
        <id>Q92993</id>
    </interactant>
    <interactant intactId="EBI-25858908">
        <id>Q8N7T0</id>
        <label>hCG_1820408</label>
    </interactant>
    <organismsDiffer>false</organismsDiffer>
    <experiments>3</experiments>
</comment>
<comment type="interaction">
    <interactant intactId="EBI-399080">
        <id>Q92993</id>
    </interactant>
    <interactant intactId="EBI-2549423">
        <id>Q6NT76</id>
        <label>HMBOX1</label>
    </interactant>
    <organismsDiffer>false</organismsDiffer>
    <experiments>6</experiments>
</comment>
<comment type="interaction">
    <interactant intactId="EBI-399080">
        <id>Q92993</id>
    </interactant>
    <interactant intactId="EBI-352986">
        <id>P52597</id>
        <label>HNRNPF</label>
    </interactant>
    <organismsDiffer>false</organismsDiffer>
    <experiments>3</experiments>
</comment>
<comment type="interaction">
    <interactant intactId="EBI-399080">
        <id>Q92993</id>
    </interactant>
    <interactant intactId="EBI-11317274">
        <id>Q92826</id>
        <label>HOXB13</label>
    </interactant>
    <organismsDiffer>false</organismsDiffer>
    <experiments>3</experiments>
</comment>
<comment type="interaction">
    <interactant intactId="EBI-399080">
        <id>Q92993</id>
    </interactant>
    <interactant intactId="EBI-3923226">
        <id>P09017</id>
        <label>HOXC4</label>
    </interactant>
    <organismsDiffer>false</organismsDiffer>
    <experiments>3</experiments>
</comment>
<comment type="interaction">
    <interactant intactId="EBI-399080">
        <id>Q92993</id>
    </interactant>
    <interactant intactId="EBI-10223348">
        <id>Q03933-2</id>
        <label>HSF2</label>
    </interactant>
    <organismsDiffer>false</organismsDiffer>
    <experiments>3</experiments>
</comment>
<comment type="interaction">
    <interactant intactId="EBI-399080">
        <id>Q92993</id>
    </interactant>
    <interactant intactId="EBI-7116203">
        <id>O75031</id>
        <label>HSF2BP</label>
    </interactant>
    <organismsDiffer>false</organismsDiffer>
    <experiments>3</experiments>
</comment>
<comment type="interaction">
    <interactant intactId="EBI-399080">
        <id>Q92993</id>
    </interactant>
    <interactant intactId="EBI-466029">
        <id>P42858</id>
        <label>HTT</label>
    </interactant>
    <organismsDiffer>false</organismsDiffer>
    <experiments>15</experiments>
</comment>
<comment type="interaction">
    <interactant intactId="EBI-399080">
        <id>Q92993</id>
    </interactant>
    <interactant intactId="EBI-713450">
        <id>Q02363</id>
        <label>ID2</label>
    </interactant>
    <organismsDiffer>false</organismsDiffer>
    <experiments>3</experiments>
</comment>
<comment type="interaction">
    <interactant intactId="EBI-399080">
        <id>Q92993</id>
    </interactant>
    <interactant intactId="EBI-1387094">
        <id>Q02535</id>
        <label>ID3</label>
    </interactant>
    <organismsDiffer>false</organismsDiffer>
    <experiments>3</experiments>
</comment>
<comment type="interaction">
    <interactant intactId="EBI-399080">
        <id>Q92993</id>
    </interactant>
    <interactant intactId="EBI-9091197">
        <id>Q8IY31-3</id>
        <label>IFT20</label>
    </interactant>
    <organismsDiffer>false</organismsDiffer>
    <experiments>3</experiments>
</comment>
<comment type="interaction">
    <interactant intactId="EBI-399080">
        <id>Q92993</id>
    </interactant>
    <interactant intactId="EBI-11944538">
        <id>Q96FT9-2</id>
        <label>IFT43</label>
    </interactant>
    <organismsDiffer>false</organismsDiffer>
    <experiments>3</experiments>
</comment>
<comment type="interaction">
    <interactant intactId="EBI-399080">
        <id>Q92993</id>
    </interactant>
    <interactant intactId="EBI-1055954">
        <id>P78318</id>
        <label>IGBP1</label>
    </interactant>
    <organismsDiffer>false</organismsDiffer>
    <experiments>3</experiments>
</comment>
<comment type="interaction">
    <interactant intactId="EBI-399080">
        <id>Q92993</id>
    </interactant>
    <interactant intactId="EBI-715709">
        <id>P17936</id>
        <label>IGFBP3</label>
    </interactant>
    <organismsDiffer>false</organismsDiffer>
    <experiments>3</experiments>
</comment>
<comment type="interaction">
    <interactant intactId="EBI-399080">
        <id>Q92993</id>
    </interactant>
    <interactant intactId="EBI-747204">
        <id>Q9UKT9</id>
        <label>IKZF3</label>
    </interactant>
    <organismsDiffer>false</organismsDiffer>
    <experiments>6</experiments>
</comment>
<comment type="interaction">
    <interactant intactId="EBI-399080">
        <id>Q92993</id>
    </interactant>
    <interactant intactId="EBI-1757512">
        <id>P26951</id>
        <label>IL3RA</label>
    </interactant>
    <organismsDiffer>false</organismsDiffer>
    <experiments>3</experiments>
</comment>
<comment type="interaction">
    <interactant intactId="EBI-399080">
        <id>Q92993</id>
    </interactant>
    <interactant intactId="EBI-743960">
        <id>Q8N5Z5</id>
        <label>KCTD17</label>
    </interactant>
    <organismsDiffer>false</organismsDiffer>
    <experiments>3</experiments>
</comment>
<comment type="interaction">
    <interactant intactId="EBI-399080">
        <id>Q92993</id>
    </interactant>
    <interactant intactId="EBI-11954971">
        <id>Q96MP8-2</id>
        <label>KCTD7</label>
    </interactant>
    <organismsDiffer>false</organismsDiffer>
    <experiments>3</experiments>
</comment>
<comment type="interaction">
    <interactant intactId="EBI-399080">
        <id>Q92993</id>
    </interactant>
    <interactant intactId="EBI-750750">
        <id>Q9Y4X4</id>
        <label>KLF12</label>
    </interactant>
    <organismsDiffer>false</organismsDiffer>
    <experiments>3</experiments>
</comment>
<comment type="interaction">
    <interactant intactId="EBI-399080">
        <id>Q92993</id>
    </interactant>
    <interactant intactId="EBI-358297">
        <id>O00505</id>
        <label>KPNA3</label>
    </interactant>
    <organismsDiffer>false</organismsDiffer>
    <experiments>3</experiments>
</comment>
<comment type="interaction">
    <interactant intactId="EBI-399080">
        <id>Q92993</id>
    </interactant>
    <interactant intactId="EBI-396343">
        <id>O00629</id>
        <label>KPNA4</label>
    </interactant>
    <organismsDiffer>false</organismsDiffer>
    <experiments>3</experiments>
</comment>
<comment type="interaction">
    <interactant intactId="EBI-399080">
        <id>Q92993</id>
    </interactant>
    <interactant intactId="EBI-540602">
        <id>O15131</id>
        <label>KPNA5</label>
    </interactant>
    <organismsDiffer>false</organismsDiffer>
    <experiments>3</experiments>
</comment>
<comment type="interaction">
    <interactant intactId="EBI-399080">
        <id>Q92993</id>
    </interactant>
    <interactant intactId="EBI-359923">
        <id>O60684</id>
        <label>KPNA6</label>
    </interactant>
    <organismsDiffer>false</organismsDiffer>
    <experiments>3</experiments>
</comment>
<comment type="interaction">
    <interactant intactId="EBI-399080">
        <id>Q92993</id>
    </interactant>
    <interactant intactId="EBI-12893625">
        <id>Q5JUW0-3</id>
        <label>KRBOX4</label>
    </interactant>
    <organismsDiffer>false</organismsDiffer>
    <experiments>3</experiments>
</comment>
<comment type="interaction">
    <interactant intactId="EBI-399080">
        <id>Q92993</id>
    </interactant>
    <interactant intactId="EBI-10171697">
        <id>Q6A162</id>
        <label>KRT40</label>
    </interactant>
    <organismsDiffer>false</organismsDiffer>
    <experiments>3</experiments>
</comment>
<comment type="interaction">
    <interactant intactId="EBI-399080">
        <id>Q92993</id>
    </interactant>
    <interactant intactId="EBI-10172052">
        <id>P60411</id>
        <label>KRTAP10-9</label>
    </interactant>
    <organismsDiffer>false</organismsDiffer>
    <experiments>3</experiments>
</comment>
<comment type="interaction">
    <interactant intactId="EBI-399080">
        <id>Q92993</id>
    </interactant>
    <interactant intactId="EBI-9996449">
        <id>Q9BYR8</id>
        <label>KRTAP3-1</label>
    </interactant>
    <organismsDiffer>false</organismsDiffer>
    <experiments>3</experiments>
</comment>
<comment type="interaction">
    <interactant intactId="EBI-399080">
        <id>Q92993</id>
    </interactant>
    <interactant intactId="EBI-25835523">
        <id>Q9H2C1</id>
        <label>LHX5</label>
    </interactant>
    <organismsDiffer>false</organismsDiffer>
    <experiments>3</experiments>
</comment>
<comment type="interaction">
    <interactant intactId="EBI-399080">
        <id>Q92993</id>
    </interactant>
    <interactant intactId="EBI-727376">
        <id>Q9Y234</id>
        <label>LIPT1</label>
    </interactant>
    <organismsDiffer>false</organismsDiffer>
    <experiments>3</experiments>
</comment>
<comment type="interaction">
    <interactant intactId="EBI-399080">
        <id>Q92993</id>
    </interactant>
    <interactant intactId="EBI-2341787">
        <id>Q17RB8</id>
        <label>LONRF1</label>
    </interactant>
    <organismsDiffer>false</organismsDiffer>
    <experiments>3</experiments>
</comment>
<comment type="interaction">
    <interactant intactId="EBI-399080">
        <id>Q92993</id>
    </interactant>
    <interactant intactId="EBI-725780">
        <id>P51884</id>
        <label>LUM</label>
    </interactant>
    <organismsDiffer>false</organismsDiffer>
    <experiments>3</experiments>
</comment>
<comment type="interaction">
    <interactant intactId="EBI-399080">
        <id>Q92993</id>
    </interactant>
    <interactant intactId="EBI-1216080">
        <id>Q9Y250</id>
        <label>LZTS1</label>
    </interactant>
    <organismsDiffer>false</organismsDiffer>
    <experiments>3</experiments>
</comment>
<comment type="interaction">
    <interactant intactId="EBI-399080">
        <id>Q92993</id>
    </interactant>
    <interactant intactId="EBI-741037">
        <id>Q9BRK4</id>
        <label>LZTS2</label>
    </interactant>
    <organismsDiffer>false</organismsDiffer>
    <experiments>6</experiments>
</comment>
<comment type="interaction">
    <interactant intactId="EBI-399080">
        <id>Q92993</id>
    </interactant>
    <interactant intactId="EBI-2350695">
        <id>Q96GV9</id>
        <label>MACIR</label>
    </interactant>
    <organismsDiffer>false</organismsDiffer>
    <experiments>3</experiments>
</comment>
<comment type="interaction">
    <interactant intactId="EBI-399080">
        <id>Q92993</id>
    </interactant>
    <interactant intactId="EBI-473834">
        <id>Q9H213</id>
        <label>MAGEH1</label>
    </interactant>
    <organismsDiffer>false</organismsDiffer>
    <experiments>3</experiments>
</comment>
<comment type="interaction">
    <interactant intactId="EBI-399080">
        <id>Q92993</id>
    </interactant>
    <interactant intactId="EBI-3951604">
        <id>P80192</id>
        <label>MAP3K9</label>
    </interactant>
    <organismsDiffer>false</organismsDiffer>
    <experiments>3</experiments>
</comment>
<comment type="interaction">
    <interactant intactId="EBI-399080">
        <id>Q92993</id>
    </interactant>
    <interactant intactId="EBI-298304">
        <id>Q15759</id>
        <label>MAPK11</label>
    </interactant>
    <organismsDiffer>false</organismsDiffer>
    <experiments>3</experiments>
</comment>
<comment type="interaction">
    <interactant intactId="EBI-399080">
        <id>Q92993</id>
    </interactant>
    <interactant intactId="EBI-307531">
        <id>P23508</id>
        <label>MCC</label>
    </interactant>
    <organismsDiffer>false</organismsDiffer>
    <experiments>3</experiments>
</comment>
<comment type="interaction">
    <interactant intactId="EBI-399080">
        <id>Q92993</id>
    </interactant>
    <interactant intactId="EBI-724076">
        <id>Q99750</id>
        <label>MDFI</label>
    </interactant>
    <organismsDiffer>false</organismsDiffer>
    <experiments>3</experiments>
</comment>
<comment type="interaction">
    <interactant intactId="EBI-399080">
        <id>Q92993</id>
    </interactant>
    <interactant intactId="EBI-13288755">
        <id>A0JLT2-2</id>
        <label>MED19</label>
    </interactant>
    <organismsDiffer>false</organismsDiffer>
    <experiments>3</experiments>
</comment>
<comment type="interaction">
    <interactant intactId="EBI-399080">
        <id>Q92993</id>
    </interactant>
    <interactant intactId="EBI-748397">
        <id>P50222</id>
        <label>MEOX2</label>
    </interactant>
    <organismsDiffer>false</organismsDiffer>
    <experiments>3</experiments>
</comment>
<comment type="interaction">
    <interactant intactId="EBI-399080">
        <id>Q92993</id>
    </interactant>
    <interactant intactId="EBI-2829677">
        <id>P41218</id>
        <label>MNDA</label>
    </interactant>
    <organismsDiffer>false</organismsDiffer>
    <experiments>3</experiments>
</comment>
<comment type="interaction">
    <interactant intactId="EBI-399080">
        <id>Q92993</id>
    </interactant>
    <interactant intactId="EBI-11109389">
        <id>Q8N983-3</id>
        <label>MRPL43</label>
    </interactant>
    <organismsDiffer>false</organismsDiffer>
    <experiments>3</experiments>
</comment>
<comment type="interaction">
    <interactant intactId="EBI-399080">
        <id>Q92993</id>
    </interactant>
    <interactant intactId="EBI-742948">
        <id>Q5JR59</id>
        <label>MTUS2</label>
    </interactant>
    <organismsDiffer>false</organismsDiffer>
    <experiments>3</experiments>
</comment>
<comment type="interaction">
    <interactant intactId="EBI-399080">
        <id>Q92993</id>
    </interactant>
    <interactant intactId="EBI-11522433">
        <id>Q5JR59-3</id>
        <label>MTUS2</label>
    </interactant>
    <organismsDiffer>false</organismsDiffer>
    <experiments>4</experiments>
</comment>
<comment type="interaction">
    <interactant intactId="EBI-399080">
        <id>Q92993</id>
    </interactant>
    <interactant intactId="EBI-746417">
        <id>Q16718</id>
        <label>NDUFA5</label>
    </interactant>
    <organismsDiffer>false</organismsDiffer>
    <experiments>3</experiments>
</comment>
<comment type="interaction">
    <interactant intactId="EBI-399080">
        <id>Q92993</id>
    </interactant>
    <interactant intactId="EBI-748312">
        <id>P49821</id>
        <label>NDUFV1</label>
    </interactant>
    <organismsDiffer>false</organismsDiffer>
    <experiments>3</experiments>
</comment>
<comment type="interaction">
    <interactant intactId="EBI-399080">
        <id>Q92993</id>
    </interactant>
    <interactant intactId="EBI-719716">
        <id>Q9Y2I6</id>
        <label>NINL</label>
    </interactant>
    <organismsDiffer>false</organismsDiffer>
    <experiments>3</experiments>
</comment>
<comment type="interaction">
    <interactant intactId="EBI-399080">
        <id>Q92993</id>
    </interactant>
    <interactant intactId="EBI-7445625">
        <id>Q9HC29</id>
        <label>NOD2</label>
    </interactant>
    <organismsDiffer>false</organismsDiffer>
    <experiments>2</experiments>
</comment>
<comment type="interaction">
    <interactant intactId="EBI-399080">
        <id>Q92993</id>
    </interactant>
    <interactant intactId="EBI-1044287">
        <id>P11926</id>
        <label>ODC1</label>
    </interactant>
    <organismsDiffer>false</organismsDiffer>
    <experiments>6</experiments>
</comment>
<comment type="interaction">
    <interactant intactId="EBI-399080">
        <id>Q92993</id>
    </interactant>
    <interactant intactId="EBI-9978021">
        <id>Q2M1J6</id>
        <label>OXA1L</label>
    </interactant>
    <organismsDiffer>false</organismsDiffer>
    <experiments>3</experiments>
</comment>
<comment type="interaction">
    <interactant intactId="EBI-399080">
        <id>Q92993</id>
    </interactant>
    <interactant intactId="EBI-359462">
        <id>Q16342</id>
        <label>PDCD2</label>
    </interactant>
    <organismsDiffer>false</organismsDiffer>
    <experiments>3</experiments>
</comment>
<comment type="interaction">
    <interactant intactId="EBI-399080">
        <id>Q92993</id>
    </interactant>
    <interactant intactId="EBI-1043580">
        <id>Q9BRX2</id>
        <label>PELO</label>
    </interactant>
    <organismsDiffer>false</organismsDiffer>
    <experiments>3</experiments>
</comment>
<comment type="interaction">
    <interactant intactId="EBI-399080">
        <id>Q92993</id>
    </interactant>
    <interactant intactId="EBI-713786">
        <id>Q8IXK0</id>
        <label>PHC2</label>
    </interactant>
    <organismsDiffer>false</organismsDiffer>
    <experiments>3</experiments>
</comment>
<comment type="interaction">
    <interactant intactId="EBI-399080">
        <id>Q92993</id>
    </interactant>
    <interactant intactId="EBI-2803703">
        <id>Q9Y6X2</id>
        <label>PIAS3</label>
    </interactant>
    <organismsDiffer>false</organismsDiffer>
    <experiments>3</experiments>
</comment>
<comment type="interaction">
    <interactant intactId="EBI-399080">
        <id>Q92993</id>
    </interactant>
    <interactant intactId="EBI-79165">
        <id>Q9NRD5</id>
        <label>PICK1</label>
    </interactant>
    <organismsDiffer>false</organismsDiffer>
    <experiments>3</experiments>
</comment>
<comment type="interaction">
    <interactant intactId="EBI-399080">
        <id>Q92993</id>
    </interactant>
    <interactant intactId="EBI-6164623">
        <id>Q86T03</id>
        <label>PIP4P1</label>
    </interactant>
    <organismsDiffer>false</organismsDiffer>
    <experiments>3</experiments>
</comment>
<comment type="interaction">
    <interactant intactId="EBI-399080">
        <id>Q92993</id>
    </interactant>
    <interactant intactId="EBI-10694821">
        <id>Q6P1J6-2</id>
        <label>PLB1</label>
    </interactant>
    <organismsDiffer>false</organismsDiffer>
    <experiments>3</experiments>
</comment>
<comment type="interaction">
    <interactant intactId="EBI-399080">
        <id>Q92993</id>
    </interactant>
    <interactant intactId="EBI-50433196">
        <id>A0A6Q8PF08</id>
        <label>PMP22</label>
    </interactant>
    <organismsDiffer>false</organismsDiffer>
    <experiments>3</experiments>
</comment>
<comment type="interaction">
    <interactant intactId="EBI-399080">
        <id>Q92993</id>
    </interactant>
    <interactant intactId="EBI-741774">
        <id>Q9UNA4</id>
        <label>POLI</label>
    </interactant>
    <organismsDiffer>false</organismsDiffer>
    <experiments>3</experiments>
</comment>
<comment type="interaction">
    <interactant intactId="EBI-399080">
        <id>Q92993</id>
    </interactant>
    <interactant intactId="EBI-710402">
        <id>Q96I34</id>
        <label>PPP1R16A</label>
    </interactant>
    <organismsDiffer>false</organismsDiffer>
    <experiments>3</experiments>
</comment>
<comment type="interaction">
    <interactant intactId="EBI-399080">
        <id>Q92993</id>
    </interactant>
    <interactant intactId="EBI-11320284">
        <id>Q9NQX0</id>
        <label>PRDM6</label>
    </interactant>
    <organismsDiffer>false</organismsDiffer>
    <experiments>3</experiments>
</comment>
<comment type="interaction">
    <interactant intactId="EBI-399080">
        <id>Q92993</id>
    </interactant>
    <interactant intactId="EBI-2803380">
        <id>P07225</id>
        <label>PROS1</label>
    </interactant>
    <organismsDiffer>false</organismsDiffer>
    <experiments>3</experiments>
</comment>
<comment type="interaction">
    <interactant intactId="EBI-399080">
        <id>Q92993</id>
    </interactant>
    <interactant intactId="EBI-13089670">
        <id>Q86WR7-2</id>
        <label>PROSER2</label>
    </interactant>
    <organismsDiffer>false</organismsDiffer>
    <experiments>3</experiments>
</comment>
<comment type="interaction">
    <interactant intactId="EBI-399080">
        <id>Q92993</id>
    </interactant>
    <interactant intactId="EBI-710431">
        <id>P29074</id>
        <label>PTPN4</label>
    </interactant>
    <organismsDiffer>false</organismsDiffer>
    <experiments>2</experiments>
</comment>
<comment type="interaction">
    <interactant intactId="EBI-399080">
        <id>Q92993</id>
    </interactant>
    <interactant intactId="EBI-25885259">
        <id>Q3YEC7-3</id>
        <label>RABL6</label>
    </interactant>
    <organismsDiffer>false</organismsDiffer>
    <experiments>3</experiments>
</comment>
<comment type="interaction">
    <interactant intactId="EBI-399080">
        <id>Q92993</id>
    </interactant>
    <interactant intactId="EBI-2117080">
        <id>Q96I51</id>
        <label>RCC1L</label>
    </interactant>
    <organismsDiffer>false</organismsDiffer>
    <experiments>3</experiments>
</comment>
<comment type="interaction">
    <interactant intactId="EBI-399080">
        <id>Q92993</id>
    </interactant>
    <interactant intactId="EBI-6426999">
        <id>O94844</id>
        <label>RHOBTB1</label>
    </interactant>
    <organismsDiffer>false</organismsDiffer>
    <experiments>3</experiments>
</comment>
<comment type="interaction">
    <interactant intactId="EBI-399080">
        <id>Q92993</id>
    </interactant>
    <interactant intactId="EBI-3909436">
        <id>Q9UJD0</id>
        <label>RIMS3</label>
    </interactant>
    <organismsDiffer>false</organismsDiffer>
    <experiments>3</experiments>
</comment>
<comment type="interaction">
    <interactant intactId="EBI-399080">
        <id>Q92993</id>
    </interactant>
    <interactant intactId="EBI-25884400">
        <id>Q9NWS8-3</id>
        <label>RMND1</label>
    </interactant>
    <organismsDiffer>false</organismsDiffer>
    <experiments>3</experiments>
</comment>
<comment type="interaction">
    <interactant intactId="EBI-399080">
        <id>Q92993</id>
    </interactant>
    <interactant intactId="EBI-723587">
        <id>Q9Y508</id>
        <label>RNF114</label>
    </interactant>
    <organismsDiffer>false</organismsDiffer>
    <experiments>3</experiments>
</comment>
<comment type="interaction">
    <interactant intactId="EBI-399080">
        <id>Q92993</id>
    </interactant>
    <interactant intactId="EBI-36513929">
        <id>Q9ULK6-3</id>
        <label>RNF150</label>
    </interactant>
    <organismsDiffer>false</organismsDiffer>
    <experiments>3</experiments>
</comment>
<comment type="interaction">
    <interactant intactId="EBI-399080">
        <id>Q92993</id>
    </interactant>
    <interactant intactId="EBI-11027771">
        <id>P62913-2</id>
        <label>RPL11</label>
    </interactant>
    <organismsDiffer>false</organismsDiffer>
    <experiments>3</experiments>
</comment>
<comment type="interaction">
    <interactant intactId="EBI-399080">
        <id>Q92993</id>
    </interactant>
    <interactant intactId="EBI-353383">
        <id>P18077</id>
        <label>RPL35A</label>
    </interactant>
    <organismsDiffer>false</organismsDiffer>
    <experiments>3</experiments>
</comment>
<comment type="interaction">
    <interactant intactId="EBI-399080">
        <id>Q92993</id>
    </interactant>
    <interactant intactId="EBI-353675">
        <id>Q9Y265</id>
        <label>RUVBL1</label>
    </interactant>
    <organismsDiffer>false</organismsDiffer>
    <experiments>9</experiments>
</comment>
<comment type="interaction">
    <interactant intactId="EBI-399080">
        <id>Q92993</id>
    </interactant>
    <interactant intactId="EBI-11306862">
        <id>Q96FV2</id>
        <label>SCRN2</label>
    </interactant>
    <organismsDiffer>false</organismsDiffer>
    <experiments>3</experiments>
</comment>
<comment type="interaction">
    <interactant intactId="EBI-399080">
        <id>Q92993</id>
    </interactant>
    <interactant intactId="EBI-1224539">
        <id>Q99643</id>
        <label>SDHC</label>
    </interactant>
    <organismsDiffer>false</organismsDiffer>
    <experiments>3</experiments>
</comment>
<comment type="interaction">
    <interactant intactId="EBI-399080">
        <id>Q92993</id>
    </interactant>
    <interactant intactId="EBI-745901">
        <id>Q14141</id>
        <label>SEPTIN6</label>
    </interactant>
    <organismsDiffer>false</organismsDiffer>
    <experiments>3</experiments>
</comment>
<comment type="interaction">
    <interactant intactId="EBI-399080">
        <id>Q92993</id>
    </interactant>
    <interactant intactId="EBI-2822051">
        <id>Q14140</id>
        <label>SERTAD2</label>
    </interactant>
    <organismsDiffer>false</organismsDiffer>
    <experiments>3</experiments>
</comment>
<comment type="interaction">
    <interactant intactId="EBI-399080">
        <id>Q92993</id>
    </interactant>
    <interactant intactId="EBI-7481343">
        <id>Q01105-2</id>
        <label>SET</label>
    </interactant>
    <organismsDiffer>false</organismsDiffer>
    <experiments>3</experiments>
</comment>
<comment type="interaction">
    <interactant intactId="EBI-399080">
        <id>Q92993</id>
    </interactant>
    <interactant intactId="EBI-12037847">
        <id>Q6ZSJ9</id>
        <label>SHISA6</label>
    </interactant>
    <organismsDiffer>false</organismsDiffer>
    <experiments>3</experiments>
</comment>
<comment type="interaction">
    <interactant intactId="EBI-399080">
        <id>Q92993</id>
    </interactant>
    <interactant intactId="EBI-632715">
        <id>Q13573</id>
        <label>SNW1</label>
    </interactant>
    <organismsDiffer>false</organismsDiffer>
    <experiments>3</experiments>
</comment>
<comment type="interaction">
    <interactant intactId="EBI-399080">
        <id>Q92993</id>
    </interactant>
    <interactant intactId="EBI-10329478">
        <id>Q9Y5X0</id>
        <label>SNX10</label>
    </interactant>
    <organismsDiffer>false</organismsDiffer>
    <experiments>3</experiments>
</comment>
<comment type="interaction">
    <interactant intactId="EBI-399080">
        <id>Q92993</id>
    </interactant>
    <interactant intactId="EBI-2481535">
        <id>Q8WV41</id>
        <label>SNX33</label>
    </interactant>
    <organismsDiffer>false</organismsDiffer>
    <experiments>3</experiments>
</comment>
<comment type="interaction">
    <interactant intactId="EBI-399080">
        <id>Q92993</id>
    </interactant>
    <interactant intactId="EBI-1171329">
        <id>Q92673</id>
        <label>SORL1</label>
    </interactant>
    <organismsDiffer>false</organismsDiffer>
    <experiments>3</experiments>
</comment>
<comment type="interaction">
    <interactant intactId="EBI-399080">
        <id>Q92993</id>
    </interactant>
    <interactant intactId="EBI-1167533">
        <id>P56693</id>
        <label>SOX10</label>
    </interactant>
    <organismsDiffer>false</organismsDiffer>
    <experiments>3</experiments>
</comment>
<comment type="interaction">
    <interactant intactId="EBI-399080">
        <id>Q92993</id>
    </interactant>
    <interactant intactId="EBI-3505701">
        <id>P35711</id>
        <label>SOX5</label>
    </interactant>
    <organismsDiffer>false</organismsDiffer>
    <experiments>3</experiments>
</comment>
<comment type="interaction">
    <interactant intactId="EBI-399080">
        <id>Q92993</id>
    </interactant>
    <interactant intactId="EBI-744066">
        <id>Q9UM82</id>
        <label>SPATA2</label>
    </interactant>
    <organismsDiffer>false</organismsDiffer>
    <experiments>3</experiments>
</comment>
<comment type="interaction">
    <interactant intactId="EBI-399080">
        <id>Q92993</id>
    </interactant>
    <interactant intactId="EBI-5235340">
        <id>Q7Z699</id>
        <label>SPRED1</label>
    </interactant>
    <organismsDiffer>false</organismsDiffer>
    <experiments>3</experiments>
</comment>
<comment type="interaction">
    <interactant intactId="EBI-399080">
        <id>Q92993</id>
    </interactant>
    <interactant intactId="EBI-627047">
        <id>Q01130</id>
        <label>SRSF2</label>
    </interactant>
    <organismsDiffer>false</organismsDiffer>
    <experiments>3</experiments>
</comment>
<comment type="interaction">
    <interactant intactId="EBI-399080">
        <id>Q92993</id>
    </interactant>
    <interactant intactId="EBI-2212028">
        <id>Q9Y2D8</id>
        <label>SSX2IP</label>
    </interactant>
    <organismsDiffer>false</organismsDiffer>
    <experiments>3</experiments>
</comment>
<comment type="interaction">
    <interactant intactId="EBI-399080">
        <id>Q92993</id>
    </interactant>
    <interactant intactId="EBI-448878">
        <id>Q13586</id>
        <label>STIM1</label>
    </interactant>
    <organismsDiffer>false</organismsDiffer>
    <experiments>3</experiments>
</comment>
<comment type="interaction">
    <interactant intactId="EBI-399080">
        <id>Q92993</id>
    </interactant>
    <interactant intactId="EBI-725557">
        <id>Q9NZ72</id>
        <label>STMN3</label>
    </interactant>
    <organismsDiffer>false</organismsDiffer>
    <experiments>3</experiments>
</comment>
<comment type="interaction">
    <interactant intactId="EBI-399080">
        <id>Q92993</id>
    </interactant>
    <interactant intactId="EBI-1053876">
        <id>Q13033-2</id>
        <label>STRN3</label>
    </interactant>
    <organismsDiffer>false</organismsDiffer>
    <experiments>3</experiments>
</comment>
<comment type="interaction">
    <interactant intactId="EBI-399080">
        <id>Q92993</id>
    </interactant>
    <interactant intactId="EBI-714135">
        <id>O75558</id>
        <label>STX11</label>
    </interactant>
    <organismsDiffer>false</organismsDiffer>
    <experiments>6</experiments>
</comment>
<comment type="interaction">
    <interactant intactId="EBI-399080">
        <id>Q92993</id>
    </interactant>
    <interactant intactId="EBI-6872807">
        <id>Q8N0S2</id>
        <label>SYCE1</label>
    </interactant>
    <organismsDiffer>false</organismsDiffer>
    <experiments>3</experiments>
</comment>
<comment type="interaction">
    <interactant intactId="EBI-399080">
        <id>Q92993</id>
    </interactant>
    <interactant intactId="EBI-11321949">
        <id>O43761</id>
        <label>SYNGR3</label>
    </interactant>
    <organismsDiffer>false</organismsDiffer>
    <experiments>3</experiments>
</comment>
<comment type="interaction">
    <interactant intactId="EBI-399080">
        <id>Q92993</id>
    </interactant>
    <interactant intactId="EBI-2255091">
        <id>Q92804</id>
        <label>TAF15</label>
    </interactant>
    <organismsDiffer>false</organismsDiffer>
    <experiments>2</experiments>
</comment>
<comment type="interaction">
    <interactant intactId="EBI-399080">
        <id>Q92993</id>
    </interactant>
    <interactant intactId="EBI-529518">
        <id>Q86VP1</id>
        <label>TAX1BP1</label>
    </interactant>
    <organismsDiffer>false</organismsDiffer>
    <experiments>3</experiments>
</comment>
<comment type="interaction">
    <interactant intactId="EBI-399080">
        <id>Q92993</id>
    </interactant>
    <interactant intactId="EBI-533224">
        <id>P15884</id>
        <label>TCF4</label>
    </interactant>
    <organismsDiffer>false</organismsDiffer>
    <experiments>3</experiments>
</comment>
<comment type="interaction">
    <interactant intactId="EBI-399080">
        <id>Q92993</id>
    </interactant>
    <interactant intactId="EBI-725275">
        <id>Q92481</id>
        <label>TFAP2B</label>
    </interactant>
    <organismsDiffer>false</organismsDiffer>
    <experiments>3</experiments>
</comment>
<comment type="interaction">
    <interactant intactId="EBI-399080">
        <id>Q92993</id>
    </interactant>
    <interactant intactId="EBI-1105213">
        <id>Q9UBB9</id>
        <label>TFIP11</label>
    </interactant>
    <organismsDiffer>false</organismsDiffer>
    <experiments>3</experiments>
</comment>
<comment type="interaction">
    <interactant intactId="EBI-399080">
        <id>Q92993</id>
    </interactant>
    <interactant intactId="EBI-712550">
        <id>P04183</id>
        <label>TK1</label>
    </interactant>
    <organismsDiffer>false</organismsDiffer>
    <experiments>3</experiments>
</comment>
<comment type="interaction">
    <interactant intactId="EBI-399080">
        <id>Q92993</id>
    </interactant>
    <interactant intactId="EBI-2821479">
        <id>Q3YBM2</id>
        <label>TMEM176B</label>
    </interactant>
    <organismsDiffer>false</organismsDiffer>
    <experiments>3</experiments>
</comment>
<comment type="interaction">
    <interactant intactId="EBI-399080">
        <id>Q92993</id>
    </interactant>
    <interactant intactId="EBI-3922833">
        <id>Q969K7</id>
        <label>TMEM54</label>
    </interactant>
    <organismsDiffer>false</organismsDiffer>
    <experiments>3</experiments>
</comment>
<comment type="interaction">
    <interactant intactId="EBI-399080">
        <id>Q92993</id>
    </interactant>
    <interactant intactId="EBI-1390168">
        <id>Q9H8H3</id>
        <label>TMT1A</label>
    </interactant>
    <organismsDiffer>false</organismsDiffer>
    <experiments>3</experiments>
</comment>
<comment type="interaction">
    <interactant intactId="EBI-399080">
        <id>Q92993</id>
    </interactant>
    <interactant intactId="EBI-25847109">
        <id>O14656-2</id>
        <label>TOR1A</label>
    </interactant>
    <organismsDiffer>false</organismsDiffer>
    <experiments>3</experiments>
</comment>
<comment type="interaction">
    <interactant intactId="EBI-399080">
        <id>Q92993</id>
    </interactant>
    <interactant intactId="EBI-366083">
        <id>P04637</id>
        <label>TP53</label>
    </interactant>
    <organismsDiffer>false</organismsDiffer>
    <experiments>3</experiments>
</comment>
<comment type="interaction">
    <interactant intactId="EBI-399080">
        <id>Q92993</id>
    </interactant>
    <interactant intactId="EBI-740098">
        <id>P36406</id>
        <label>TRIM23</label>
    </interactant>
    <organismsDiffer>false</organismsDiffer>
    <experiments>3</experiments>
</comment>
<comment type="interaction">
    <interactant intactId="EBI-399080">
        <id>Q92993</id>
    </interactant>
    <interactant intactId="EBI-719493">
        <id>P14373</id>
        <label>TRIM27</label>
    </interactant>
    <organismsDiffer>false</organismsDiffer>
    <experiments>3</experiments>
</comment>
<comment type="interaction">
    <interactant intactId="EBI-399080">
        <id>Q92993</id>
    </interactant>
    <interactant intactId="EBI-741602">
        <id>O94972</id>
        <label>TRIM37</label>
    </interactant>
    <organismsDiffer>false</organismsDiffer>
    <experiments>3</experiments>
</comment>
<comment type="interaction">
    <interactant intactId="EBI-399080">
        <id>Q92993</id>
    </interactant>
    <interactant intactId="EBI-934061">
        <id>Q9UJA5</id>
        <label>TRMT6</label>
    </interactant>
    <organismsDiffer>false</organismsDiffer>
    <experiments>3</experiments>
</comment>
<comment type="interaction">
    <interactant intactId="EBI-399080">
        <id>Q92993</id>
    </interactant>
    <interactant intactId="EBI-21353855">
        <id>Q99598</id>
        <label>TSNAX</label>
    </interactant>
    <organismsDiffer>false</organismsDiffer>
    <experiments>3</experiments>
</comment>
<comment type="interaction">
    <interactant intactId="EBI-399080">
        <id>Q92993</id>
    </interactant>
    <interactant intactId="EBI-2557363">
        <id>Q9NNX1</id>
        <label>TUFT1</label>
    </interactant>
    <organismsDiffer>false</organismsDiffer>
    <experiments>3</experiments>
</comment>
<comment type="interaction">
    <interactant intactId="EBI-399080">
        <id>Q92993</id>
    </interactant>
    <interactant intactId="EBI-1797287">
        <id>Q15672</id>
        <label>TWIST1</label>
    </interactant>
    <organismsDiffer>false</organismsDiffer>
    <experiments>2</experiments>
</comment>
<comment type="interaction">
    <interactant intactId="EBI-399080">
        <id>Q92993</id>
    </interactant>
    <interactant intactId="EBI-1380492">
        <id>Q8TF42</id>
        <label>UBASH3B</label>
    </interactant>
    <organismsDiffer>false</organismsDiffer>
    <experiments>3</experiments>
</comment>
<comment type="interaction">
    <interactant intactId="EBI-399080">
        <id>Q92993</id>
    </interactant>
    <interactant intactId="EBI-347677">
        <id>P62837</id>
        <label>UBE2D2</label>
    </interactant>
    <organismsDiffer>false</organismsDiffer>
    <experiments>3</experiments>
</comment>
<comment type="interaction">
    <interactant intactId="EBI-399080">
        <id>Q92993</id>
    </interactant>
    <interactant intactId="EBI-742943">
        <id>Q96BW1</id>
        <label>UPRT</label>
    </interactant>
    <organismsDiffer>false</organismsDiffer>
    <experiments>3</experiments>
</comment>
<comment type="interaction">
    <interactant intactId="EBI-399080">
        <id>Q92993</id>
    </interactant>
    <interactant intactId="EBI-2512509">
        <id>Q8NB14</id>
        <label>USP38</label>
    </interactant>
    <organismsDiffer>false</organismsDiffer>
    <experiments>3</experiments>
</comment>
<comment type="interaction">
    <interactant intactId="EBI-399080">
        <id>Q92993</id>
    </interactant>
    <interactant intactId="EBI-722343">
        <id>Q15836</id>
        <label>VAMP3</label>
    </interactant>
    <organismsDiffer>false</organismsDiffer>
    <experiments>3</experiments>
</comment>
<comment type="interaction">
    <interactant intactId="EBI-399080">
        <id>Q92993</id>
    </interactant>
    <interactant intactId="EBI-21494555">
        <id>O95498</id>
        <label>VNN2</label>
    </interactant>
    <organismsDiffer>false</organismsDiffer>
    <experiments>3</experiments>
</comment>
<comment type="interaction">
    <interactant intactId="EBI-399080">
        <id>Q92993</id>
    </interactant>
    <interactant intactId="EBI-1769146">
        <id>Q99986</id>
        <label>VRK1</label>
    </interactant>
    <organismsDiffer>false</organismsDiffer>
    <experiments>6</experiments>
</comment>
<comment type="interaction">
    <interactant intactId="EBI-399080">
        <id>Q92993</id>
    </interactant>
    <interactant intactId="EBI-12040603">
        <id>Q9NZC7-5</id>
        <label>WWOX</label>
    </interactant>
    <organismsDiffer>false</organismsDiffer>
    <experiments>3</experiments>
</comment>
<comment type="interaction">
    <interactant intactId="EBI-399080">
        <id>Q92993</id>
    </interactant>
    <interactant intactId="EBI-10300345">
        <id>Q9BW85</id>
        <label>YJU2</label>
    </interactant>
    <organismsDiffer>false</organismsDiffer>
    <experiments>3</experiments>
</comment>
<comment type="interaction">
    <interactant intactId="EBI-399080">
        <id>Q92993</id>
    </interactant>
    <interactant intactId="EBI-2682961">
        <id>Q9Y2K1</id>
        <label>ZBTB1</label>
    </interactant>
    <organismsDiffer>false</organismsDiffer>
    <experiments>3</experiments>
</comment>
<comment type="interaction">
    <interactant intactId="EBI-399080">
        <id>Q92993</id>
    </interactant>
    <interactant intactId="EBI-10176632">
        <id>O43829</id>
        <label>ZBTB14</label>
    </interactant>
    <organismsDiffer>false</organismsDiffer>
    <experiments>3</experiments>
</comment>
<comment type="interaction">
    <interactant intactId="EBI-399080">
        <id>Q92993</id>
    </interactant>
    <interactant intactId="EBI-2515601">
        <id>Q8N680</id>
        <label>ZBTB2</label>
    </interactant>
    <organismsDiffer>false</organismsDiffer>
    <experiments>3</experiments>
</comment>
<comment type="interaction">
    <interactant intactId="EBI-399080">
        <id>Q92993</id>
    </interactant>
    <interactant intactId="EBI-742740">
        <id>Q96BR9</id>
        <label>ZBTB8A</label>
    </interactant>
    <organismsDiffer>false</organismsDiffer>
    <experiments>4</experiments>
</comment>
<comment type="interaction">
    <interactant intactId="EBI-399080">
        <id>Q92993</id>
    </interactant>
    <interactant intactId="EBI-14104088">
        <id>Q53FD0-2</id>
        <label>ZC2HC1C</label>
    </interactant>
    <organismsDiffer>false</organismsDiffer>
    <experiments>6</experiments>
</comment>
<comment type="interaction">
    <interactant intactId="EBI-399080">
        <id>Q92993</id>
    </interactant>
    <interactant intactId="EBI-2849569">
        <id>Q9BQ24</id>
        <label>ZFYVE21</label>
    </interactant>
    <organismsDiffer>false</organismsDiffer>
    <experiments>3</experiments>
</comment>
<comment type="interaction">
    <interactant intactId="EBI-399080">
        <id>Q92993</id>
    </interactant>
    <interactant intactId="EBI-2602314">
        <id>Q15776</id>
        <label>ZKSCAN8</label>
    </interactant>
    <organismsDiffer>false</organismsDiffer>
    <experiments>3</experiments>
</comment>
<comment type="interaction">
    <interactant intactId="EBI-399080">
        <id>Q92993</id>
    </interactant>
    <interactant intactId="EBI-2556139">
        <id>Q14202</id>
        <label>ZMYM3</label>
    </interactant>
    <organismsDiffer>false</organismsDiffer>
    <experiments>3</experiments>
</comment>
<comment type="interaction">
    <interactant intactId="EBI-399080">
        <id>Q92993</id>
    </interactant>
    <interactant intactId="EBI-25835471">
        <id>Q05CR2</id>
        <label>ZNF248</label>
    </interactant>
    <organismsDiffer>false</organismsDiffer>
    <experiments>3</experiments>
</comment>
<comment type="interaction">
    <interactant intactId="EBI-399080">
        <id>Q92993</id>
    </interactant>
    <interactant intactId="EBI-2462313">
        <id>Q9UL40</id>
        <label>ZNF346</label>
    </interactant>
    <organismsDiffer>false</organismsDiffer>
    <experiments>3</experiments>
</comment>
<comment type="interaction">
    <interactant intactId="EBI-399080">
        <id>Q92993</id>
    </interactant>
    <interactant intactId="EBI-740727">
        <id>Q8TAU3</id>
        <label>ZNF417</label>
    </interactant>
    <organismsDiffer>false</organismsDiffer>
    <experiments>3</experiments>
</comment>
<comment type="interaction">
    <interactant intactId="EBI-399080">
        <id>Q92993</id>
    </interactant>
    <interactant intactId="EBI-12010736">
        <id>Q8N0Y2-2</id>
        <label>ZNF444</label>
    </interactant>
    <organismsDiffer>false</organismsDiffer>
    <experiments>3</experiments>
</comment>
<comment type="interaction">
    <interactant intactId="EBI-399080">
        <id>Q92993</id>
    </interactant>
    <interactant intactId="EBI-10269136">
        <id>Q8NB15</id>
        <label>ZNF511</label>
    </interactant>
    <organismsDiffer>false</organismsDiffer>
    <experiments>3</experiments>
</comment>
<comment type="interaction">
    <interactant intactId="EBI-399080">
        <id>Q92993</id>
    </interactant>
    <interactant intactId="EBI-10279993">
        <id>Q8N8E2</id>
        <label>ZNF513</label>
    </interactant>
    <organismsDiffer>false</organismsDiffer>
    <experiments>3</experiments>
</comment>
<comment type="interaction">
    <interactant intactId="EBI-399080">
        <id>Q92993</id>
    </interactant>
    <interactant intactId="EBI-11035148">
        <id>Q8TF50</id>
        <label>ZNF526</label>
    </interactant>
    <organismsDiffer>false</organismsDiffer>
    <experiments>3</experiments>
</comment>
<comment type="interaction">
    <interactant intactId="EBI-399080">
        <id>Q92993</id>
    </interactant>
    <interactant intactId="EBI-12076976">
        <id>Q9BU19</id>
        <label>ZNF692</label>
    </interactant>
    <organismsDiffer>false</organismsDiffer>
    <experiments>3</experiments>
</comment>
<comment type="interaction">
    <interactant intactId="EBI-399080">
        <id>Q92993</id>
    </interactant>
    <interactant intactId="EBI-7252920">
        <id>Q8NAM6</id>
        <label>ZSCAN4</label>
    </interactant>
    <organismsDiffer>false</organismsDiffer>
    <experiments>3</experiments>
</comment>
<comment type="interaction">
    <interactant intactId="EBI-399080">
        <id>Q92993</id>
    </interactant>
    <interactant intactId="EBI-751531">
        <id>O15535</id>
        <label>ZSCAN9</label>
    </interactant>
    <organismsDiffer>false</organismsDiffer>
    <experiments>3</experiments>
</comment>
<comment type="interaction">
    <interactant intactId="EBI-399080">
        <id>Q92993</id>
    </interactant>
    <interactant intactId="EBI-25901704">
        <id>Q9HBH6</id>
    </interactant>
    <organismsDiffer>false</organismsDiffer>
    <experiments>3</experiments>
</comment>
<comment type="interaction">
    <interactant intactId="EBI-399080">
        <id>Q92993</id>
    </interactant>
    <interactant intactId="EBI-4405734">
        <id>P10085</id>
        <label>Myod1</label>
    </interactant>
    <organismsDiffer>true</organismsDiffer>
    <experiments>5</experiments>
</comment>
<comment type="interaction">
    <interactant intactId="EBI-20795332">
        <id>Q92993-2</id>
    </interactant>
    <interactant intactId="EBI-640741">
        <id>P01023</id>
        <label>A2M</label>
    </interactant>
    <organismsDiffer>false</organismsDiffer>
    <experiments>3</experiments>
</comment>
<comment type="interaction">
    <interactant intactId="EBI-20795332">
        <id>Q92993-2</id>
    </interactant>
    <interactant intactId="EBI-77613">
        <id>P05067</id>
        <label>APP</label>
    </interactant>
    <organismsDiffer>false</organismsDiffer>
    <experiments>3</experiments>
</comment>
<comment type="interaction">
    <interactant intactId="EBI-20795332">
        <id>Q92993-2</id>
    </interactant>
    <interactant intactId="EBI-930964">
        <id>P54253</id>
        <label>ATXN1</label>
    </interactant>
    <organismsDiffer>false</organismsDiffer>
    <experiments>3</experiments>
</comment>
<comment type="interaction">
    <interactant intactId="EBI-20795332">
        <id>Q92993-2</id>
    </interactant>
    <interactant intactId="EBI-12275524">
        <id>P23560-2</id>
        <label>BDNF</label>
    </interactant>
    <organismsDiffer>false</organismsDiffer>
    <experiments>3</experiments>
</comment>
<comment type="interaction">
    <interactant intactId="EBI-20795332">
        <id>Q92993-2</id>
    </interactant>
    <interactant intactId="EBI-740135">
        <id>P35520</id>
        <label>CBS</label>
    </interactant>
    <organismsDiffer>false</organismsDiffer>
    <experiments>3</experiments>
</comment>
<comment type="interaction">
    <interactant intactId="EBI-20795332">
        <id>Q92993-2</id>
    </interactant>
    <interactant intactId="EBI-10976677">
        <id>G5E9A7</id>
        <label>DMWD</label>
    </interactant>
    <organismsDiffer>false</organismsDiffer>
    <experiments>3</experiments>
</comment>
<comment type="interaction">
    <interactant intactId="EBI-20795332">
        <id>Q92993-2</id>
    </interactant>
    <interactant intactId="EBI-10968534">
        <id>P50570-2</id>
        <label>DNM2</label>
    </interactant>
    <organismsDiffer>false</organismsDiffer>
    <experiments>3</experiments>
</comment>
<comment type="interaction">
    <interactant intactId="EBI-20795332">
        <id>Q92993-2</id>
    </interactant>
    <interactant intactId="EBI-354056">
        <id>P04406</id>
        <label>GAPDH</label>
    </interactant>
    <organismsDiffer>false</organismsDiffer>
    <experiments>3</experiments>
</comment>
<comment type="interaction">
    <interactant intactId="EBI-20795332">
        <id>Q92993-2</id>
    </interactant>
    <interactant intactId="EBI-296047">
        <id>P07900</id>
        <label>HSP90AA1</label>
    </interactant>
    <organismsDiffer>false</organismsDiffer>
    <experiments>3</experiments>
</comment>
<comment type="interaction">
    <interactant intactId="EBI-20795332">
        <id>Q92993-2</id>
    </interactant>
    <interactant intactId="EBI-25832196">
        <id>Q14114-3</id>
        <label>LRP8</label>
    </interactant>
    <organismsDiffer>false</organismsDiffer>
    <experiments>3</experiments>
</comment>
<comment type="interaction">
    <interactant intactId="EBI-20795332">
        <id>Q92993-2</id>
    </interactant>
    <interactant intactId="EBI-1189067">
        <id>P51608</id>
        <label>MECP2</label>
    </interactant>
    <organismsDiffer>false</organismsDiffer>
    <experiments>3</experiments>
</comment>
<comment type="interaction">
    <interactant intactId="EBI-20795332">
        <id>Q92993-2</id>
    </interactant>
    <interactant intactId="EBI-712238">
        <id>P00491</id>
        <label>PNP</label>
    </interactant>
    <organismsDiffer>false</organismsDiffer>
    <experiments>3</experiments>
</comment>
<comment type="interaction">
    <interactant intactId="EBI-20795332">
        <id>Q92993-2</id>
    </interactant>
    <interactant intactId="EBI-5235340">
        <id>Q7Z699</id>
        <label>SPRED1</label>
    </interactant>
    <organismsDiffer>false</organismsDiffer>
    <experiments>3</experiments>
</comment>
<comment type="subcellular location">
    <subcellularLocation>
        <location evidence="8 9 12 25 26 28 39 61">Nucleus</location>
    </subcellularLocation>
    <subcellularLocation>
        <location evidence="40 46 50 60">Chromosome</location>
    </subcellularLocation>
    <subcellularLocation>
        <location evidence="39">Cytoplasm</location>
    </subcellularLocation>
    <subcellularLocation>
        <location evidence="44">Chromosome</location>
        <location evidence="44">Centromere</location>
        <location evidence="44">Kinetochore</location>
    </subcellularLocation>
    <subcellularLocation>
        <location evidence="63">Cytoplasm</location>
        <location evidence="63">Cytoskeleton</location>
        <location evidence="63">Spindle pole</location>
    </subcellularLocation>
    <subcellularLocation>
        <location evidence="22">Nucleus</location>
        <location evidence="22">Nucleolus</location>
    </subcellularLocation>
    <subcellularLocation>
        <location evidence="8">Cytoplasm</location>
        <location evidence="8">Perinuclear region</location>
    </subcellularLocation>
    <text evidence="1 8 44 63">Upon stimulation with EDN1, it is exported from the nucleus to the perinuclear region and UV irradiation induces translocation into punctuate subnuclear structures named nuclear bodies (PubMed:11262386). Transiently localizes to kinetochores in early mitosis (PubMed:26829474). Localizes to spindle poles when chromosomes align during metaphase (PubMed:34608293). Localizes in the cytoplasm and nucleus of round spermatids (By similarity).</text>
</comment>
<comment type="subcellular location">
    <subcellularLocation>
        <location evidence="64">Cytoplasm</location>
    </subcellularLocation>
    <text evidence="64">(Microbial infection) Relocalizes from the nucleus to zika virus replication complexes in the cytoplasm.</text>
</comment>
<comment type="alternative products">
    <event type="alternative splicing"/>
    <isoform>
        <id>Q92993-1</id>
        <name>2</name>
        <sequence type="displayed"/>
    </isoform>
    <isoform>
        <id>Q92993-2</id>
        <name>1</name>
        <name evidence="69">PLIP</name>
        <sequence type="described" ref="VSP_007438"/>
    </isoform>
    <isoform>
        <id>Q92993-3</id>
        <name>3</name>
        <sequence type="described" ref="VSP_009104"/>
    </isoform>
    <isoform>
        <id>Q92993-4</id>
        <name>4</name>
        <sequence type="described" ref="VSP_009104 VSP_007438"/>
    </isoform>
</comment>
<comment type="PTM">
    <text evidence="11 44 50 54 60">Phosphorylated on Ser-86 and Ser-90; enhanced during G2/M phase (PubMed:12468530, PubMed:26829474, PubMed:29335245). The phosphorylated form has a higher activity (PubMed:12468530, PubMed:29335245). Phosphorylation at Ser-90 by CDK1 or CDK9 is a prerequisite for phosphorylation at Ser-86 by GSK3 (PubMed:26829474, PubMed:30704899). Phosphorylation at Ser-86 by GSK3 (GSK3A or GSK3B) activates acetyltransferase and acyltransferase activities (PubMed:30704899). Phosphorylation at Ser-90 by CDK9 promotes KAT5 recruitment to chromatin (PubMed:29335245). Phosphorylation by VRK1 following DNA damage promotes KAT5 association with chromatin and histone acetyltransferase activity (PubMed:33076429).</text>
</comment>
<comment type="PTM">
    <text evidence="33 37 39 41 42 61">Autoacetylated (PubMed:20100829, PubMed:24835996, PubMed:25301942, PubMed:26291311, PubMed:33938178). Autoacetylation is required for histone acetyltransferase activity (PubMed:20100829, PubMed:25865756). Autoacetylation at Lys-327 is facilitated by interaction with EP300/p300: it prevents ubiquitination and subsequent degradation by the proteasome and promotes acetylation of target proteins (PubMed:24835996). Deacetylated by HDAC3 and SIRT1 (PubMed:20100829, PubMed:25301942). Deacetylation by HDAC3 promotes its ubiquitination and cytoplasmic localization (PubMed:25301942).</text>
</comment>
<comment type="PTM">
    <text evidence="26 59">Sumoylated by UBE2I at Lys-430 and Lys-451, leading to increase of its histone acetyltransferase activity in UV-induced DNA damage response, as well as its translocation to nuclear bodies (PubMed:17704809). Sumoylation with SUMO2 by PIAS4 at Lys-430 promotes repair of DNA double-strand breaks (DSBs) via homologous recombination (HR) (PubMed:32832608). Sumoylation by PIAS4 impairs interaction with PRKDC, inhibiting non-homologous end joining (NHEJ)-mediated repair of DSBs, thereby facilitating HR (PubMed:32832608). Desumoylated by SENP3 (PubMed:32832608).</text>
</comment>
<comment type="PTM">
    <text evidence="10 37 39 41">Ubiquitinated by MDM2, leading to its proteasome-dependent degradation (PubMed:11927554, PubMed:24835996). Ubiquitination is prevented by autoacetylation at Lys-327 (PubMed:24835996). Ubiquitinated following deacetylation by HDAC3, leading to cytoplasmic localization (PubMed:25301942). Deubiquitinated by USP7 following interaction with ATF3, promoting its stabilization (PubMed:25865756).</text>
</comment>
<comment type="PTM">
    <text evidence="20">(Microbial infection) In case of HIV-1 infection, interaction with the viral Tat protein leads to KAT5 polyubiquitination and targets it to degradation.</text>
</comment>
<comment type="disease" evidence="58">
    <disease id="DI-05983">
        <name>Neurodevelopmental disorder with dysmorphic facies, sleep disturbance, and brain abnormalities</name>
        <acronym>NEDFASB</acronym>
        <description>A neurodevelopmental disorder characterized by severe global developmental delay, intellectual disability, poor or absent language, behavioral abnormalities, severe sleep disturbance, seizures, cerebral malformations, and craniofacial dysmorphism. Progressive cerebellar atrophy is also observed. Additional features may include genitourinary tract anomalies, hearing loss, and mild distal skeletal defects.</description>
        <dbReference type="MIM" id="619103"/>
    </disease>
    <text>The disease is caused by variants affecting the gene represented in this entry.</text>
</comment>
<comment type="similarity">
    <text evidence="77">Belongs to the MYST (SAS/MOZ) family.</text>
</comment>
<comment type="caution">
    <text evidence="31 40 51 77">The role of the Tudor-knot domain, also named chromo barrel or chromodomain, is unclear. Based on its similarity with some chromo domains, it was first reported to bind histone H3 trimethylated on 'Lys-4' and/or 'Lys-9' (H3K4me3 and/or H3K9me3, respectively) (PubMed:19783983, PubMed:25560918). However, another group was not able to see any binding to methylated histones (PubMed:29494751). The 3D structure of the domain suggests that the inability to bind histones is caused by occlusion of the putative peptide-binding site by a basic amino acid side chain within a unique beta hairpin (PubMed:29494751).</text>
</comment>
<comment type="sequence caution" evidence="77">
    <conflict type="erroneous initiation">
        <sequence resource="EMBL-CDS" id="AAB02683"/>
    </conflict>
    <text>Truncated N-terminus.</text>
</comment>
<comment type="online information" name="Atlas of Genetics and Cytogenetics in Oncology and Haematology">
    <link uri="https://atlasgeneticsoncology.org/gene/40893/HTATIP"/>
</comment>
<dbReference type="EC" id="2.3.1.48" evidence="6 11 43 46 52 58 60"/>
<dbReference type="EC" id="2.3.1.-" evidence="49 41 44 47 53 54 56 57 63 65"/>
<dbReference type="EMBL" id="U74667">
    <property type="protein sequence ID" value="AAB18236.1"/>
    <property type="molecule type" value="mRNA"/>
</dbReference>
<dbReference type="EMBL" id="U40989">
    <property type="protein sequence ID" value="AAB02683.1"/>
    <property type="status" value="ALT_INIT"/>
    <property type="molecule type" value="mRNA"/>
</dbReference>
<dbReference type="EMBL" id="U67734">
    <property type="protein sequence ID" value="AAD00163.1"/>
    <property type="molecule type" value="mRNA"/>
</dbReference>
<dbReference type="EMBL" id="AY214165">
    <property type="protein sequence ID" value="AAO21130.1"/>
    <property type="molecule type" value="Genomic_DNA"/>
</dbReference>
<dbReference type="EMBL" id="AK304664">
    <property type="protein sequence ID" value="BAG65439.1"/>
    <property type="molecule type" value="mRNA"/>
</dbReference>
<dbReference type="EMBL" id="AP001266">
    <property type="status" value="NOT_ANNOTATED_CDS"/>
    <property type="molecule type" value="Genomic_DNA"/>
</dbReference>
<dbReference type="EMBL" id="CH471076">
    <property type="protein sequence ID" value="EAW74427.1"/>
    <property type="molecule type" value="Genomic_DNA"/>
</dbReference>
<dbReference type="EMBL" id="CH471076">
    <property type="protein sequence ID" value="EAW74429.1"/>
    <property type="molecule type" value="Genomic_DNA"/>
</dbReference>
<dbReference type="EMBL" id="BC000166">
    <property type="protein sequence ID" value="AAH00166.3"/>
    <property type="molecule type" value="mRNA"/>
</dbReference>
<dbReference type="EMBL" id="BC064912">
    <property type="protein sequence ID" value="AAH64912.1"/>
    <property type="molecule type" value="mRNA"/>
</dbReference>
<dbReference type="EMBL" id="BC093032">
    <property type="protein sequence ID" value="AAH93032.1"/>
    <property type="molecule type" value="mRNA"/>
</dbReference>
<dbReference type="EMBL" id="BC143296">
    <property type="protein sequence ID" value="AAI43297.1"/>
    <property type="molecule type" value="mRNA"/>
</dbReference>
<dbReference type="EMBL" id="BC117167">
    <property type="protein sequence ID" value="AAI17168.1"/>
    <property type="molecule type" value="mRNA"/>
</dbReference>
<dbReference type="CCDS" id="CCDS31610.1">
    <molecule id="Q92993-1"/>
</dbReference>
<dbReference type="CCDS" id="CCDS55771.1">
    <molecule id="Q92993-4"/>
</dbReference>
<dbReference type="CCDS" id="CCDS8109.1">
    <molecule id="Q92993-2"/>
</dbReference>
<dbReference type="CCDS" id="CCDS8110.1">
    <molecule id="Q92993-3"/>
</dbReference>
<dbReference type="RefSeq" id="NP_001193762.1">
    <molecule id="Q92993-4"/>
    <property type="nucleotide sequence ID" value="NM_001206833.2"/>
</dbReference>
<dbReference type="RefSeq" id="NP_006379.2">
    <molecule id="Q92993-1"/>
    <property type="nucleotide sequence ID" value="NM_006388.3"/>
</dbReference>
<dbReference type="RefSeq" id="NP_874368.1">
    <molecule id="Q92993-2"/>
    <property type="nucleotide sequence ID" value="NM_182709.3"/>
</dbReference>
<dbReference type="RefSeq" id="NP_874369.1">
    <molecule id="Q92993-3"/>
    <property type="nucleotide sequence ID" value="NM_182710.3"/>
</dbReference>
<dbReference type="PDB" id="2EKO">
    <property type="method" value="NMR"/>
    <property type="chains" value="A=5-78"/>
</dbReference>
<dbReference type="PDB" id="2OU2">
    <property type="method" value="X-ray"/>
    <property type="resolution" value="2.30 A"/>
    <property type="chains" value="A=227-506"/>
</dbReference>
<dbReference type="PDB" id="4QQG">
    <property type="method" value="X-ray"/>
    <property type="resolution" value="2.80 A"/>
    <property type="chains" value="A/B/C/D/E/F/G=1-80"/>
</dbReference>
<dbReference type="PDBsum" id="2EKO"/>
<dbReference type="PDBsum" id="2OU2"/>
<dbReference type="PDBsum" id="4QQG"/>
<dbReference type="SMR" id="Q92993"/>
<dbReference type="BioGRID" id="115779">
    <property type="interactions" value="340"/>
</dbReference>
<dbReference type="ComplexPortal" id="CPX-709">
    <property type="entry name" value="Piccolo NuA4 histone acetyltransferase complex"/>
</dbReference>
<dbReference type="ComplexPortal" id="CPX-978">
    <property type="entry name" value="NuA4 histone acetyltransferase complex"/>
</dbReference>
<dbReference type="CORUM" id="Q92993"/>
<dbReference type="DIP" id="DIP-5998N"/>
<dbReference type="FunCoup" id="Q92993">
    <property type="interactions" value="2591"/>
</dbReference>
<dbReference type="IntAct" id="Q92993">
    <property type="interactions" value="330"/>
</dbReference>
<dbReference type="MINT" id="Q92993"/>
<dbReference type="STRING" id="9606.ENSP00000340330"/>
<dbReference type="BindingDB" id="Q92993"/>
<dbReference type="ChEMBL" id="CHEMBL5750"/>
<dbReference type="DrugBank" id="DB01992">
    <property type="generic name" value="Coenzyme A"/>
</dbReference>
<dbReference type="DrugBank" id="DB02039">
    <property type="generic name" value="S-Acetyl-Cysteine"/>
</dbReference>
<dbReference type="GuidetoPHARMACOLOGY" id="2664"/>
<dbReference type="iPTMnet" id="Q92993"/>
<dbReference type="PhosphoSitePlus" id="Q92993"/>
<dbReference type="BioMuta" id="KAT5"/>
<dbReference type="DMDM" id="30923328"/>
<dbReference type="CPTAC" id="CPTAC-2605"/>
<dbReference type="CPTAC" id="CPTAC-2606"/>
<dbReference type="jPOST" id="Q92993"/>
<dbReference type="MassIVE" id="Q92993"/>
<dbReference type="PaxDb" id="9606-ENSP00000340330"/>
<dbReference type="PeptideAtlas" id="Q92993"/>
<dbReference type="ProteomicsDB" id="75654">
    <molecule id="Q92993-1"/>
</dbReference>
<dbReference type="ProteomicsDB" id="75655">
    <molecule id="Q92993-2"/>
</dbReference>
<dbReference type="ProteomicsDB" id="75656">
    <molecule id="Q92993-3"/>
</dbReference>
<dbReference type="ProteomicsDB" id="75657">
    <molecule id="Q92993-4"/>
</dbReference>
<dbReference type="Pumba" id="Q92993"/>
<dbReference type="Antibodypedia" id="1823">
    <property type="antibodies" value="731 antibodies from 38 providers"/>
</dbReference>
<dbReference type="DNASU" id="10524"/>
<dbReference type="Ensembl" id="ENST00000341318.9">
    <molecule id="Q92993-3"/>
    <property type="protein sequence ID" value="ENSP00000340330.4"/>
    <property type="gene ID" value="ENSG00000172977.13"/>
</dbReference>
<dbReference type="Ensembl" id="ENST00000352980.8">
    <molecule id="Q92993-2"/>
    <property type="protein sequence ID" value="ENSP00000344955.4"/>
    <property type="gene ID" value="ENSG00000172977.13"/>
</dbReference>
<dbReference type="Ensembl" id="ENST00000377046.7">
    <molecule id="Q92993-1"/>
    <property type="protein sequence ID" value="ENSP00000366245.3"/>
    <property type="gene ID" value="ENSG00000172977.13"/>
</dbReference>
<dbReference type="Ensembl" id="ENST00000530446.5">
    <molecule id="Q92993-4"/>
    <property type="protein sequence ID" value="ENSP00000434765.1"/>
    <property type="gene ID" value="ENSG00000172977.13"/>
</dbReference>
<dbReference type="GeneID" id="10524"/>
<dbReference type="KEGG" id="hsa:10524"/>
<dbReference type="MANE-Select" id="ENST00000341318.9">
    <molecule id="Q92993-3"/>
    <property type="protein sequence ID" value="ENSP00000340330.4"/>
    <property type="RefSeq nucleotide sequence ID" value="NM_182710.3"/>
    <property type="RefSeq protein sequence ID" value="NP_874369.1"/>
</dbReference>
<dbReference type="UCSC" id="uc001ofi.4">
    <molecule id="Q92993-1"/>
    <property type="organism name" value="human"/>
</dbReference>
<dbReference type="AGR" id="HGNC:5275"/>
<dbReference type="CTD" id="10524"/>
<dbReference type="DisGeNET" id="10524"/>
<dbReference type="GeneCards" id="KAT5"/>
<dbReference type="HGNC" id="HGNC:5275">
    <property type="gene designation" value="KAT5"/>
</dbReference>
<dbReference type="HPA" id="ENSG00000172977">
    <property type="expression patterns" value="Low tissue specificity"/>
</dbReference>
<dbReference type="MalaCards" id="KAT5"/>
<dbReference type="MIM" id="601409">
    <property type="type" value="gene"/>
</dbReference>
<dbReference type="MIM" id="619103">
    <property type="type" value="phenotype"/>
</dbReference>
<dbReference type="neXtProt" id="NX_Q92993"/>
<dbReference type="OpenTargets" id="ENSG00000172977"/>
<dbReference type="PharmGKB" id="PA162392746"/>
<dbReference type="VEuPathDB" id="HostDB:ENSG00000172977"/>
<dbReference type="eggNOG" id="KOG2747">
    <property type="taxonomic scope" value="Eukaryota"/>
</dbReference>
<dbReference type="GeneTree" id="ENSGT00940000162343"/>
<dbReference type="HOGENOM" id="CLU_011815_2_0_1"/>
<dbReference type="InParanoid" id="Q92993"/>
<dbReference type="OMA" id="QYQRHGY"/>
<dbReference type="OrthoDB" id="787137at2759"/>
<dbReference type="PAN-GO" id="Q92993">
    <property type="GO annotations" value="5 GO annotations based on evolutionary models"/>
</dbReference>
<dbReference type="PhylomeDB" id="Q92993"/>
<dbReference type="TreeFam" id="TF317619"/>
<dbReference type="BRENDA" id="2.3.1.48">
    <property type="organism ID" value="2681"/>
</dbReference>
<dbReference type="PathwayCommons" id="Q92993"/>
<dbReference type="Reactome" id="R-HSA-201722">
    <property type="pathway name" value="Formation of the beta-catenin:TCF transactivating complex"/>
</dbReference>
<dbReference type="Reactome" id="R-HSA-2559586">
    <property type="pathway name" value="DNA Damage/Telomere Stress Induced Senescence"/>
</dbReference>
<dbReference type="Reactome" id="R-HSA-3214847">
    <property type="pathway name" value="HATs acetylate histones"/>
</dbReference>
<dbReference type="Reactome" id="R-HSA-5685938">
    <property type="pathway name" value="HDR through Single Strand Annealing (SSA)"/>
</dbReference>
<dbReference type="Reactome" id="R-HSA-5685942">
    <property type="pathway name" value="HDR through Homologous Recombination (HRR)"/>
</dbReference>
<dbReference type="Reactome" id="R-HSA-5693548">
    <property type="pathway name" value="Sensing of DNA Double Strand Breaks"/>
</dbReference>
<dbReference type="Reactome" id="R-HSA-5693554">
    <property type="pathway name" value="Resolution of D-loop Structures through Synthesis-Dependent Strand Annealing (SDSA)"/>
</dbReference>
<dbReference type="Reactome" id="R-HSA-5693565">
    <property type="pathway name" value="Recruitment and ATM-mediated phosphorylation of repair and signaling proteins at DNA double strand breaks"/>
</dbReference>
<dbReference type="Reactome" id="R-HSA-5693568">
    <property type="pathway name" value="Resolution of D-loop Structures through Holliday Junction Intermediates"/>
</dbReference>
<dbReference type="Reactome" id="R-HSA-5693571">
    <property type="pathway name" value="Nonhomologous End-Joining (NHEJ)"/>
</dbReference>
<dbReference type="Reactome" id="R-HSA-5693579">
    <property type="pathway name" value="Homologous DNA Pairing and Strand Exchange"/>
</dbReference>
<dbReference type="Reactome" id="R-HSA-5693607">
    <property type="pathway name" value="Processing of DNA double-strand break ends"/>
</dbReference>
<dbReference type="Reactome" id="R-HSA-5693616">
    <property type="pathway name" value="Presynaptic phase of homologous DNA pairing and strand exchange"/>
</dbReference>
<dbReference type="Reactome" id="R-HSA-6804756">
    <property type="pathway name" value="Regulation of TP53 Activity through Phosphorylation"/>
</dbReference>
<dbReference type="Reactome" id="R-HSA-69473">
    <property type="pathway name" value="G2/M DNA damage checkpoint"/>
</dbReference>
<dbReference type="Reactome" id="R-HSA-9018519">
    <property type="pathway name" value="Estrogen-dependent gene expression"/>
</dbReference>
<dbReference type="Reactome" id="R-HSA-9701192">
    <property type="pathway name" value="Defective homologous recombination repair (HRR) due to BRCA1 loss of function"/>
</dbReference>
<dbReference type="Reactome" id="R-HSA-9704331">
    <property type="pathway name" value="Defective HDR through Homologous Recombination Repair (HRR) due to PALB2 loss of BRCA1 binding function"/>
</dbReference>
<dbReference type="Reactome" id="R-HSA-9704646">
    <property type="pathway name" value="Defective HDR through Homologous Recombination Repair (HRR) due to PALB2 loss of BRCA2/RAD51/RAD51C binding function"/>
</dbReference>
<dbReference type="Reactome" id="R-HSA-9709570">
    <property type="pathway name" value="Impaired BRCA2 binding to RAD51"/>
</dbReference>
<dbReference type="Reactome" id="R-HSA-9709603">
    <property type="pathway name" value="Impaired BRCA2 binding to PALB2"/>
</dbReference>
<dbReference type="Reactome" id="R-HSA-9733709">
    <property type="pathway name" value="Cardiogenesis"/>
</dbReference>
<dbReference type="SignaLink" id="Q92993"/>
<dbReference type="SIGNOR" id="Q92993"/>
<dbReference type="BioGRID-ORCS" id="10524">
    <property type="hits" value="540 hits in 1180 CRISPR screens"/>
</dbReference>
<dbReference type="CD-CODE" id="232F8A39">
    <property type="entry name" value="P-body"/>
</dbReference>
<dbReference type="CD-CODE" id="91857CE7">
    <property type="entry name" value="Nucleolus"/>
</dbReference>
<dbReference type="ChiTaRS" id="KAT5">
    <property type="organism name" value="human"/>
</dbReference>
<dbReference type="EvolutionaryTrace" id="Q92993"/>
<dbReference type="GeneWiki" id="KAT5"/>
<dbReference type="GenomeRNAi" id="10524"/>
<dbReference type="Pharos" id="Q92993">
    <property type="development level" value="Tchem"/>
</dbReference>
<dbReference type="PRO" id="PR:Q92993"/>
<dbReference type="Proteomes" id="UP000005640">
    <property type="component" value="Chromosome 11"/>
</dbReference>
<dbReference type="RNAct" id="Q92993">
    <property type="molecule type" value="protein"/>
</dbReference>
<dbReference type="Bgee" id="ENSG00000172977">
    <property type="expression patterns" value="Expressed in right uterine tube and 198 other cell types or tissues"/>
</dbReference>
<dbReference type="ExpressionAtlas" id="Q92993">
    <property type="expression patterns" value="baseline and differential"/>
</dbReference>
<dbReference type="GO" id="GO:0000785">
    <property type="term" value="C:chromatin"/>
    <property type="evidence" value="ECO:0000314"/>
    <property type="project" value="UniProt"/>
</dbReference>
<dbReference type="GO" id="GO:0005737">
    <property type="term" value="C:cytoplasm"/>
    <property type="evidence" value="ECO:0000314"/>
    <property type="project" value="UniProtKB"/>
</dbReference>
<dbReference type="GO" id="GO:0005829">
    <property type="term" value="C:cytosol"/>
    <property type="evidence" value="ECO:0000314"/>
    <property type="project" value="HPA"/>
</dbReference>
<dbReference type="GO" id="GO:0043231">
    <property type="term" value="C:intracellular membrane-bounded organelle"/>
    <property type="evidence" value="ECO:0000314"/>
    <property type="project" value="HPA"/>
</dbReference>
<dbReference type="GO" id="GO:0000776">
    <property type="term" value="C:kinetochore"/>
    <property type="evidence" value="ECO:0000314"/>
    <property type="project" value="UniProtKB"/>
</dbReference>
<dbReference type="GO" id="GO:0097431">
    <property type="term" value="C:mitotic spindle pole"/>
    <property type="evidence" value="ECO:0000314"/>
    <property type="project" value="UniProtKB"/>
</dbReference>
<dbReference type="GO" id="GO:0035267">
    <property type="term" value="C:NuA4 histone acetyltransferase complex"/>
    <property type="evidence" value="ECO:0000314"/>
    <property type="project" value="UniProtKB"/>
</dbReference>
<dbReference type="GO" id="GO:0005730">
    <property type="term" value="C:nucleolus"/>
    <property type="evidence" value="ECO:0000314"/>
    <property type="project" value="UniProtKB"/>
</dbReference>
<dbReference type="GO" id="GO:0005654">
    <property type="term" value="C:nucleoplasm"/>
    <property type="evidence" value="ECO:0000314"/>
    <property type="project" value="HPA"/>
</dbReference>
<dbReference type="GO" id="GO:0000786">
    <property type="term" value="C:nucleosome"/>
    <property type="evidence" value="ECO:0000314"/>
    <property type="project" value="ComplexPortal"/>
</dbReference>
<dbReference type="GO" id="GO:0005634">
    <property type="term" value="C:nucleus"/>
    <property type="evidence" value="ECO:0000314"/>
    <property type="project" value="UniProtKB"/>
</dbReference>
<dbReference type="GO" id="GO:0048471">
    <property type="term" value="C:perinuclear region of cytoplasm"/>
    <property type="evidence" value="ECO:0007669"/>
    <property type="project" value="UniProtKB-SubCell"/>
</dbReference>
<dbReference type="GO" id="GO:0032777">
    <property type="term" value="C:piccolo histone acetyltransferase complex"/>
    <property type="evidence" value="ECO:0000314"/>
    <property type="project" value="UniProtKB"/>
</dbReference>
<dbReference type="GO" id="GO:0035861">
    <property type="term" value="C:site of double-strand break"/>
    <property type="evidence" value="ECO:0000314"/>
    <property type="project" value="UniProt"/>
</dbReference>
<dbReference type="GO" id="GO:0000812">
    <property type="term" value="C:Swr1 complex"/>
    <property type="evidence" value="ECO:0000314"/>
    <property type="project" value="UniProtKB"/>
</dbReference>
<dbReference type="GO" id="GO:0005667">
    <property type="term" value="C:transcription regulator complex"/>
    <property type="evidence" value="ECO:0007669"/>
    <property type="project" value="Ensembl"/>
</dbReference>
<dbReference type="GO" id="GO:0016407">
    <property type="term" value="F:acetyltransferase activity"/>
    <property type="evidence" value="ECO:0000304"/>
    <property type="project" value="Reactome"/>
</dbReference>
<dbReference type="GO" id="GO:0003682">
    <property type="term" value="F:chromatin binding"/>
    <property type="evidence" value="ECO:0000314"/>
    <property type="project" value="UniProtKB"/>
</dbReference>
<dbReference type="GO" id="GO:0140297">
    <property type="term" value="F:DNA-binding transcription factor binding"/>
    <property type="evidence" value="ECO:0000353"/>
    <property type="project" value="BHF-UCL"/>
</dbReference>
<dbReference type="GO" id="GO:0004402">
    <property type="term" value="F:histone acetyltransferase activity"/>
    <property type="evidence" value="ECO:0000314"/>
    <property type="project" value="UniProtKB"/>
</dbReference>
<dbReference type="GO" id="GO:0043998">
    <property type="term" value="F:histone H2A acetyltransferase activity"/>
    <property type="evidence" value="ECO:0000314"/>
    <property type="project" value="UniProtKB"/>
</dbReference>
<dbReference type="GO" id="GO:0043999">
    <property type="term" value="F:histone H2AK5 acetyltransferase activity"/>
    <property type="evidence" value="ECO:0000314"/>
    <property type="project" value="UniProtKB"/>
</dbReference>
<dbReference type="GO" id="GO:0010485">
    <property type="term" value="F:histone H4 acetyltransferase activity"/>
    <property type="evidence" value="ECO:0000314"/>
    <property type="project" value="GO_Central"/>
</dbReference>
<dbReference type="GO" id="GO:0046972">
    <property type="term" value="F:histone H4K16 acetyltransferase activity"/>
    <property type="evidence" value="ECO:0000314"/>
    <property type="project" value="UniProtKB"/>
</dbReference>
<dbReference type="GO" id="GO:0106226">
    <property type="term" value="F:peptide 2-hydroxyisobutyryltransferase activity"/>
    <property type="evidence" value="ECO:0007669"/>
    <property type="project" value="RHEA"/>
</dbReference>
<dbReference type="GO" id="GO:0140065">
    <property type="term" value="F:peptide butyryltransferase activity"/>
    <property type="evidence" value="ECO:0000314"/>
    <property type="project" value="UniProtKB"/>
</dbReference>
<dbReference type="GO" id="GO:0140064">
    <property type="term" value="F:peptide crotonyltransferase activity"/>
    <property type="evidence" value="ECO:0000314"/>
    <property type="project" value="UniProtKB"/>
</dbReference>
<dbReference type="GO" id="GO:0120300">
    <property type="term" value="F:peptide lactyltransferase (CoA-dependent) activity"/>
    <property type="evidence" value="ECO:0000314"/>
    <property type="project" value="UniProtKB"/>
</dbReference>
<dbReference type="GO" id="GO:0061733">
    <property type="term" value="F:protein-lysine-acetyltransferase activity"/>
    <property type="evidence" value="ECO:0000314"/>
    <property type="project" value="UniProt"/>
</dbReference>
<dbReference type="GO" id="GO:0003713">
    <property type="term" value="F:transcription coactivator activity"/>
    <property type="evidence" value="ECO:0000314"/>
    <property type="project" value="UniProtKB"/>
</dbReference>
<dbReference type="GO" id="GO:0008270">
    <property type="term" value="F:zinc ion binding"/>
    <property type="evidence" value="ECO:0007669"/>
    <property type="project" value="UniProtKB-KW"/>
</dbReference>
<dbReference type="GO" id="GO:0006915">
    <property type="term" value="P:apoptotic process"/>
    <property type="evidence" value="ECO:0007669"/>
    <property type="project" value="Ensembl"/>
</dbReference>
<dbReference type="GO" id="GO:0071392">
    <property type="term" value="P:cellular response to estradiol stimulus"/>
    <property type="evidence" value="ECO:0000314"/>
    <property type="project" value="UniProtKB"/>
</dbReference>
<dbReference type="GO" id="GO:0042149">
    <property type="term" value="P:cellular response to glucose starvation"/>
    <property type="evidence" value="ECO:0000314"/>
    <property type="project" value="UniProtKB"/>
</dbReference>
<dbReference type="GO" id="GO:0071333">
    <property type="term" value="P:cellular response to glucose stimulus"/>
    <property type="evidence" value="ECO:0007669"/>
    <property type="project" value="Ensembl"/>
</dbReference>
<dbReference type="GO" id="GO:0090398">
    <property type="term" value="P:cellular senescence"/>
    <property type="evidence" value="ECO:0000304"/>
    <property type="project" value="Reactome"/>
</dbReference>
<dbReference type="GO" id="GO:0006974">
    <property type="term" value="P:DNA damage response"/>
    <property type="evidence" value="ECO:0000314"/>
    <property type="project" value="UniProtKB"/>
</dbReference>
<dbReference type="GO" id="GO:0030330">
    <property type="term" value="P:DNA damage response, signal transduction by p53 class mediator"/>
    <property type="evidence" value="ECO:0000314"/>
    <property type="project" value="UniProtKB"/>
</dbReference>
<dbReference type="GO" id="GO:0140861">
    <property type="term" value="P:DNA repair-dependent chromatin remodeling"/>
    <property type="evidence" value="ECO:0000314"/>
    <property type="project" value="UniProt"/>
</dbReference>
<dbReference type="GO" id="GO:0006302">
    <property type="term" value="P:double-strand break repair"/>
    <property type="evidence" value="ECO:0000314"/>
    <property type="project" value="UniProtKB"/>
</dbReference>
<dbReference type="GO" id="GO:0000724">
    <property type="term" value="P:double-strand break repair via homologous recombination"/>
    <property type="evidence" value="ECO:0000314"/>
    <property type="project" value="UniProtKB"/>
</dbReference>
<dbReference type="GO" id="GO:0000132">
    <property type="term" value="P:establishment of mitotic spindle orientation"/>
    <property type="evidence" value="ECO:0000314"/>
    <property type="project" value="UniProtKB"/>
</dbReference>
<dbReference type="GO" id="GO:0045087">
    <property type="term" value="P:innate immune response"/>
    <property type="evidence" value="ECO:0007669"/>
    <property type="project" value="UniProtKB-KW"/>
</dbReference>
<dbReference type="GO" id="GO:1905691">
    <property type="term" value="P:lipid droplet disassembly"/>
    <property type="evidence" value="ECO:0000314"/>
    <property type="project" value="UniProtKB"/>
</dbReference>
<dbReference type="GO" id="GO:0045892">
    <property type="term" value="P:negative regulation of DNA-templated transcription"/>
    <property type="evidence" value="ECO:0000314"/>
    <property type="project" value="BHF-UCL"/>
</dbReference>
<dbReference type="GO" id="GO:2000042">
    <property type="term" value="P:negative regulation of double-strand break repair via homologous recombination"/>
    <property type="evidence" value="ECO:0000314"/>
    <property type="project" value="UniProt"/>
</dbReference>
<dbReference type="GO" id="GO:0032703">
    <property type="term" value="P:negative regulation of interleukin-2 production"/>
    <property type="evidence" value="ECO:0000314"/>
    <property type="project" value="BHF-UCL"/>
</dbReference>
<dbReference type="GO" id="GO:0000122">
    <property type="term" value="P:negative regulation of transcription by RNA polymerase II"/>
    <property type="evidence" value="ECO:0000315"/>
    <property type="project" value="BHF-UCL"/>
</dbReference>
<dbReference type="GO" id="GO:0021915">
    <property type="term" value="P:neural tube development"/>
    <property type="evidence" value="ECO:0007669"/>
    <property type="project" value="Ensembl"/>
</dbReference>
<dbReference type="GO" id="GO:0022008">
    <property type="term" value="P:neurogenesis"/>
    <property type="evidence" value="ECO:0007669"/>
    <property type="project" value="Ensembl"/>
</dbReference>
<dbReference type="GO" id="GO:0006289">
    <property type="term" value="P:nucleotide-excision repair"/>
    <property type="evidence" value="ECO:0000314"/>
    <property type="project" value="UniProtKB"/>
</dbReference>
<dbReference type="GO" id="GO:0018394">
    <property type="term" value="P:peptidyl-lysine acetylation"/>
    <property type="evidence" value="ECO:0000314"/>
    <property type="project" value="UniProtKB"/>
</dbReference>
<dbReference type="GO" id="GO:1905337">
    <property type="term" value="P:positive regulation of aggrephagy"/>
    <property type="evidence" value="ECO:0000314"/>
    <property type="project" value="UniProt"/>
</dbReference>
<dbReference type="GO" id="GO:1902425">
    <property type="term" value="P:positive regulation of attachment of mitotic spindle microtubules to kinetochore"/>
    <property type="evidence" value="ECO:0000314"/>
    <property type="project" value="UniProtKB"/>
</dbReference>
<dbReference type="GO" id="GO:0010508">
    <property type="term" value="P:positive regulation of autophagy"/>
    <property type="evidence" value="ECO:0000314"/>
    <property type="project" value="UniProtKB"/>
</dbReference>
<dbReference type="GO" id="GO:0042753">
    <property type="term" value="P:positive regulation of circadian rhythm"/>
    <property type="evidence" value="ECO:0000250"/>
    <property type="project" value="UniProtKB"/>
</dbReference>
<dbReference type="GO" id="GO:0045893">
    <property type="term" value="P:positive regulation of DNA-templated transcription"/>
    <property type="evidence" value="ECO:0000314"/>
    <property type="project" value="UniProtKB"/>
</dbReference>
<dbReference type="GO" id="GO:1905168">
    <property type="term" value="P:positive regulation of double-strand break repair via homologous recombination"/>
    <property type="evidence" value="ECO:0000314"/>
    <property type="project" value="UniProtKB"/>
</dbReference>
<dbReference type="GO" id="GO:0045089">
    <property type="term" value="P:positive regulation of innate immune response"/>
    <property type="evidence" value="ECO:0000314"/>
    <property type="project" value="UniProt"/>
</dbReference>
<dbReference type="GO" id="GO:0062033">
    <property type="term" value="P:positive regulation of mitotic sister chromatid segregation"/>
    <property type="evidence" value="ECO:0000314"/>
    <property type="project" value="UniProtKB"/>
</dbReference>
<dbReference type="GO" id="GO:0045663">
    <property type="term" value="P:positive regulation of myoblast differentiation"/>
    <property type="evidence" value="ECO:0000314"/>
    <property type="project" value="UniProtKB"/>
</dbReference>
<dbReference type="GO" id="GO:1901985">
    <property type="term" value="P:positive regulation of protein acetylation"/>
    <property type="evidence" value="ECO:0000314"/>
    <property type="project" value="UniProtKB"/>
</dbReference>
<dbReference type="GO" id="GO:0045591">
    <property type="term" value="P:positive regulation of regulatory T cell differentiation"/>
    <property type="evidence" value="ECO:0000314"/>
    <property type="project" value="UniProtKB"/>
</dbReference>
<dbReference type="GO" id="GO:0045944">
    <property type="term" value="P:positive regulation of transcription by RNA polymerase II"/>
    <property type="evidence" value="ECO:0000314"/>
    <property type="project" value="UniProtKB"/>
</dbReference>
<dbReference type="GO" id="GO:0010867">
    <property type="term" value="P:positive regulation of triglyceride biosynthetic process"/>
    <property type="evidence" value="ECO:0000314"/>
    <property type="project" value="UniProtKB"/>
</dbReference>
<dbReference type="GO" id="GO:0043161">
    <property type="term" value="P:proteasome-mediated ubiquitin-dependent protein catabolic process"/>
    <property type="evidence" value="ECO:0000315"/>
    <property type="project" value="UniProtKB"/>
</dbReference>
<dbReference type="GO" id="GO:0042981">
    <property type="term" value="P:regulation of apoptotic process"/>
    <property type="evidence" value="ECO:0000303"/>
    <property type="project" value="ComplexPortal"/>
</dbReference>
<dbReference type="GO" id="GO:0051726">
    <property type="term" value="P:regulation of cell cycle"/>
    <property type="evidence" value="ECO:0000315"/>
    <property type="project" value="ComplexPortal"/>
</dbReference>
<dbReference type="GO" id="GO:2000779">
    <property type="term" value="P:regulation of double-strand break repair"/>
    <property type="evidence" value="ECO:0000303"/>
    <property type="project" value="ComplexPortal"/>
</dbReference>
<dbReference type="GO" id="GO:1902036">
    <property type="term" value="P:regulation of hematopoietic stem cell differentiation"/>
    <property type="evidence" value="ECO:0000250"/>
    <property type="project" value="UniProtKB"/>
</dbReference>
<dbReference type="GO" id="GO:0010212">
    <property type="term" value="P:response to ionizing radiation"/>
    <property type="evidence" value="ECO:0000314"/>
    <property type="project" value="UniProtKB"/>
</dbReference>
<dbReference type="GO" id="GO:0035092">
    <property type="term" value="P:sperm DNA condensation"/>
    <property type="evidence" value="ECO:0007669"/>
    <property type="project" value="Ensembl"/>
</dbReference>
<dbReference type="GO" id="GO:0007286">
    <property type="term" value="P:spermatid development"/>
    <property type="evidence" value="ECO:0000250"/>
    <property type="project" value="UniProtKB"/>
</dbReference>
<dbReference type="CDD" id="cd18985">
    <property type="entry name" value="CBD_TIP60_like"/>
    <property type="match status" value="1"/>
</dbReference>
<dbReference type="CDD" id="cd04301">
    <property type="entry name" value="NAT_SF"/>
    <property type="match status" value="1"/>
</dbReference>
<dbReference type="FunFam" id="1.10.10.10:FF:000022">
    <property type="entry name" value="Histone acetyltransferase"/>
    <property type="match status" value="1"/>
</dbReference>
<dbReference type="FunFam" id="2.30.30.140:FF:000013">
    <property type="entry name" value="Histone acetyltransferase"/>
    <property type="match status" value="1"/>
</dbReference>
<dbReference type="FunFam" id="3.30.60.60:FF:000001">
    <property type="entry name" value="Histone acetyltransferase"/>
    <property type="match status" value="1"/>
</dbReference>
<dbReference type="FunFam" id="3.40.630.30:FF:000002">
    <property type="entry name" value="Histone acetyltransferase"/>
    <property type="match status" value="1"/>
</dbReference>
<dbReference type="Gene3D" id="2.30.30.140">
    <property type="match status" value="1"/>
</dbReference>
<dbReference type="Gene3D" id="3.40.630.30">
    <property type="match status" value="1"/>
</dbReference>
<dbReference type="Gene3D" id="3.30.60.60">
    <property type="entry name" value="N-acetyl transferase-like"/>
    <property type="match status" value="1"/>
</dbReference>
<dbReference type="Gene3D" id="1.10.10.10">
    <property type="entry name" value="Winged helix-like DNA-binding domain superfamily/Winged helix DNA-binding domain"/>
    <property type="match status" value="1"/>
</dbReference>
<dbReference type="IDEAL" id="IID00492"/>
<dbReference type="InterPro" id="IPR016181">
    <property type="entry name" value="Acyl_CoA_acyltransferase"/>
</dbReference>
<dbReference type="InterPro" id="IPR016197">
    <property type="entry name" value="Chromo-like_dom_sf"/>
</dbReference>
<dbReference type="InterPro" id="IPR000953">
    <property type="entry name" value="Chromo/chromo_shadow_dom"/>
</dbReference>
<dbReference type="InterPro" id="IPR002717">
    <property type="entry name" value="HAT_MYST-type"/>
</dbReference>
<dbReference type="InterPro" id="IPR050603">
    <property type="entry name" value="MYST_HAT"/>
</dbReference>
<dbReference type="InterPro" id="IPR025995">
    <property type="entry name" value="Tudor-knot"/>
</dbReference>
<dbReference type="InterPro" id="IPR036388">
    <property type="entry name" value="WH-like_DNA-bd_sf"/>
</dbReference>
<dbReference type="InterPro" id="IPR040706">
    <property type="entry name" value="Zf-MYST"/>
</dbReference>
<dbReference type="PANTHER" id="PTHR10615">
    <property type="entry name" value="HISTONE ACETYLTRANSFERASE"/>
    <property type="match status" value="1"/>
</dbReference>
<dbReference type="PANTHER" id="PTHR10615:SF219">
    <property type="entry name" value="HISTONE ACETYLTRANSFERASE KAT5"/>
    <property type="match status" value="1"/>
</dbReference>
<dbReference type="Pfam" id="PF01853">
    <property type="entry name" value="MOZ_SAS"/>
    <property type="match status" value="1"/>
</dbReference>
<dbReference type="Pfam" id="PF11717">
    <property type="entry name" value="Tudor-knot"/>
    <property type="match status" value="1"/>
</dbReference>
<dbReference type="Pfam" id="PF17772">
    <property type="entry name" value="zf-MYST"/>
    <property type="match status" value="1"/>
</dbReference>
<dbReference type="SMART" id="SM00298">
    <property type="entry name" value="CHROMO"/>
    <property type="match status" value="1"/>
</dbReference>
<dbReference type="SUPFAM" id="SSF55729">
    <property type="entry name" value="Acyl-CoA N-acyltransferases (Nat)"/>
    <property type="match status" value="1"/>
</dbReference>
<dbReference type="SUPFAM" id="SSF54160">
    <property type="entry name" value="Chromo domain-like"/>
    <property type="match status" value="1"/>
</dbReference>
<dbReference type="PROSITE" id="PS51726">
    <property type="entry name" value="MYST_HAT"/>
    <property type="match status" value="1"/>
</dbReference>
<reference key="1">
    <citation type="journal article" date="1996" name="Virology">
        <title>Identification of a cellular protein that specifically interacts with the essential cysteine region of the HIV-1 Tat transactivator.</title>
        <authorList>
            <person name="Kamine J."/>
            <person name="Elangovan B."/>
            <person name="Subramanian T."/>
            <person name="Coleman D."/>
            <person name="Chinnadurai G."/>
        </authorList>
    </citation>
    <scope>NUCLEOTIDE SEQUENCE [MRNA] (ISOFORM 2)</scope>
    <scope>INTERACTION WITH HIV-1 TAT (MICROBIAL INFECTION)</scope>
    <source>
        <tissue>Lymphoblast</tissue>
    </source>
</reference>
<reference key="2">
    <citation type="journal article" date="2001" name="Mol. Cell. Biol.">
        <title>PLIP, a novel splice variant of Tip60, interacts with group IV cytosolic phospholipase A(2), induces apoptosis, and potentiates prostaglandin production.</title>
        <authorList>
            <person name="Sheridan A.M."/>
            <person name="Force T."/>
            <person name="Yoon H.J."/>
            <person name="O'Leary E."/>
            <person name="Choukroun G."/>
            <person name="Taheri M.R."/>
            <person name="Bonventre J.V."/>
        </authorList>
    </citation>
    <scope>NUCLEOTIDE SEQUENCE [MRNA] (ISOFORM 1)</scope>
    <scope>INTERACTION WITH PLA2G4A</scope>
    <scope>SUBCELLULAR LOCATION</scope>
    <source>
        <tissue>Fibroblast</tissue>
        <tissue>Placenta</tissue>
    </source>
</reference>
<reference key="3">
    <citation type="journal article" date="2003" name="Gene">
        <title>Identification of a larger form of the histone acetyl transferase Tip60.</title>
        <authorList>
            <person name="Legube G."/>
            <person name="Trouche D."/>
        </authorList>
    </citation>
    <scope>NUCLEOTIDE SEQUENCE [MRNA] (ISOFORM 3)</scope>
</reference>
<reference key="4">
    <citation type="submission" date="2003-01" db="EMBL/GenBank/DDBJ databases">
        <authorList>
            <consortium name="NIEHS SNPs program"/>
        </authorList>
    </citation>
    <scope>NUCLEOTIDE SEQUENCE [GENOMIC DNA]</scope>
</reference>
<reference key="5">
    <citation type="journal article" date="2004" name="Nat. Genet.">
        <title>Complete sequencing and characterization of 21,243 full-length human cDNAs.</title>
        <authorList>
            <person name="Ota T."/>
            <person name="Suzuki Y."/>
            <person name="Nishikawa T."/>
            <person name="Otsuki T."/>
            <person name="Sugiyama T."/>
            <person name="Irie R."/>
            <person name="Wakamatsu A."/>
            <person name="Hayashi K."/>
            <person name="Sato H."/>
            <person name="Nagai K."/>
            <person name="Kimura K."/>
            <person name="Makita H."/>
            <person name="Sekine M."/>
            <person name="Obayashi M."/>
            <person name="Nishi T."/>
            <person name="Shibahara T."/>
            <person name="Tanaka T."/>
            <person name="Ishii S."/>
            <person name="Yamamoto J."/>
            <person name="Saito K."/>
            <person name="Kawai Y."/>
            <person name="Isono Y."/>
            <person name="Nakamura Y."/>
            <person name="Nagahari K."/>
            <person name="Murakami K."/>
            <person name="Yasuda T."/>
            <person name="Iwayanagi T."/>
            <person name="Wagatsuma M."/>
            <person name="Shiratori A."/>
            <person name="Sudo H."/>
            <person name="Hosoiri T."/>
            <person name="Kaku Y."/>
            <person name="Kodaira H."/>
            <person name="Kondo H."/>
            <person name="Sugawara M."/>
            <person name="Takahashi M."/>
            <person name="Kanda K."/>
            <person name="Yokoi T."/>
            <person name="Furuya T."/>
            <person name="Kikkawa E."/>
            <person name="Omura Y."/>
            <person name="Abe K."/>
            <person name="Kamihara K."/>
            <person name="Katsuta N."/>
            <person name="Sato K."/>
            <person name="Tanikawa M."/>
            <person name="Yamazaki M."/>
            <person name="Ninomiya K."/>
            <person name="Ishibashi T."/>
            <person name="Yamashita H."/>
            <person name="Murakawa K."/>
            <person name="Fujimori K."/>
            <person name="Tanai H."/>
            <person name="Kimata M."/>
            <person name="Watanabe M."/>
            <person name="Hiraoka S."/>
            <person name="Chiba Y."/>
            <person name="Ishida S."/>
            <person name="Ono Y."/>
            <person name="Takiguchi S."/>
            <person name="Watanabe S."/>
            <person name="Yosida M."/>
            <person name="Hotuta T."/>
            <person name="Kusano J."/>
            <person name="Kanehori K."/>
            <person name="Takahashi-Fujii A."/>
            <person name="Hara H."/>
            <person name="Tanase T.-O."/>
            <person name="Nomura Y."/>
            <person name="Togiya S."/>
            <person name="Komai F."/>
            <person name="Hara R."/>
            <person name="Takeuchi K."/>
            <person name="Arita M."/>
            <person name="Imose N."/>
            <person name="Musashino K."/>
            <person name="Yuuki H."/>
            <person name="Oshima A."/>
            <person name="Sasaki N."/>
            <person name="Aotsuka S."/>
            <person name="Yoshikawa Y."/>
            <person name="Matsunawa H."/>
            <person name="Ichihara T."/>
            <person name="Shiohata N."/>
            <person name="Sano S."/>
            <person name="Moriya S."/>
            <person name="Momiyama H."/>
            <person name="Satoh N."/>
            <person name="Takami S."/>
            <person name="Terashima Y."/>
            <person name="Suzuki O."/>
            <person name="Nakagawa S."/>
            <person name="Senoh A."/>
            <person name="Mizoguchi H."/>
            <person name="Goto Y."/>
            <person name="Shimizu F."/>
            <person name="Wakebe H."/>
            <person name="Hishigaki H."/>
            <person name="Watanabe T."/>
            <person name="Sugiyama A."/>
            <person name="Takemoto M."/>
            <person name="Kawakami B."/>
            <person name="Yamazaki M."/>
            <person name="Watanabe K."/>
            <person name="Kumagai A."/>
            <person name="Itakura S."/>
            <person name="Fukuzumi Y."/>
            <person name="Fujimori Y."/>
            <person name="Komiyama M."/>
            <person name="Tashiro H."/>
            <person name="Tanigami A."/>
            <person name="Fujiwara T."/>
            <person name="Ono T."/>
            <person name="Yamada K."/>
            <person name="Fujii Y."/>
            <person name="Ozaki K."/>
            <person name="Hirao M."/>
            <person name="Ohmori Y."/>
            <person name="Kawabata A."/>
            <person name="Hikiji T."/>
            <person name="Kobatake N."/>
            <person name="Inagaki H."/>
            <person name="Ikema Y."/>
            <person name="Okamoto S."/>
            <person name="Okitani R."/>
            <person name="Kawakami T."/>
            <person name="Noguchi S."/>
            <person name="Itoh T."/>
            <person name="Shigeta K."/>
            <person name="Senba T."/>
            <person name="Matsumura K."/>
            <person name="Nakajima Y."/>
            <person name="Mizuno T."/>
            <person name="Morinaga M."/>
            <person name="Sasaki M."/>
            <person name="Togashi T."/>
            <person name="Oyama M."/>
            <person name="Hata H."/>
            <person name="Watanabe M."/>
            <person name="Komatsu T."/>
            <person name="Mizushima-Sugano J."/>
            <person name="Satoh T."/>
            <person name="Shirai Y."/>
            <person name="Takahashi Y."/>
            <person name="Nakagawa K."/>
            <person name="Okumura K."/>
            <person name="Nagase T."/>
            <person name="Nomura N."/>
            <person name="Kikuchi H."/>
            <person name="Masuho Y."/>
            <person name="Yamashita R."/>
            <person name="Nakai K."/>
            <person name="Yada T."/>
            <person name="Nakamura Y."/>
            <person name="Ohara O."/>
            <person name="Isogai T."/>
            <person name="Sugano S."/>
        </authorList>
    </citation>
    <scope>NUCLEOTIDE SEQUENCE [LARGE SCALE MRNA] (ISOFORM 4)</scope>
    <source>
        <tissue>Uterus</tissue>
    </source>
</reference>
<reference key="6">
    <citation type="journal article" date="2006" name="Nature">
        <title>Human chromosome 11 DNA sequence and analysis including novel gene identification.</title>
        <authorList>
            <person name="Taylor T.D."/>
            <person name="Noguchi H."/>
            <person name="Totoki Y."/>
            <person name="Toyoda A."/>
            <person name="Kuroki Y."/>
            <person name="Dewar K."/>
            <person name="Lloyd C."/>
            <person name="Itoh T."/>
            <person name="Takeda T."/>
            <person name="Kim D.-W."/>
            <person name="She X."/>
            <person name="Barlow K.F."/>
            <person name="Bloom T."/>
            <person name="Bruford E."/>
            <person name="Chang J.L."/>
            <person name="Cuomo C.A."/>
            <person name="Eichler E."/>
            <person name="FitzGerald M.G."/>
            <person name="Jaffe D.B."/>
            <person name="LaButti K."/>
            <person name="Nicol R."/>
            <person name="Park H.-S."/>
            <person name="Seaman C."/>
            <person name="Sougnez C."/>
            <person name="Yang X."/>
            <person name="Zimmer A.R."/>
            <person name="Zody M.C."/>
            <person name="Birren B.W."/>
            <person name="Nusbaum C."/>
            <person name="Fujiyama A."/>
            <person name="Hattori M."/>
            <person name="Rogers J."/>
            <person name="Lander E.S."/>
            <person name="Sakaki Y."/>
        </authorList>
    </citation>
    <scope>NUCLEOTIDE SEQUENCE [LARGE SCALE GENOMIC DNA]</scope>
</reference>
<reference key="7">
    <citation type="submission" date="2005-07" db="EMBL/GenBank/DDBJ databases">
        <authorList>
            <person name="Mural R.J."/>
            <person name="Istrail S."/>
            <person name="Sutton G.G."/>
            <person name="Florea L."/>
            <person name="Halpern A.L."/>
            <person name="Mobarry C.M."/>
            <person name="Lippert R."/>
            <person name="Walenz B."/>
            <person name="Shatkay H."/>
            <person name="Dew I."/>
            <person name="Miller J.R."/>
            <person name="Flanigan M.J."/>
            <person name="Edwards N.J."/>
            <person name="Bolanos R."/>
            <person name="Fasulo D."/>
            <person name="Halldorsson B.V."/>
            <person name="Hannenhalli S."/>
            <person name="Turner R."/>
            <person name="Yooseph S."/>
            <person name="Lu F."/>
            <person name="Nusskern D.R."/>
            <person name="Shue B.C."/>
            <person name="Zheng X.H."/>
            <person name="Zhong F."/>
            <person name="Delcher A.L."/>
            <person name="Huson D.H."/>
            <person name="Kravitz S.A."/>
            <person name="Mouchard L."/>
            <person name="Reinert K."/>
            <person name="Remington K.A."/>
            <person name="Clark A.G."/>
            <person name="Waterman M.S."/>
            <person name="Eichler E.E."/>
            <person name="Adams M.D."/>
            <person name="Hunkapiller M.W."/>
            <person name="Myers E.W."/>
            <person name="Venter J.C."/>
        </authorList>
    </citation>
    <scope>NUCLEOTIDE SEQUENCE [LARGE SCALE GENOMIC DNA]</scope>
</reference>
<reference key="8">
    <citation type="journal article" date="2004" name="Genome Res.">
        <title>The status, quality, and expansion of the NIH full-length cDNA project: the Mammalian Gene Collection (MGC).</title>
        <authorList>
            <consortium name="The MGC Project Team"/>
        </authorList>
    </citation>
    <scope>NUCLEOTIDE SEQUENCE [LARGE SCALE MRNA] (ISOFORMS 1 AND 2)</scope>
    <source>
        <tissue>Cervix</tissue>
        <tissue>Liver</tissue>
        <tissue>Placenta</tissue>
        <tissue>Testis</tissue>
    </source>
</reference>
<reference key="9">
    <citation type="journal article" date="2003" name="J. Biol. Chem.">
        <title>Identification of new subunits of the multiprotein mammalian TRRAP/TIP60-containing histone acetyltransferase complex.</title>
        <authorList>
            <person name="Cai Y."/>
            <person name="Jin J."/>
            <person name="Tomomori-Sato C."/>
            <person name="Sato S."/>
            <person name="Sorokina I."/>
            <person name="Parmely T.J."/>
            <person name="Conaway R.C."/>
            <person name="Conaway J.W."/>
        </authorList>
    </citation>
    <scope>PROTEIN SEQUENCE OF 19-35; 150-177 AND 297-307</scope>
    <scope>IDENTIFICATION IN NUA4 COMPLEX</scope>
    <scope>IDENTIFICATION BY MASS SPECTROMETRY</scope>
</reference>
<reference key="10">
    <citation type="journal article" date="1998" name="Genes Cells">
        <title>Tip60 acetylates six lysines of a specific class in core histones in vitro.</title>
        <authorList>
            <person name="Kimura A."/>
            <person name="Horikoshi M."/>
        </authorList>
    </citation>
    <scope>CATALYTIC ACTIVITY IN VITRO</scope>
</reference>
<reference key="11">
    <citation type="journal article" date="2000" name="Cell">
        <title>Involvement of the TIP60 histone acetylase complex in DNA repair and apoptosis.</title>
        <authorList>
            <person name="Ikura T."/>
            <person name="Ogryzko V.V."/>
            <person name="Grigoriev M."/>
            <person name="Groisman R."/>
            <person name="Wang J."/>
            <person name="Horikoshi M."/>
            <person name="Scully R."/>
            <person name="Qin J."/>
            <person name="Nakatani Y."/>
        </authorList>
    </citation>
    <scope>IDENTIFICATION IN THE NUA4 COMPLEX</scope>
    <scope>IDENTIFICATION BY MASS SPECTROMETRY</scope>
</reference>
<reference key="12">
    <citation type="journal article" date="2001" name="J. Biol. Chem.">
        <title>Tip60 and HDAC7 interact with the endothelin receptor a and may be involved in downstream signaling.</title>
        <authorList>
            <person name="Lee H.-J."/>
            <person name="Chun M."/>
            <person name="Kandror K.V."/>
        </authorList>
    </citation>
    <scope>INTERACTION WITH EDNRA</scope>
    <scope>SUBCELLULAR LOCATION</scope>
</reference>
<reference key="13">
    <citation type="journal article" date="2002" name="EMBO J.">
        <title>Tip60 is targeted to proteasome-mediated degradation by Mdm2 and accumulates after UV irradiation.</title>
        <authorList>
            <person name="Legube G."/>
            <person name="Linares L.K."/>
            <person name="Lemercier C."/>
            <person name="Scheffner M."/>
            <person name="Khochbin S."/>
            <person name="Trouche D."/>
        </authorList>
    </citation>
    <scope>UBIQUITINATION</scope>
</reference>
<reference key="14">
    <citation type="journal article" date="2003" name="EMBO Rep.">
        <title>MYC recruits the TIP60 histone acetyltransferase complex to chromatin.</title>
        <authorList>
            <person name="Frank S.R."/>
            <person name="Parisi T."/>
            <person name="Taubert S."/>
            <person name="Fernandez P."/>
            <person name="Fuchs M."/>
            <person name="Chan H.M."/>
            <person name="Livingston D.M."/>
            <person name="Amati B."/>
        </authorList>
    </citation>
    <scope>ROLE IN MYC-DEPENDENT TRANSCRIPTION</scope>
    <scope>INTERACTION WITH MYC</scope>
</reference>
<reference key="15">
    <citation type="journal article" date="2003" name="J. Biol. Chem.">
        <title>Tip60 acetyltransferase activity is controlled by phosphorylation.</title>
        <authorList>
            <person name="Lemercier C."/>
            <person name="Legube G."/>
            <person name="Caron C."/>
            <person name="Louwagie M."/>
            <person name="Garin J."/>
            <person name="Trouche D."/>
            <person name="Khochbin S."/>
        </authorList>
    </citation>
    <scope>PHOSPHORYLATION AT SER-86 AND SER-90</scope>
    <scope>MUTAGENESIS OF SER-86; SER-90; LEU-254; LEU-257 AND GLY-380</scope>
    <scope>CATALYTIC ACTIVITY</scope>
</reference>
<reference key="16">
    <citation type="journal article" date="2003" name="J. Biol. Chem.">
        <title>Tip60 is a co-repressor for STAT3.</title>
        <authorList>
            <person name="Xiao H."/>
            <person name="Chung J."/>
            <person name="Kao H.-Y."/>
            <person name="Yang Y.-C."/>
        </authorList>
    </citation>
    <scope>SUBCELLULAR LOCATION</scope>
    <scope>INTERACTION WITH HDAC7</scope>
</reference>
<reference key="17">
    <citation type="journal article" date="2004" name="Curr. Opin. Genet. Dev.">
        <title>The highly conserved and multifunctional NuA4 HAT complex.</title>
        <authorList>
            <person name="Doyon Y."/>
            <person name="Cote J."/>
        </authorList>
    </citation>
    <scope>REVIEW ON NUA4 COMPLEX</scope>
</reference>
<reference key="18">
    <citation type="journal article" date="2004" name="J. Biol. Chem.">
        <title>Role of the histone acetyl transferase Tip60 in the p53 pathway.</title>
        <authorList>
            <person name="Legube G."/>
            <person name="Linares L.K."/>
            <person name="Tyteca S."/>
            <person name="Caron C."/>
            <person name="Scheffner M."/>
            <person name="Chevillard-Briet M."/>
            <person name="Trouche D."/>
        </authorList>
    </citation>
    <scope>ROLE IN TP53-DEPENDENT TRANSCRIPTION</scope>
</reference>
<reference key="19">
    <citation type="journal article" date="2004" name="J. Biol. Chem.">
        <title>von Hippel-Lindau partner Jade-1 is a transcriptional co-activator associated with histone acetyltransferase activity.</title>
        <authorList>
            <person name="Panchenko M.V."/>
            <person name="Zhou M.I."/>
            <person name="Cohen H.T."/>
        </authorList>
    </citation>
    <scope>INTERACTION WITH JADE1</scope>
</reference>
<reference key="20">
    <citation type="journal article" date="2004" name="Mol. Cell. Biol.">
        <title>Structural and functional conservation of the NuA4 histone acetyltransferase complex from yeast to humans.</title>
        <authorList>
            <person name="Doyon Y."/>
            <person name="Selleck W."/>
            <person name="Lane W.S."/>
            <person name="Tan S."/>
            <person name="Cote J."/>
        </authorList>
    </citation>
    <scope>FUNCTION</scope>
    <scope>IDENTIFICATION BY MASS SPECTROMETRY</scope>
    <scope>IDENTIFICATION IN THE NUA4 COMPLEX</scope>
</reference>
<reference key="21">
    <citation type="journal article" date="2004" name="Mol. Cell. Biol.">
        <title>E2F-dependent histone acetylation and recruitment of the Tip60 acetyltransferase complex to chromatin in late G1.</title>
        <authorList>
            <person name="Taubert S."/>
            <person name="Gorrini C."/>
            <person name="Frank S.R."/>
            <person name="Parisi T."/>
            <person name="Fuchs M."/>
            <person name="Chan H.M."/>
            <person name="Livingston D.M."/>
            <person name="Amati B."/>
        </authorList>
    </citation>
    <scope>ROLE IN E2F1-DEPENDENT TRANSCRIPTION</scope>
</reference>
<reference key="22">
    <citation type="journal article" date="2004" name="Nature">
        <title>A large-scale RNAi screen in human cells identifies new components of the p53 pathway.</title>
        <authorList>
            <person name="Berns K."/>
            <person name="Hijmans E.M."/>
            <person name="Mullenders J."/>
            <person name="Brummelkamp T.R."/>
            <person name="Velds A."/>
            <person name="Heimerikx M."/>
            <person name="Kerkhoven R.M."/>
            <person name="Madiredjo M."/>
            <person name="Nijkamp W."/>
            <person name="Weigelt B."/>
            <person name="Agami R."/>
            <person name="Ge W."/>
            <person name="Cavet G."/>
            <person name="Linsley P.S."/>
            <person name="Beijersbergen R.L."/>
            <person name="Bernards R."/>
        </authorList>
    </citation>
    <scope>ROLE IN TP53-DEPENDENT TRANSCRIPTION</scope>
</reference>
<reference key="23">
    <citation type="journal article" date="2005" name="EMBO J.">
        <title>HIV-1 Tat targets Tip60 to impair the apoptotic cell response to genotoxic stresses.</title>
        <authorList>
            <person name="Col E."/>
            <person name="Caron C."/>
            <person name="Chable-Bessia C."/>
            <person name="Legube G."/>
            <person name="Gazzeri S."/>
            <person name="Komatsu Y."/>
            <person name="Yoshida M."/>
            <person name="Benkirane M."/>
            <person name="Trouche D."/>
            <person name="Khochbin S."/>
        </authorList>
    </citation>
    <scope>INTERACTION WITH HIV-1 TAT (MICROBIAL INFECTION)</scope>
    <scope>UBIQUITINATION (MICROBIAL INFECTION)</scope>
</reference>
<reference key="24">
    <citation type="journal article" date="2005" name="Proc. Natl. Acad. Sci. U.S.A.">
        <title>A role for the Tip60 histone acetyltransferase in the acetylation and activation of ATM.</title>
        <authorList>
            <person name="Sun Y."/>
            <person name="Jiang X."/>
            <person name="Chen S."/>
            <person name="Fernandes N."/>
            <person name="Price B.D."/>
        </authorList>
    </citation>
    <scope>INTERACTION WITH ATM</scope>
    <scope>FUNCTION</scope>
</reference>
<reference key="25">
    <citation type="journal article" date="2006" name="J. Biol. Chem.">
        <title>The histidine triad protein Hint1 triggers apoptosis independent of its enzymatic activity.</title>
        <authorList>
            <person name="Weiske J."/>
            <person name="Huber O."/>
        </authorList>
    </citation>
    <scope>IDENTIFICATION IN A COMPLEX WITH HINT1</scope>
</reference>
<reference key="26">
    <citation type="journal article" date="2006" name="Mol. Cell">
        <title>ING tumor suppressor proteins are critical regulators of chromatin acetylation required for genome expression and perpetuation.</title>
        <authorList>
            <person name="Doyon Y."/>
            <person name="Cayrou C."/>
            <person name="Ullah M."/>
            <person name="Landry A.-J."/>
            <person name="Cote V."/>
            <person name="Selleck W."/>
            <person name="Lane W.S."/>
            <person name="Tan S."/>
            <person name="Yang X.-J."/>
            <person name="Cote J."/>
        </authorList>
    </citation>
    <scope>FUNCTION</scope>
    <scope>SUBCELLULAR LOCATION</scope>
</reference>
<reference key="27">
    <citation type="journal article" date="2006" name="Mol. Cell">
        <title>Acetylation of the p53 DNA-binding domain regulates apoptosis induction.</title>
        <authorList>
            <person name="Sykes S.M."/>
            <person name="Mellert H.S."/>
            <person name="Holbert M.A."/>
            <person name="Li K."/>
            <person name="Marmorstein R."/>
            <person name="Lane W.S."/>
            <person name="McMahon S.B."/>
        </authorList>
    </citation>
    <scope>FUNCTION</scope>
    <scope>CATALYTIC ACTIVITY</scope>
</reference>
<reference key="28">
    <citation type="journal article" date="2007" name="Mol. Cell. Biol.">
        <title>DNA damage-dependent acetylation and ubiquitination of H2AX enhances chromatin dynamics.</title>
        <authorList>
            <person name="Ikura T."/>
            <person name="Tashiro S."/>
            <person name="Kakino A."/>
            <person name="Shima H."/>
            <person name="Jacob N."/>
            <person name="Amunugama R."/>
            <person name="Yoder K."/>
            <person name="Izumi S."/>
            <person name="Kuraoka I."/>
            <person name="Tanaka K."/>
            <person name="Kimura H."/>
            <person name="Ikura M."/>
            <person name="Nishikubo S."/>
            <person name="Ito T."/>
            <person name="Muto A."/>
            <person name="Miyagawa K."/>
            <person name="Takeda S."/>
            <person name="Fishel R."/>
            <person name="Igarashi K."/>
            <person name="Kamiya K."/>
        </authorList>
    </citation>
    <scope>FUNCTION</scope>
</reference>
<reference key="29">
    <citation type="journal article" date="2007" name="Proc. Natl. Acad. Sci. U.S.A.">
        <title>FOXP3 interactions with histone acetyltransferase and class II histone deacetylases are required for repression.</title>
        <authorList>
            <person name="Li B."/>
            <person name="Samanta A."/>
            <person name="Song X."/>
            <person name="Iacono K.T."/>
            <person name="Bembas K."/>
            <person name="Tao R."/>
            <person name="Basu S."/>
            <person name="Riley J.L."/>
            <person name="Hancock W.W."/>
            <person name="Shen Y."/>
            <person name="Saouaf S.J."/>
            <person name="Greene M.I."/>
        </authorList>
    </citation>
    <scope>FUNCTION</scope>
    <scope>INTERACTION WITH FOXP3</scope>
    <scope>SUBCELLULAR LOCATION</scope>
</reference>
<reference key="30">
    <citation type="journal article" date="2008" name="Biochim. Biophys. Acta">
        <title>The orphan nuclear receptor Rev-erbbeta recruits Tip60 and HDAC1 to regulate apolipoprotein CIII promoter.</title>
        <authorList>
            <person name="Wang J."/>
            <person name="Liu N."/>
            <person name="Liu Z."/>
            <person name="Li Y."/>
            <person name="Song C."/>
            <person name="Yuan H."/>
            <person name="Li Y.Y."/>
            <person name="Zhao X."/>
            <person name="Lu H."/>
        </authorList>
    </citation>
    <scope>FUNCTION</scope>
    <scope>INTERACTION WITH NR1D2</scope>
    <scope>SUBCELLULAR LOCATION</scope>
</reference>
<reference key="31">
    <citation type="journal article" date="2008" name="Cancer Res.">
        <title>TRIM68 regulates ligand-dependent transcription of androgen receptor in prostate cancer cells.</title>
        <authorList>
            <person name="Miyajima N."/>
            <person name="Maruyama S."/>
            <person name="Bohgaki M."/>
            <person name="Kano S."/>
            <person name="Shigemura M."/>
            <person name="Shinohara N."/>
            <person name="Nonomura K."/>
            <person name="Hatakeyama S."/>
        </authorList>
    </citation>
    <scope>INTERACTION WITH TRIM68</scope>
</reference>
<reference key="32">
    <citation type="journal article" date="2008" name="J. Biol. Chem.">
        <title>Regulation of TIP60 by ATF2 modulates ATM activation.</title>
        <authorList>
            <person name="Bhoumik A."/>
            <person name="Singha N."/>
            <person name="O'Connell M.J."/>
            <person name="Ronai Z.A."/>
        </authorList>
    </citation>
    <scope>INTERACTION WITH ATF2 AND CUL3</scope>
    <scope>PROTEASOMAL DEGRADATION</scope>
</reference>
<reference key="33">
    <citation type="journal article" date="2008" name="Oncogene">
        <title>Functional characterization of TIP60 sumoylation in UV-irradiated DNA damage response.</title>
        <authorList>
            <person name="Cheng Z."/>
            <person name="Ke Y."/>
            <person name="Ding X."/>
            <person name="Wang F."/>
            <person name="Wang H."/>
            <person name="Wang W."/>
            <person name="Ahmed K."/>
            <person name="Liu Z."/>
            <person name="Xu Y."/>
            <person name="Aikhionbare F."/>
            <person name="Yan H."/>
            <person name="Liu J."/>
            <person name="Xue Y."/>
            <person name="Yu J."/>
            <person name="Powell M."/>
            <person name="Liang S."/>
            <person name="Wu Q."/>
            <person name="Reddy S.E."/>
            <person name="Hu R."/>
            <person name="Huang H."/>
            <person name="Jin C."/>
            <person name="Yao X."/>
        </authorList>
    </citation>
    <scope>SUMOYLATION AT LYS-430 AND LYS-451</scope>
    <scope>MUTAGENESIS OF LYS-430 AND LYS-451</scope>
    <scope>SUBCELLULAR LOCATION</scope>
    <scope>IDENTIFICATION BY MASS SPECTROMETRY</scope>
    <scope>IDENTIFICATION OF KAT5-UBE2I-SENP6 COMPLEX</scope>
</reference>
<reference key="34">
    <citation type="journal article" date="2008" name="Proc. Natl. Acad. Sci. U.S.A.">
        <title>A quantitative atlas of mitotic phosphorylation.</title>
        <authorList>
            <person name="Dephoure N."/>
            <person name="Zhou C."/>
            <person name="Villen J."/>
            <person name="Beausoleil S.A."/>
            <person name="Bakalarski C.E."/>
            <person name="Elledge S.J."/>
            <person name="Gygi S.P."/>
        </authorList>
    </citation>
    <scope>IDENTIFICATION BY MASS SPECTROMETRY [LARGE SCALE ANALYSIS]</scope>
    <source>
        <tissue>Cervix carcinoma</tissue>
    </source>
</reference>
<reference key="35">
    <citation type="journal article" date="2009" name="Biochim. Biophys. Acta">
        <title>TRIM24 mediates ligand-dependent activation of androgen receptor and is repressed by a bromodomain-containing protein, BRD7, in prostate cancer cells.</title>
        <authorList>
            <person name="Kikuchi M."/>
            <person name="Okumura F."/>
            <person name="Tsukiyama T."/>
            <person name="Watanabe M."/>
            <person name="Miyajima N."/>
            <person name="Tanaka J."/>
            <person name="Imamura M."/>
            <person name="Hatakeyama S."/>
        </authorList>
    </citation>
    <scope>FUNCTION</scope>
    <scope>INTERACTION WITH TRIM24</scope>
</reference>
<reference key="36">
    <citation type="journal article" date="2009" name="Nat. Cell Biol.">
        <title>Histone H3 methylation links DNA damage detection to activation of the tumour suppressor Tip60.</title>
        <authorList>
            <person name="Sun Y."/>
            <person name="Jiang X."/>
            <person name="Xu Y."/>
            <person name="Ayrapetov M.K."/>
            <person name="Moreau L.A."/>
            <person name="Whetstine J.R."/>
            <person name="Price B.D."/>
        </authorList>
    </citation>
    <scope>FUNCTION</scope>
</reference>
<reference key="37">
    <citation type="journal article" date="2009" name="Sci. Signal.">
        <title>Quantitative phosphoproteomic analysis of T cell receptor signaling reveals system-wide modulation of protein-protein interactions.</title>
        <authorList>
            <person name="Mayya V."/>
            <person name="Lundgren D.H."/>
            <person name="Hwang S.-I."/>
            <person name="Rezaul K."/>
            <person name="Wu L."/>
            <person name="Eng J.K."/>
            <person name="Rodionov V."/>
            <person name="Han D.K."/>
        </authorList>
    </citation>
    <scope>IDENTIFICATION BY MASS SPECTROMETRY [LARGE SCALE ANALYSIS]</scope>
    <source>
        <tissue>Leukemic T-cell</tissue>
    </source>
</reference>
<reference key="38">
    <citation type="journal article" date="2009" name="Science">
        <title>Lysine acetylation targets protein complexes and co-regulates major cellular functions.</title>
        <authorList>
            <person name="Choudhary C."/>
            <person name="Kumar C."/>
            <person name="Gnad F."/>
            <person name="Nielsen M.L."/>
            <person name="Rehman M."/>
            <person name="Walther T.C."/>
            <person name="Olsen J.V."/>
            <person name="Mann M."/>
        </authorList>
    </citation>
    <scope>ACETYLATION [LARGE SCALE ANALYSIS] AT LYS-52</scope>
    <scope>IDENTIFICATION BY MASS SPECTROMETRY [LARGE SCALE ANALYSIS]</scope>
</reference>
<reference key="39">
    <citation type="journal article" date="2010" name="J. Biol. Chem.">
        <title>SIRT1 regulates autoacetylation and histone acetyltransferase activity of TIP60.</title>
        <authorList>
            <person name="Wang J."/>
            <person name="Chen J."/>
        </authorList>
    </citation>
    <scope>ACETYLATION</scope>
    <scope>ACTIVITY REGULATION</scope>
</reference>
<reference key="40">
    <citation type="journal article" date="2011" name="PLoS ONE">
        <title>GPR50 interacts with TIP60 to modulate glucocorticoid receptor signalling.</title>
        <authorList>
            <person name="Li J."/>
            <person name="Hand L.E."/>
            <person name="Meng Q.J."/>
            <person name="Loudon A.S."/>
            <person name="Bechtold D.A."/>
        </authorList>
    </citation>
    <scope>INTERACTION WITH GPR50</scope>
</reference>
<reference key="41">
    <citation type="journal article" date="2012" name="Science">
        <title>GSK3-TIP60-ULK1 signaling pathway links growth factor deprivation to autophagy.</title>
        <authorList>
            <person name="Lin S.Y."/>
            <person name="Li T.Y."/>
            <person name="Liu Q."/>
            <person name="Zhang C."/>
            <person name="Li X."/>
            <person name="Chen Y."/>
            <person name="Zhang S.M."/>
            <person name="Lian G."/>
            <person name="Liu Q."/>
            <person name="Ruan K."/>
            <person name="Wang Z."/>
            <person name="Zhang C.S."/>
            <person name="Chien K.Y."/>
            <person name="Wu J."/>
            <person name="Li Q."/>
            <person name="Han J."/>
            <person name="Lin S.C."/>
        </authorList>
    </citation>
    <scope>PHOSPHORYLATION AT SER-86 AND SER-90</scope>
    <scope>MUTAGENESIS OF SER-86 AND SER-90</scope>
</reference>
<reference key="42">
    <citation type="journal article" date="2013" name="J. Proteome Res.">
        <title>Toward a comprehensive characterization of a human cancer cell phosphoproteome.</title>
        <authorList>
            <person name="Zhou H."/>
            <person name="Di Palma S."/>
            <person name="Preisinger C."/>
            <person name="Peng M."/>
            <person name="Polat A.N."/>
            <person name="Heck A.J."/>
            <person name="Mohammed S."/>
        </authorList>
    </citation>
    <scope>PHOSPHORYLATION [LARGE SCALE ANALYSIS] AT SER-86; SER-90 AND SER-199</scope>
    <scope>IDENTIFICATION BY MASS SPECTROMETRY [LARGE SCALE ANALYSIS]</scope>
    <source>
        <tissue>Cervix carcinoma</tissue>
        <tissue>Erythroleukemia</tissue>
    </source>
</reference>
<reference key="43">
    <citation type="journal article" date="2014" name="Cell Rep.">
        <title>Dynamic interactions between TIP60 and p300 regulate FOXP3 function through a structural switch defined by a single lysine on TIP60.</title>
        <authorList>
            <person name="Xiao Y."/>
            <person name="Nagai Y."/>
            <person name="Deng G."/>
            <person name="Ohtani T."/>
            <person name="Zhu Z."/>
            <person name="Zhou Z."/>
            <person name="Zhang H."/>
            <person name="Ji M.Q."/>
            <person name="Lough J.W."/>
            <person name="Samanta A."/>
            <person name="Hancock W.W."/>
            <person name="Greene M.I."/>
        </authorList>
    </citation>
    <scope>FUNCTION</scope>
    <scope>CATALYTIC ACTIVITY</scope>
    <scope>INTERACTION WITH EP300 AND FOXP3</scope>
    <scope>UBIQUITINATION</scope>
    <scope>ACETYLATION AT LYS-327</scope>
    <scope>MUTAGENESIS OF LYS-327 AND 377-GLN--GLY-380</scope>
</reference>
<reference key="44">
    <citation type="journal article" date="2014" name="J. Biol. Chem.">
        <title>Regulation of histone acetyltransferase TIP60 function by histone deacetylase 3.</title>
        <authorList>
            <person name="Yi J."/>
            <person name="Huang X."/>
            <person name="Yang Y."/>
            <person name="Zhu W.G."/>
            <person name="Gu W."/>
            <person name="Luo J."/>
        </authorList>
    </citation>
    <scope>ACETYLATION AT LYS-104; LYS-120; LYS-148; LYS-150; LYS-187 AND LYS-189</scope>
    <scope>UBIQUITINATION</scope>
    <scope>MUTAGENESIS OF LYS-104; LYS-120; LYS-148; LYS-150; LYS-187 AND LYS-189</scope>
</reference>
<reference key="45">
    <citation type="journal article" date="2014" name="Nucleic Acids Res.">
        <title>Two ZNF509 (ZBTB49) isoforms induce cell-cycle arrest by activating transcription of p21/CDKN1A and RB upon exposure to genotoxic stress.</title>
        <authorList>
            <person name="Jeon B.N."/>
            <person name="Kim M.K."/>
            <person name="Yoon J.H."/>
            <person name="Kim M.Y."/>
            <person name="An H."/>
            <person name="Noh H.J."/>
            <person name="Choi W.I."/>
            <person name="Koh D.I."/>
            <person name="Hur M.W."/>
        </authorList>
    </citation>
    <scope>INTERACTION WITH ZBTB49</scope>
</reference>
<reference key="46">
    <citation type="journal article" date="2014" name="Nature">
        <title>ANP32E is a histone chaperone that removes H2A.Z from chromatin.</title>
        <authorList>
            <person name="Obri A."/>
            <person name="Ouararhni K."/>
            <person name="Papin C."/>
            <person name="Diebold M.L."/>
            <person name="Padmanabhan K."/>
            <person name="Marek M."/>
            <person name="Stoll I."/>
            <person name="Roy L."/>
            <person name="Reilly P.T."/>
            <person name="Mak T.W."/>
            <person name="Dimitrov S."/>
            <person name="Romier C."/>
            <person name="Hamiche A."/>
        </authorList>
    </citation>
    <scope>FUNCTION</scope>
    <scope>IDENTIFICATION IN THE SWR1-LIKE COMPLEX</scope>
</reference>
<reference key="47">
    <citation type="journal article" date="2015" name="Biosci. Biotechnol. Biochem.">
        <title>The chromodomain-containing histone acetyltransferase TIP60 acts as a code reader, recognizing the epigenetic codes for initiating transcription.</title>
        <authorList>
            <person name="Kim C.H."/>
            <person name="Kim J.W."/>
            <person name="Jang S.M."/>
            <person name="An J.H."/>
            <person name="Seo S.B."/>
            <person name="Choi K.H."/>
        </authorList>
    </citation>
    <scope>SUBCELLULAR LOCATION</scope>
</reference>
<reference key="48">
    <citation type="journal article" date="2015" name="Cell Death Dis.">
        <title>KAT5-mediated SOX4 acetylation orchestrates chromatin remodeling during myoblast differentiation.</title>
        <authorList>
            <person name="Jang S.M."/>
            <person name="Kim J.W."/>
            <person name="Kim C.H."/>
            <person name="An J.H."/>
            <person name="Johnson A."/>
            <person name="Song P.I."/>
            <person name="Rhee S."/>
            <person name="Choi K.H."/>
        </authorList>
    </citation>
    <scope>FUNCTION</scope>
    <scope>CATALYTIC ACTIVITY</scope>
    <scope>ACETYLATION</scope>
    <scope>MUTAGENESIS OF 377-GLN--GLY-380</scope>
</reference>
<reference key="49">
    <citation type="journal article" date="2015" name="Mol. Cell. Biol.">
        <title>Acetylation of histone H2AX at Lys 5 by the TIP60 histone acetyltransferase complex is essential for the dynamic binding of NBS1 to damaged chromatin.</title>
        <authorList>
            <person name="Ikura M."/>
            <person name="Furuya K."/>
            <person name="Matsuda S."/>
            <person name="Matsuda R."/>
            <person name="Shima H."/>
            <person name="Adachi J."/>
            <person name="Matsuda T."/>
            <person name="Shiraki T."/>
            <person name="Ikura T."/>
        </authorList>
    </citation>
    <scope>FUNCTION</scope>
    <scope>CATALYTIC ACTIVITY</scope>
</reference>
<reference key="50">
    <citation type="journal article" date="2015" name="Nat. Commun.">
        <title>The stress-responsive gene ATF3 regulates the histone acetyltransferase Tip60.</title>
        <authorList>
            <person name="Cui H."/>
            <person name="Guo M."/>
            <person name="Xu D."/>
            <person name="Ding Z.C."/>
            <person name="Zhou G."/>
            <person name="Ding H.F."/>
            <person name="Zhang J."/>
            <person name="Tang Y."/>
            <person name="Yan C."/>
        </authorList>
    </citation>
    <scope>FUNCTION</scope>
    <scope>CATALYTIC ACTIVITY</scope>
    <scope>ACTIVITY REGULATION</scope>
    <scope>INTERACTION WITH ATF3</scope>
    <scope>ACETYLATION</scope>
    <scope>UBIQUITINATION</scope>
</reference>
<reference key="51">
    <citation type="journal article" date="2016" name="Biochem. J.">
        <title>The direct interaction of NME3 with Tip60 in DNA repair.</title>
        <authorList>
            <person name="Tsao N."/>
            <person name="Yang Y.C."/>
            <person name="Deng Y.J."/>
            <person name="Chang Z.F."/>
        </authorList>
    </citation>
    <scope>INTERACTION WITH NME3</scope>
</reference>
<reference key="52">
    <citation type="journal article" date="2016" name="Mol. Cell">
        <title>The TIP60 complex regulates bivalent chromatin recognition by 53BP1 through direct H4K20me binding and H2AK15 acetylation.</title>
        <authorList>
            <person name="Jacquet K."/>
            <person name="Fradet-Turcotte A."/>
            <person name="Avvakumov N."/>
            <person name="Lambert J.P."/>
            <person name="Roques C."/>
            <person name="Pandita R.K."/>
            <person name="Paquet E."/>
            <person name="Herst P."/>
            <person name="Gingras A.C."/>
            <person name="Pandita T.K."/>
            <person name="Legube G."/>
            <person name="Doyon Y."/>
            <person name="Durocher D."/>
            <person name="Cote J."/>
        </authorList>
    </citation>
    <scope>FUNCTION</scope>
    <scope>CATALYTIC ACTIVITY</scope>
</reference>
<reference key="53">
    <citation type="journal article" date="2016" name="Nat. Chem. Biol.">
        <title>Acetylation of Aurora B by TIP60 ensures accurate chromosomal segregation.</title>
        <authorList>
            <person name="Mo F."/>
            <person name="Zhuang X."/>
            <person name="Liu X."/>
            <person name="Yao P.Y."/>
            <person name="Qin B."/>
            <person name="Su Z."/>
            <person name="Zang J."/>
            <person name="Wang Z."/>
            <person name="Zhang J."/>
            <person name="Dou Z."/>
            <person name="Tian C."/>
            <person name="Teng M."/>
            <person name="Niu L."/>
            <person name="Hill D.L."/>
            <person name="Fang G."/>
            <person name="Ding X."/>
            <person name="Fu C."/>
            <person name="Yao X."/>
        </authorList>
    </citation>
    <scope>FUNCTION</scope>
    <scope>CATALYTIC ACTIVITY</scope>
    <scope>SUBCELLULAR LOCATION</scope>
    <scope>PHOSPHORYLATION AT SER-90</scope>
    <scope>MUTAGENESIS OF SER-90</scope>
</reference>
<reference key="54">
    <citation type="journal article" date="2018" name="Cell Res.">
        <title>Landscape of the regulatory elements for lysine 2-hydroxyisobutyrylation pathway.</title>
        <authorList>
            <person name="Huang H."/>
            <person name="Luo Z."/>
            <person name="Qi S."/>
            <person name="Huang J."/>
            <person name="Xu P."/>
            <person name="Wang X."/>
            <person name="Gao L."/>
            <person name="Li F."/>
            <person name="Wang J."/>
            <person name="Zhao W."/>
            <person name="Gu W."/>
            <person name="Chen Z."/>
            <person name="Dai L."/>
            <person name="Dai J."/>
            <person name="Zhao Y."/>
        </authorList>
    </citation>
    <scope>FUNCTION</scope>
    <scope>CATALYTIC ACTIVITY</scope>
</reference>
<reference key="55">
    <citation type="journal article" date="2018" name="EMBO Rep.">
        <title>CDK9-mediated phosphorylation controls the interaction of TIP60 with the transcriptional machinery.</title>
        <authorList>
            <person name="Brauns-Schubert P."/>
            <person name="Schubert F."/>
            <person name="Wissler M."/>
            <person name="Weiss M."/>
            <person name="Schlicher L."/>
            <person name="Bessler S."/>
            <person name="Safavi M."/>
            <person name="Miething C."/>
            <person name="Borner C."/>
            <person name="Brummer T."/>
            <person name="Maurer U."/>
        </authorList>
    </citation>
    <scope>FUNCTION</scope>
    <scope>SUBCELLULAR LOCATION</scope>
    <scope>PHOSPHORYLATION AT SER-86 AND SER-90</scope>
    <scope>MUTAGENESIS OF SER-90</scope>
</reference>
<reference key="56">
    <citation type="journal article" date="2018" name="Exp. Cell Res.">
        <title>Acetylation of TIP60 at K104 is essential for metabolic stress-induced apoptosis in cells of hepatocellular cancer.</title>
        <authorList>
            <person name="Fang X."/>
            <person name="Lu G."/>
            <person name="Ha K."/>
            <person name="Lin H."/>
            <person name="Du Y."/>
            <person name="Zuo Q."/>
            <person name="Fu Y."/>
            <person name="Zou C."/>
            <person name="Zhang P."/>
        </authorList>
    </citation>
    <scope>FUNCTION</scope>
    <scope>CATALYTIC ACTIVITY</scope>
    <scope>IDENTIFICATION IN NUA4 COMPLEX</scope>
    <scope>ACETYLATION AT LYS-104</scope>
    <scope>MUTAGENESIS OF LYS-104</scope>
</reference>
<reference key="57">
    <citation type="journal article" date="2018" name="J. Mol. Cell Biol.">
        <title>Mitosis-specific acetylation tunes Ran effector binding for chromosome segregation.</title>
        <authorList>
            <person name="Bao X."/>
            <person name="Liu H."/>
            <person name="Liu X."/>
            <person name="Ruan K."/>
            <person name="Zhang Y."/>
            <person name="Zhang Z."/>
            <person name="Hu Q."/>
            <person name="Liu Y."/>
            <person name="Akram S."/>
            <person name="Zhang J."/>
            <person name="Gong Q."/>
            <person name="Wang W."/>
            <person name="Yuan X."/>
            <person name="Li J."/>
            <person name="Zhao L."/>
            <person name="Dou Z."/>
            <person name="Tian R."/>
            <person name="Yao X."/>
            <person name="Wu J."/>
            <person name="Shi Y."/>
        </authorList>
    </citation>
    <scope>FUNCTION</scope>
    <scope>CATALYTIC ACTIVITY</scope>
</reference>
<reference key="58">
    <citation type="journal article" date="2018" name="Nat. Commun.">
        <title>Tip60-mediated lipin 1 acetylation and ER translocation determine triacylglycerol synthesis rate.</title>
        <authorList>
            <person name="Li T.Y."/>
            <person name="Song L."/>
            <person name="Sun Y."/>
            <person name="Li J."/>
            <person name="Yi C."/>
            <person name="Lam S.M."/>
            <person name="Xu D."/>
            <person name="Zhou L."/>
            <person name="Li X."/>
            <person name="Yang Y."/>
            <person name="Zhang C.S."/>
            <person name="Xie C."/>
            <person name="Huang X."/>
            <person name="Shui G."/>
            <person name="Lin S.Y."/>
            <person name="Reue K."/>
            <person name="Lin S.C."/>
        </authorList>
    </citation>
    <scope>FUNCTION</scope>
    <scope>CATALYTIC ACTIVITY</scope>
</reference>
<reference key="59">
    <citation type="journal article" date="2019" name="J. Biol. Chem.">
        <title>Dynamic acetylation of the kinetochore-associated protein HEC1 ensures accurate microtubule-kinetochore attachment.</title>
        <authorList>
            <person name="Zhao G."/>
            <person name="Cheng Y."/>
            <person name="Gui P."/>
            <person name="Cui M."/>
            <person name="Liu W."/>
            <person name="Wang W."/>
            <person name="Wang X."/>
            <person name="Ali M."/>
            <person name="Dou Z."/>
            <person name="Niu L."/>
            <person name="Liu H."/>
            <person name="Anderson L."/>
            <person name="Ruan K."/>
            <person name="Hong J."/>
            <person name="Yao X."/>
        </authorList>
    </citation>
    <scope>FUNCTION</scope>
    <scope>CATALYTIC ACTIVITY</scope>
</reference>
<reference key="60">
    <citation type="journal article" date="2019" name="Mol. Cell">
        <title>Pacer is a mediator of mTORC1 and GSK3-TIP60 signaling in regulation of autophagosome maturation and lipid metabolism.</title>
        <authorList>
            <person name="Cheng X."/>
            <person name="Ma X."/>
            <person name="Zhu Q."/>
            <person name="Song D."/>
            <person name="Ding X."/>
            <person name="Li L."/>
            <person name="Jiang X."/>
            <person name="Wang X."/>
            <person name="Tian R."/>
            <person name="Su H."/>
            <person name="Shen Z."/>
            <person name="Chen S."/>
            <person name="Liu T."/>
            <person name="Gong W."/>
            <person name="Liu W."/>
            <person name="Sun Q."/>
        </authorList>
    </citation>
    <scope>FUNCTION</scope>
    <scope>CATALYTIC ACTIVITY</scope>
    <scope>ACTIVITY REGULATION</scope>
    <scope>PHOSPHORYLATION AT SER-86</scope>
    <scope>MUTAGENESIS OF SER-86</scope>
</reference>
<reference key="61">
    <citation type="journal article" date="2019" name="Nat. Commun.">
        <title>Requirement for p62 acetylation in the aggregation of ubiquitylated proteins under nutrient stress.</title>
        <authorList>
            <person name="You Z."/>
            <person name="Jiang W.X."/>
            <person name="Qin L.Y."/>
            <person name="Gong Z."/>
            <person name="Wan W."/>
            <person name="Li J."/>
            <person name="Wang Y."/>
            <person name="Zhang H."/>
            <person name="Peng C."/>
            <person name="Zhou T."/>
            <person name="Tang C."/>
            <person name="Liu W."/>
        </authorList>
    </citation>
    <scope>FUNCTION</scope>
    <scope>CATALYTIC ACTIVITY</scope>
</reference>
<reference key="62">
    <citation type="journal article" date="2020" name="Cancers">
        <title>VRK1 phosphorylates Tip60/KAT5 and is required for H4K16 acetylation in response to DNA Damage.</title>
        <authorList>
            <person name="Garcia-Gonzalez R."/>
            <person name="Morejon-Garcia P."/>
            <person name="Campillo-Marcos I."/>
            <person name="Salzano M."/>
            <person name="Lazo P.A."/>
        </authorList>
    </citation>
    <scope>FUNCTION</scope>
    <scope>CATALYTIC ACTIVITY</scope>
    <scope>SUBCELLULAR LOCATION</scope>
    <scope>PHOSPHORYLATION</scope>
</reference>
<reference key="63">
    <citation type="journal article" date="2020" name="Nat. Commun.">
        <title>Acetylation of XPF by TIP60 facilitates XPF-ERCC1 complex assembly and activation.</title>
        <authorList>
            <person name="Wang J."/>
            <person name="He H."/>
            <person name="Chen B."/>
            <person name="Jiang G."/>
            <person name="Cao L."/>
            <person name="Jiang H."/>
            <person name="Zhang G."/>
            <person name="Chen J."/>
            <person name="Huang J."/>
            <person name="Yang B."/>
            <person name="Zhou C."/>
            <person name="Liu T."/>
        </authorList>
    </citation>
    <scope>FUNCTION</scope>
    <scope>CATALYTIC ACTIVITY</scope>
    <scope>MUTAGENESIS OF 377-GLN--GLY-380</scope>
</reference>
<reference key="64">
    <citation type="journal article" date="2020" name="Proc. Natl. Acad. Sci. U.S.A.">
        <title>KAT5 acetylates cGAS to promote innate immune response to DNA virus.</title>
        <authorList>
            <person name="Song Z.M."/>
            <person name="Lin H."/>
            <person name="Yi X.M."/>
            <person name="Guo W."/>
            <person name="Hu M.M."/>
            <person name="Shu H.B."/>
        </authorList>
    </citation>
    <scope>FUNCTION</scope>
    <scope>CATALYTIC ACTIVITY</scope>
    <scope>MUTAGENESIS OF 377-GLN--GLY-380</scope>
</reference>
<reference key="65">
    <citation type="journal article" date="2020" name="Sci. Adv.">
        <title>TIP60 K430 SUMOylation attenuates its interaction with DNA-PKcs in S-phase cells: Facilitating homologous recombination and emerging target for cancer therapy.</title>
        <authorList>
            <person name="Gao S.S."/>
            <person name="Guan H."/>
            <person name="Yan S."/>
            <person name="Hu S."/>
            <person name="Song M."/>
            <person name="Guo Z.P."/>
            <person name="Xie D.F."/>
            <person name="Liu Y."/>
            <person name="Liu X."/>
            <person name="Zhang S."/>
            <person name="Zhou P.K."/>
        </authorList>
    </citation>
    <scope>FUNCTION</scope>
    <scope>INTERACTION WITH PRKDC</scope>
    <scope>SUMOYLATION AT LYS-430</scope>
    <scope>MUTAGENESIS OF LYS-430</scope>
</reference>
<reference key="66">
    <citation type="journal article" date="2021" name="Biol. Chem.">
        <title>Lysine acetyltransferase Tip60 acetylates the APP adaptor Fe65 to increase its transcriptional activity.</title>
        <authorList>
            <person name="Probst S."/>
            <person name="Riese F."/>
            <person name="Kaegi L."/>
            <person name="Krueger M."/>
            <person name="Russi N."/>
            <person name="Nitsch R.M."/>
            <person name="Konietzko U."/>
        </authorList>
    </citation>
    <scope>FUNCTION</scope>
    <scope>CATALYTIC ACTIVITY</scope>
    <scope>SUBCELLULAR LOCATION</scope>
    <scope>ACETYLATION</scope>
    <scope>INTERACTION WITH APP AND APBB1</scope>
    <scope>MUTAGENESIS OF 377-GLN--GLY-380</scope>
</reference>
<reference key="67">
    <citation type="journal article" date="2021" name="Mol. Cell">
        <title>Choline kinase alpha 2 acts as a protein kinase to promote lipolysis of lipid droplets.</title>
        <authorList>
            <person name="Liu R."/>
            <person name="Lee J.H."/>
            <person name="Li J."/>
            <person name="Yu R."/>
            <person name="Tan L."/>
            <person name="Xia Y."/>
            <person name="Zheng Y."/>
            <person name="Bian X.L."/>
            <person name="Lorenzi P.L."/>
            <person name="Chen Q."/>
            <person name="Lu Z."/>
        </authorList>
    </citation>
    <scope>FUNCTION</scope>
    <scope>CATALYTIC ACTIVITY</scope>
</reference>
<reference key="68">
    <citation type="journal article" date="2021" name="Nat. Chem. Biol.">
        <title>Dynamic crotonylation of EB1 by TIP60 ensures accurate spindle positioning in mitosis.</title>
        <authorList>
            <person name="Song X."/>
            <person name="Yang F."/>
            <person name="Liu X."/>
            <person name="Xia P."/>
            <person name="Yin W."/>
            <person name="Wang Z."/>
            <person name="Wang Y."/>
            <person name="Yuan X."/>
            <person name="Dou Z."/>
            <person name="Jiang K."/>
            <person name="Ma M."/>
            <person name="Hu B."/>
            <person name="Zhang R."/>
            <person name="Xu C."/>
            <person name="Zhang Z."/>
            <person name="Ruan K."/>
            <person name="Tian R."/>
            <person name="Li L."/>
            <person name="Liu T."/>
            <person name="Hill D.L."/>
            <person name="Zang J."/>
            <person name="Liu X."/>
            <person name="Li J."/>
            <person name="Cheng J."/>
            <person name="Yao X."/>
        </authorList>
    </citation>
    <scope>FUNCTION</scope>
    <scope>CATALYTIC ACTIVITY</scope>
    <scope>SUBCELLULAR LOCATION</scope>
</reference>
<reference key="69">
    <citation type="journal article" date="2023" name="Cell Host Microbe">
        <title>Acetylation of the NS3 helicase by KAT5gamma is essential for flavivirus replication.</title>
        <authorList>
            <person name="Serman T."/>
            <person name="Chiang C."/>
            <person name="Liu G."/>
            <person name="Sayyad Z."/>
            <person name="Pandey S."/>
            <person name="Volcic M."/>
            <person name="Lee H."/>
            <person name="Muppala S."/>
            <person name="Acharya D."/>
            <person name="Goins C."/>
            <person name="Stauffer S.R."/>
            <person name="Sparrer K.M.J."/>
            <person name="Gack M.U."/>
        </authorList>
    </citation>
    <scope>FUNCTION (MICROBIAL INFECTION)</scope>
    <scope>CATALYTIC ACTIVITY</scope>
    <scope>SUBCELLULAR LOCATION (MICROBIAL INFECTION)</scope>
</reference>
<reference key="70">
    <citation type="journal article" date="2024" name="Nature">
        <title>NBS1 lactylation is required for efficient DNA repair and chemotherapy resistance.</title>
        <authorList>
            <person name="Chen H."/>
            <person name="Li Y."/>
            <person name="Li H."/>
            <person name="Chen X."/>
            <person name="Fu H."/>
            <person name="Mao D."/>
            <person name="Chen W."/>
            <person name="Lan L."/>
            <person name="Wang C."/>
            <person name="Hu K."/>
            <person name="Li J."/>
            <person name="Zhu C."/>
            <person name="Evans I."/>
            <person name="Cheung E."/>
            <person name="Lu D."/>
            <person name="He Y."/>
            <person name="Behrens A."/>
            <person name="Yin D."/>
            <person name="Zhang C."/>
        </authorList>
    </citation>
    <scope>FUNCTION</scope>
    <scope>CATALYTIC ACTIVITY</scope>
</reference>
<reference key="71">
    <citation type="journal article" date="2020" name="Am. J. Hum. Genet.">
        <title>De Novo KAT5 Variants Cause a Syndrome with Recognizable Facial Dysmorphisms, Cerebellar Atrophy, Sleep Disturbance, and Epilepsy.</title>
        <authorList>
            <person name="Humbert J."/>
            <person name="Salian S."/>
            <person name="Makrythanasis P."/>
            <person name="Lemire G."/>
            <person name="Rousseau J."/>
            <person name="Ehresmann S."/>
            <person name="Garcia T."/>
            <person name="Alasiri R."/>
            <person name="Bottani A."/>
            <person name="Hanquinet S."/>
            <person name="Beaver E."/>
            <person name="Heeley J."/>
            <person name="Smith A.C.M."/>
            <person name="Berger S.I."/>
            <person name="Antonarakis S.E."/>
            <person name="Yang X.J."/>
            <person name="Cote J."/>
            <person name="Campeau P.M."/>
        </authorList>
    </citation>
    <scope>INVOLVEMENT IN NEDFASB</scope>
    <scope>VARIANTS NEDFASB HIS-53; SER-369 AND ALA-413</scope>
    <scope>CHARACTERIZATION OF VARIANTS NEDFASB HIS-53; SER-369 AND ALA-413</scope>
    <scope>FUNCTION</scope>
    <scope>CATALYTIC ACTIVITY</scope>
</reference>
<reference key="72">
    <citation type="submission" date="2009-02" db="PDB data bank">
        <title>The crystal structure of acetyltransferase domain of human HIV-1 TAT interacting protein in complex with acetylcoenzyme A.</title>
        <authorList>
            <consortium name="Structural genomics consortium (SGC)"/>
        </authorList>
    </citation>
    <scope>X-RAY CRYSTALLOGRAPHY (2.3 ANGSTROMS) OF 227-506 IN COMPLEX WITH ACETYL-COA AND ZINC IONS</scope>
    <scope>ACETYLATION AT LYS-327</scope>
</reference>
<reference key="73">
    <citation type="submission" date="2009-02" db="PDB data bank">
        <title>Solution structure of RUH-073, a pseudo chromo domain from human cDNA.</title>
        <authorList>
            <consortium name="RIKEN structural genomics initiative (RSGI)"/>
        </authorList>
    </citation>
    <scope>STRUCTURE BY NMR OF 5-78</scope>
</reference>
<reference evidence="81" key="74">
    <citation type="journal article" date="2018" name="FEBS Lett.">
        <title>Structural and histone binding studies of the chromo barrel domain of TIP60.</title>
        <authorList>
            <person name="Zhang Y."/>
            <person name="Lei M."/>
            <person name="Yang X."/>
            <person name="Feng Y."/>
            <person name="Yang Y."/>
            <person name="Loppnau P."/>
            <person name="Li Y."/>
            <person name="Yang Y."/>
            <person name="Min J."/>
            <person name="Liu Y."/>
        </authorList>
    </citation>
    <scope>X-RAY CRYSTALLOGRAPHY (2.80 ANGSTROMS) OF 1-80</scope>
</reference>